<protein>
    <recommendedName>
        <fullName evidence="23">14-3-3 protein sigma</fullName>
    </recommendedName>
    <alternativeName>
        <fullName evidence="19">Epithelial cell marker protein 1</fullName>
    </alternativeName>
    <alternativeName>
        <fullName evidence="21 22">Stratifin</fullName>
    </alternativeName>
</protein>
<reference key="1">
    <citation type="journal article" date="1992" name="Cell Growth Differ.">
        <title>Complementary DNA cloning of a novel epithelial cell marker protein, HME1, that may be down-regulated in neoplastic mammary cells.</title>
        <authorList>
            <person name="Prasad G.L."/>
            <person name="Valverius E.M."/>
            <person name="McDuffie E."/>
            <person name="Cooper H.L."/>
        </authorList>
    </citation>
    <scope>NUCLEOTIDE SEQUENCE [MRNA] (ISOFORM 1)</scope>
    <scope>TISSUE SPECIFICITY</scope>
    <source>
        <tissue>Epithelium</tissue>
    </source>
</reference>
<reference key="2">
    <citation type="journal article" date="1993" name="J. Mol. Biol.">
        <title>Molecular cloning and expression of the transformation sensitive epithelial marker stratifin. A member of a protein family that has been involved in the protein kinase C signalling pathway.</title>
        <authorList>
            <person name="Leffers H."/>
            <person name="Madsen P."/>
            <person name="Rasmussen H.H."/>
            <person name="Honore B."/>
            <person name="Andersen A.H."/>
            <person name="Walbum E."/>
            <person name="Vandekerckhove J."/>
            <person name="Celis J.E."/>
        </authorList>
    </citation>
    <scope>NUCLEOTIDE SEQUENCE [MRNA] (ISOFORM 1)</scope>
    <scope>PROTEIN SEQUENCE OF 19-25; 42-49; 118-122; 130-139; 149-159; 161-181; 196-199; 225-229 AND 231-239</scope>
    <scope>SUBCELLULAR LOCATION</scope>
    <source>
        <tissue>Keratinocyte</tissue>
    </source>
</reference>
<reference key="3">
    <citation type="journal article" date="1997" name="Mol. Cell">
        <title>14-3-3 sigma is a p53-regulated inhibitor of G2/M progression.</title>
        <authorList>
            <person name="Hermeking H."/>
            <person name="Lengauer C."/>
            <person name="Polyak K."/>
            <person name="He T.-C."/>
            <person name="Zhang L."/>
            <person name="Thiagalingam S."/>
            <person name="Kinzler K.W."/>
            <person name="Vogelstein B."/>
        </authorList>
    </citation>
    <scope>NUCLEOTIDE SEQUENCE [GENOMIC DNA / MRNA] (ISOFORM 1)</scope>
    <scope>FUNCTION</scope>
</reference>
<reference key="4">
    <citation type="submission" date="2004-06" db="EMBL/GenBank/DDBJ databases">
        <title>Cloning of human full open reading frames in Gateway(TM) system entry vector (pDONR201).</title>
        <authorList>
            <person name="Halleck A."/>
            <person name="Ebert L."/>
            <person name="Mkoundinya M."/>
            <person name="Schick M."/>
            <person name="Eisenstein S."/>
            <person name="Neubert P."/>
            <person name="Kstrang K."/>
            <person name="Schatten R."/>
            <person name="Shen B."/>
            <person name="Henze S."/>
            <person name="Mar W."/>
            <person name="Korn B."/>
            <person name="Zuo D."/>
            <person name="Hu Y."/>
            <person name="LaBaer J."/>
        </authorList>
    </citation>
    <scope>NUCLEOTIDE SEQUENCE [LARGE SCALE MRNA] (ISOFORM 1)</scope>
</reference>
<reference key="5">
    <citation type="journal article" date="2006" name="Nature">
        <title>The DNA sequence and biological annotation of human chromosome 1.</title>
        <authorList>
            <person name="Gregory S.G."/>
            <person name="Barlow K.F."/>
            <person name="McLay K.E."/>
            <person name="Kaul R."/>
            <person name="Swarbreck D."/>
            <person name="Dunham A."/>
            <person name="Scott C.E."/>
            <person name="Howe K.L."/>
            <person name="Woodfine K."/>
            <person name="Spencer C.C.A."/>
            <person name="Jones M.C."/>
            <person name="Gillson C."/>
            <person name="Searle S."/>
            <person name="Zhou Y."/>
            <person name="Kokocinski F."/>
            <person name="McDonald L."/>
            <person name="Evans R."/>
            <person name="Phillips K."/>
            <person name="Atkinson A."/>
            <person name="Cooper R."/>
            <person name="Jones C."/>
            <person name="Hall R.E."/>
            <person name="Andrews T.D."/>
            <person name="Lloyd C."/>
            <person name="Ainscough R."/>
            <person name="Almeida J.P."/>
            <person name="Ambrose K.D."/>
            <person name="Anderson F."/>
            <person name="Andrew R.W."/>
            <person name="Ashwell R.I.S."/>
            <person name="Aubin K."/>
            <person name="Babbage A.K."/>
            <person name="Bagguley C.L."/>
            <person name="Bailey J."/>
            <person name="Beasley H."/>
            <person name="Bethel G."/>
            <person name="Bird C.P."/>
            <person name="Bray-Allen S."/>
            <person name="Brown J.Y."/>
            <person name="Brown A.J."/>
            <person name="Buckley D."/>
            <person name="Burton J."/>
            <person name="Bye J."/>
            <person name="Carder C."/>
            <person name="Chapman J.C."/>
            <person name="Clark S.Y."/>
            <person name="Clarke G."/>
            <person name="Clee C."/>
            <person name="Cobley V."/>
            <person name="Collier R.E."/>
            <person name="Corby N."/>
            <person name="Coville G.J."/>
            <person name="Davies J."/>
            <person name="Deadman R."/>
            <person name="Dunn M."/>
            <person name="Earthrowl M."/>
            <person name="Ellington A.G."/>
            <person name="Errington H."/>
            <person name="Frankish A."/>
            <person name="Frankland J."/>
            <person name="French L."/>
            <person name="Garner P."/>
            <person name="Garnett J."/>
            <person name="Gay L."/>
            <person name="Ghori M.R.J."/>
            <person name="Gibson R."/>
            <person name="Gilby L.M."/>
            <person name="Gillett W."/>
            <person name="Glithero R.J."/>
            <person name="Grafham D.V."/>
            <person name="Griffiths C."/>
            <person name="Griffiths-Jones S."/>
            <person name="Grocock R."/>
            <person name="Hammond S."/>
            <person name="Harrison E.S.I."/>
            <person name="Hart E."/>
            <person name="Haugen E."/>
            <person name="Heath P.D."/>
            <person name="Holmes S."/>
            <person name="Holt K."/>
            <person name="Howden P.J."/>
            <person name="Hunt A.R."/>
            <person name="Hunt S.E."/>
            <person name="Hunter G."/>
            <person name="Isherwood J."/>
            <person name="James R."/>
            <person name="Johnson C."/>
            <person name="Johnson D."/>
            <person name="Joy A."/>
            <person name="Kay M."/>
            <person name="Kershaw J.K."/>
            <person name="Kibukawa M."/>
            <person name="Kimberley A.M."/>
            <person name="King A."/>
            <person name="Knights A.J."/>
            <person name="Lad H."/>
            <person name="Laird G."/>
            <person name="Lawlor S."/>
            <person name="Leongamornlert D.A."/>
            <person name="Lloyd D.M."/>
            <person name="Loveland J."/>
            <person name="Lovell J."/>
            <person name="Lush M.J."/>
            <person name="Lyne R."/>
            <person name="Martin S."/>
            <person name="Mashreghi-Mohammadi M."/>
            <person name="Matthews L."/>
            <person name="Matthews N.S.W."/>
            <person name="McLaren S."/>
            <person name="Milne S."/>
            <person name="Mistry S."/>
            <person name="Moore M.J.F."/>
            <person name="Nickerson T."/>
            <person name="O'Dell C.N."/>
            <person name="Oliver K."/>
            <person name="Palmeiri A."/>
            <person name="Palmer S.A."/>
            <person name="Parker A."/>
            <person name="Patel D."/>
            <person name="Pearce A.V."/>
            <person name="Peck A.I."/>
            <person name="Pelan S."/>
            <person name="Phelps K."/>
            <person name="Phillimore B.J."/>
            <person name="Plumb R."/>
            <person name="Rajan J."/>
            <person name="Raymond C."/>
            <person name="Rouse G."/>
            <person name="Saenphimmachak C."/>
            <person name="Sehra H.K."/>
            <person name="Sheridan E."/>
            <person name="Shownkeen R."/>
            <person name="Sims S."/>
            <person name="Skuce C.D."/>
            <person name="Smith M."/>
            <person name="Steward C."/>
            <person name="Subramanian S."/>
            <person name="Sycamore N."/>
            <person name="Tracey A."/>
            <person name="Tromans A."/>
            <person name="Van Helmond Z."/>
            <person name="Wall M."/>
            <person name="Wallis J.M."/>
            <person name="White S."/>
            <person name="Whitehead S.L."/>
            <person name="Wilkinson J.E."/>
            <person name="Willey D.L."/>
            <person name="Williams H."/>
            <person name="Wilming L."/>
            <person name="Wray P.W."/>
            <person name="Wu Z."/>
            <person name="Coulson A."/>
            <person name="Vaudin M."/>
            <person name="Sulston J.E."/>
            <person name="Durbin R.M."/>
            <person name="Hubbard T."/>
            <person name="Wooster R."/>
            <person name="Dunham I."/>
            <person name="Carter N.P."/>
            <person name="McVean G."/>
            <person name="Ross M.T."/>
            <person name="Harrow J."/>
            <person name="Olson M.V."/>
            <person name="Beck S."/>
            <person name="Rogers J."/>
            <person name="Bentley D.R."/>
        </authorList>
    </citation>
    <scope>NUCLEOTIDE SEQUENCE [LARGE SCALE GENOMIC DNA]</scope>
</reference>
<reference key="6">
    <citation type="journal article" date="2004" name="Genome Res.">
        <title>The status, quality, and expansion of the NIH full-length cDNA project: the Mammalian Gene Collection (MGC).</title>
        <authorList>
            <consortium name="The MGC Project Team"/>
        </authorList>
    </citation>
    <scope>NUCLEOTIDE SEQUENCE [LARGE SCALE MRNA] (ISOFORMS 1 AND 2)</scope>
    <source>
        <tissue>Cervix</tissue>
        <tissue>Lung</tissue>
        <tissue>Placenta</tissue>
    </source>
</reference>
<reference key="7">
    <citation type="journal article" date="1992" name="Electrophoresis">
        <title>Microsequences of 145 proteins recorded in the two-dimensional gel protein database of normal human epidermal keratinocytes.</title>
        <authorList>
            <person name="Rasmussen H.H."/>
            <person name="van Damme J."/>
            <person name="Puype M."/>
            <person name="Gesser B."/>
            <person name="Celis J.E."/>
            <person name="Vandekerckhove J."/>
        </authorList>
    </citation>
    <scope>PROTEIN SEQUENCE OF 42-49 AND 118-122</scope>
    <source>
        <tissue>Keratinocyte</tissue>
    </source>
</reference>
<reference key="8">
    <citation type="journal article" date="2004" name="EMBO J.">
        <title>Exportin 7 defines a novel general nuclear export pathway.</title>
        <authorList>
            <person name="Mingot J.-M."/>
            <person name="Bohnsack M.T."/>
            <person name="Jaekle U."/>
            <person name="Goerlich D."/>
        </authorList>
    </citation>
    <scope>IDENTIFICATION IN A COMPLEX WITH XPO7; ARHGAP1; EIF4A1; VPS26A; VPS29 AND VPS35</scope>
</reference>
<reference key="9">
    <citation type="journal article" date="2006" name="Nat. Biotechnol.">
        <title>A probability-based approach for high-throughput protein phosphorylation analysis and site localization.</title>
        <authorList>
            <person name="Beausoleil S.A."/>
            <person name="Villen J."/>
            <person name="Gerber S.A."/>
            <person name="Rush J."/>
            <person name="Gygi S.P."/>
        </authorList>
    </citation>
    <scope>PHOSPHORYLATION [LARGE SCALE ANALYSIS] AT SER-248</scope>
    <scope>IDENTIFICATION BY MASS SPECTROMETRY [LARGE SCALE ANALYSIS]</scope>
    <source>
        <tissue>Cervix carcinoma</tissue>
    </source>
</reference>
<reference key="10">
    <citation type="journal article" date="2008" name="Cell Cycle">
        <title>CARPs enhance p53 turnover by degrading 14-3-3sigma and stabilizing MDM2.</title>
        <authorList>
            <person name="Yang W."/>
            <person name="Dicker D.T."/>
            <person name="Chen J."/>
            <person name="El-Deiry W.S."/>
        </authorList>
    </citation>
    <scope>FUNCTION IN MDM2 UBIQUITINATION</scope>
    <scope>UBIQUITINATION BY RFFL</scope>
</reference>
<reference key="11">
    <citation type="journal article" date="2008" name="EMBO J.">
        <title>Phosphorylation-dependent binding of 14-3-3 terminates signalling by the Gab2 docking protein.</title>
        <authorList>
            <person name="Brummer T."/>
            <person name="Larance M."/>
            <person name="Herrera Abreu M.T."/>
            <person name="Lyons R.J."/>
            <person name="Timpson P."/>
            <person name="Emmerich C.H."/>
            <person name="Fleuren E.D.G."/>
            <person name="Lehrbach G.M."/>
            <person name="Schramek D."/>
            <person name="Guilhaus M."/>
            <person name="James D.E."/>
            <person name="Daly R.J."/>
        </authorList>
    </citation>
    <scope>INTERACTION WITH GAB2</scope>
</reference>
<reference key="12">
    <citation type="journal article" date="2008" name="Mol. Cell">
        <title>Kinase-selective enrichment enables quantitative phosphoproteomics of the kinome across the cell cycle.</title>
        <authorList>
            <person name="Daub H."/>
            <person name="Olsen J.V."/>
            <person name="Bairlein M."/>
            <person name="Gnad F."/>
            <person name="Oppermann F.S."/>
            <person name="Korner R."/>
            <person name="Greff Z."/>
            <person name="Keri G."/>
            <person name="Stemmann O."/>
            <person name="Mann M."/>
        </authorList>
    </citation>
    <scope>PHOSPHORYLATION [LARGE SCALE ANALYSIS] AT SER-248</scope>
    <scope>IDENTIFICATION BY MASS SPECTROMETRY [LARGE SCALE ANALYSIS]</scope>
    <source>
        <tissue>Cervix carcinoma</tissue>
    </source>
</reference>
<reference key="13">
    <citation type="journal article" date="2008" name="Proc. Natl. Acad. Sci. U.S.A.">
        <title>A quantitative atlas of mitotic phosphorylation.</title>
        <authorList>
            <person name="Dephoure N."/>
            <person name="Zhou C."/>
            <person name="Villen J."/>
            <person name="Beausoleil S.A."/>
            <person name="Bakalarski C.E."/>
            <person name="Elledge S.J."/>
            <person name="Gygi S.P."/>
        </authorList>
    </citation>
    <scope>PHOSPHORYLATION [LARGE SCALE ANALYSIS] AT SER-248</scope>
    <scope>IDENTIFICATION BY MASS SPECTROMETRY [LARGE SCALE ANALYSIS]</scope>
    <source>
        <tissue>Cervix carcinoma</tissue>
    </source>
</reference>
<reference key="14">
    <citation type="journal article" date="2009" name="Biol. Psychiatry">
        <title>SLITRK1 binds 14-3-3 and regulates neurite outgrowth in a phosphorylation-dependent manner.</title>
        <authorList>
            <person name="Kajiwara Y."/>
            <person name="Buxbaum J.D."/>
            <person name="Grice D.E."/>
        </authorList>
    </citation>
    <scope>INTERACTION WITH SLITRK1</scope>
</reference>
<reference key="15">
    <citation type="journal article" date="2009" name="J. Biol. Chem.">
        <title>Interaction of Akt-phosphorylated SRPK2 with 14-3-3 mediates cell cycle and cell death in neurons.</title>
        <authorList>
            <person name="Jang S.W."/>
            <person name="Liu X."/>
            <person name="Fu H."/>
            <person name="Rees H."/>
            <person name="Yepes M."/>
            <person name="Levey A."/>
            <person name="Ye K."/>
        </authorList>
    </citation>
    <scope>INTERACTION WITH SRPK2</scope>
</reference>
<reference key="16">
    <citation type="journal article" date="2010" name="Sci. Signal.">
        <title>Quantitative phosphoproteomics reveals widespread full phosphorylation site occupancy during mitosis.</title>
        <authorList>
            <person name="Olsen J.V."/>
            <person name="Vermeulen M."/>
            <person name="Santamaria A."/>
            <person name="Kumar C."/>
            <person name="Miller M.L."/>
            <person name="Jensen L.J."/>
            <person name="Gnad F."/>
            <person name="Cox J."/>
            <person name="Jensen T.S."/>
            <person name="Nigg E.A."/>
            <person name="Brunak S."/>
            <person name="Mann M."/>
        </authorList>
    </citation>
    <scope>PHOSPHORYLATION [LARGE SCALE ANALYSIS] AT SER-5 AND SER-248</scope>
    <scope>IDENTIFICATION BY MASS SPECTROMETRY [LARGE SCALE ANALYSIS]</scope>
    <source>
        <tissue>Cervix carcinoma</tissue>
    </source>
</reference>
<reference key="17">
    <citation type="journal article" date="2011" name="BMC Syst. Biol.">
        <title>Initial characterization of the human central proteome.</title>
        <authorList>
            <person name="Burkard T.R."/>
            <person name="Planyavsky M."/>
            <person name="Kaupe I."/>
            <person name="Breitwieser F.P."/>
            <person name="Buerckstuemmer T."/>
            <person name="Bennett K.L."/>
            <person name="Superti-Furga G."/>
            <person name="Colinge J."/>
        </authorList>
    </citation>
    <scope>IDENTIFICATION BY MASS SPECTROMETRY [LARGE SCALE ANALYSIS]</scope>
</reference>
<reference key="18">
    <citation type="journal article" date="2011" name="Oncogene">
        <title>COP9 signalosome subunit 6 stabilizes COP1, which functions as an E3 ubiquitin ligase for 14-3-3sigma.</title>
        <authorList>
            <person name="Choi H.H."/>
            <person name="Gully C."/>
            <person name="Su C.H."/>
            <person name="Velazquez-Torres G."/>
            <person name="Chou P.C."/>
            <person name="Tseng C."/>
            <person name="Zhao R."/>
            <person name="Phan L."/>
            <person name="Shaiken T."/>
            <person name="Chen J."/>
            <person name="Yeung S.C."/>
            <person name="Lee M.H."/>
        </authorList>
    </citation>
    <scope>INTERACTION WITH COPS6 AND COP1</scope>
</reference>
<reference key="19">
    <citation type="journal article" date="2013" name="J. Proteome Res.">
        <title>Toward a comprehensive characterization of a human cancer cell phosphoproteome.</title>
        <authorList>
            <person name="Zhou H."/>
            <person name="Di Palma S."/>
            <person name="Preisinger C."/>
            <person name="Peng M."/>
            <person name="Polat A.N."/>
            <person name="Heck A.J."/>
            <person name="Mohammed S."/>
        </authorList>
    </citation>
    <scope>PHOSPHORYLATION [LARGE SCALE ANALYSIS] AT SER-74</scope>
    <scope>IDENTIFICATION BY MASS SPECTROMETRY [LARGE SCALE ANALYSIS]</scope>
    <source>
        <tissue>Cervix carcinoma</tissue>
    </source>
</reference>
<reference key="20">
    <citation type="journal article" date="2013" name="MBio">
        <title>ACBD3 interaction with TBC1 domain 22 protein is differentially affected by enteroviral and kobuviral 3A protein binding.</title>
        <authorList>
            <person name="Greninger A.L."/>
            <person name="Knudsen G.M."/>
            <person name="Betegon M."/>
            <person name="Burlingame A.L."/>
            <person name="DeRisi J.L."/>
        </authorList>
    </citation>
    <scope>INTERACTION WITH PI4KB</scope>
    <scope>IDENTIFICATION BY MASS SPECTROMETRY</scope>
</reference>
<reference key="21">
    <citation type="journal article" date="2013" name="PLoS ONE">
        <title>Stratifin (14-3-3 sigma) limits plakophilin-3 exchange with the desmosomal plaque.</title>
        <authorList>
            <person name="Roberts B.J."/>
            <person name="Reddy R."/>
            <person name="Wahl J.K. III"/>
        </authorList>
    </citation>
    <scope>FUNCTION</scope>
    <scope>INTERACTION WITH PKP3</scope>
    <scope>SUBCELLULAR LOCATION</scope>
</reference>
<reference key="22">
    <citation type="journal article" date="2015" name="Biochem. Biophys. Res. Commun.">
        <title>Suppression of death-associated protein kinase 2 by interaction with 14-3-3 proteins.</title>
        <authorList>
            <person name="Yuasa K."/>
            <person name="Ota R."/>
            <person name="Matsuda S."/>
            <person name="Isshiki K."/>
            <person name="Inoue M."/>
            <person name="Tsuji A."/>
        </authorList>
    </citation>
    <scope>INTERACTION WITH DAPK2</scope>
</reference>
<reference key="23">
    <citation type="journal article" date="2018" name="J. Cell Sci.">
        <title>14-3-3 proteins regulate desmosomal adhesion via plakophilins.</title>
        <authorList>
            <person name="Rietscher K."/>
            <person name="Keil R."/>
            <person name="Jordan A."/>
            <person name="Hatzfeld M."/>
        </authorList>
    </citation>
    <scope>FUNCTION</scope>
    <scope>INTERACTION WITH PKP3</scope>
</reference>
<reference key="24">
    <citation type="journal article" date="2005" name="J. Biol. Chem.">
        <title>A structural basis for 14-3-3sigma functional specificity.</title>
        <authorList>
            <person name="Wilker E.W."/>
            <person name="Grant R.A."/>
            <person name="Artim S.C."/>
            <person name="Yaffe M.B."/>
        </authorList>
    </citation>
    <scope>X-RAY CRYSTALLOGRAPHY (2.4 ANGSTROMS) IN COMPLEX WITH PHOSPHOSERINE PEPTIDE</scope>
    <scope>FUNCTION</scope>
</reference>
<reference key="25">
    <citation type="journal article" date="2012" name="J. Struct. Biol.">
        <title>Identification and structural characterization of two 14-3-3 binding sites in the human peptidylarginine deiminase type VI.</title>
        <authorList>
            <person name="Rose R."/>
            <person name="Rose M."/>
            <person name="Ottmann C."/>
        </authorList>
    </citation>
    <scope>X-RAY CRYSTALLOGRAPHY (1.4 ANGSTROMS) OF 1-231 IN COMPLEX WITH PADI6 PHOSPHOPEPTIDES</scope>
    <scope>FUNCTION</scope>
</reference>
<reference evidence="26 27" key="26">
    <citation type="journal article" date="2017" name="Biochem. J.">
        <title>Structural interface between LRRK2 and 14-3-3 protein.</title>
        <authorList>
            <person name="Stevers L.M."/>
            <person name="de Vries R.M."/>
            <person name="Doveston R.G."/>
            <person name="Milroy L.G."/>
            <person name="Brunsveld L."/>
            <person name="Ottmann C."/>
        </authorList>
    </citation>
    <scope>X-RAY CRYSTALLOGRAPHY (1.33 ANGSTROMS) OF 1-231 IN COMPLEX WITH LRRK2 PHOSPHOPEPTIDE</scope>
    <scope>FUNCTION</scope>
    <scope>SUBUNIT</scope>
</reference>
<reference evidence="28" key="27">
    <citation type="journal article" date="2021" name="FEBS Lett.">
        <title>The 14-3-3/SLP76 protein-protein interaction in T-cell receptor signalling: a structural and biophysical characterization.</title>
        <authorList>
            <person name="Soini L."/>
            <person name="Leysen S."/>
            <person name="Davis J."/>
            <person name="Westwood M."/>
            <person name="Ottmann C."/>
        </authorList>
    </citation>
    <scope>X-RAY CRYSTALLOGRAPHY (1.53 ANGSTROMS) OF 1-231</scope>
    <scope>INTERACTION WITH LCP2</scope>
</reference>
<reference evidence="29" key="28">
    <citation type="journal article" date="2023" name="Science">
        <title>PIM1 controls GBP1 activity to limit self-damage and to guard against pathogen infection.</title>
        <authorList>
            <person name="Fisch D."/>
            <person name="Pfleiderer M.M."/>
            <person name="Anastasakou E."/>
            <person name="Mackie G.M."/>
            <person name="Wendt F."/>
            <person name="Liu X."/>
            <person name="Clough B."/>
            <person name="Lara-Reyna S."/>
            <person name="Encheva V."/>
            <person name="Snijders A.P."/>
            <person name="Bando H."/>
            <person name="Yamamoto M."/>
            <person name="Beggs A.D."/>
            <person name="Mercer J."/>
            <person name="Shenoy A.R."/>
            <person name="Wollscheid B."/>
            <person name="Maslowski K.M."/>
            <person name="Galej W.P."/>
            <person name="Frickel E.M."/>
        </authorList>
    </citation>
    <scope>STRUCTURE BY ELECTRON MICROSCOPY (5.12 ANGSTROMS) OF 1-231 IN COMPLEX WITH GBP1</scope>
    <scope>FUNCTION</scope>
    <scope>SUBCELLULAR LOCATION</scope>
</reference>
<accession>P31947</accession>
<accession>Q6FH30</accession>
<accession>Q6FH51</accession>
<accession>Q96DH0</accession>
<sequence>MERASLIQKAKLAEQAERYEDMAAFMKGAVEKGEELSCEERNLLSVAYKNVVGGQRAAWRVLSSIEQKSNEEGSEEKGPEVREYREKVETELQGVCDTVLGLLDSHLIKEAGDAESRVFYLKMKGDYYRYLAEVATGDDKKRIIDSARSAYQEAMDISKKEMPPTNPIRLGLALNFSVFHYEIANSPEEAISLAKTTFDEAMADLHTLSEDSYKDSTLIMQLLRDNLTLWTADNAGEEGGEAPQEPQS</sequence>
<organism>
    <name type="scientific">Homo sapiens</name>
    <name type="common">Human</name>
    <dbReference type="NCBI Taxonomy" id="9606"/>
    <lineage>
        <taxon>Eukaryota</taxon>
        <taxon>Metazoa</taxon>
        <taxon>Chordata</taxon>
        <taxon>Craniata</taxon>
        <taxon>Vertebrata</taxon>
        <taxon>Euteleostomi</taxon>
        <taxon>Mammalia</taxon>
        <taxon>Eutheria</taxon>
        <taxon>Euarchontoglires</taxon>
        <taxon>Primates</taxon>
        <taxon>Haplorrhini</taxon>
        <taxon>Catarrhini</taxon>
        <taxon>Hominidae</taxon>
        <taxon>Homo</taxon>
    </lineage>
</organism>
<name>1433S_HUMAN</name>
<gene>
    <name type="primary">SFN</name>
    <name evidence="19" type="synonym">HME1</name>
</gene>
<keyword id="KW-0002">3D-structure</keyword>
<keyword id="KW-0025">Alternative splicing</keyword>
<keyword id="KW-0963">Cytoplasm</keyword>
<keyword id="KW-0903">Direct protein sequencing</keyword>
<keyword id="KW-0539">Nucleus</keyword>
<keyword id="KW-0597">Phosphoprotein</keyword>
<keyword id="KW-1267">Proteomics identification</keyword>
<keyword id="KW-1185">Reference proteome</keyword>
<keyword id="KW-0964">Secreted</keyword>
<keyword id="KW-0832">Ubl conjugation</keyword>
<comment type="function">
    <text evidence="1 4 5 10 12 14 15 17 18">Adapter protein implicated in the regulation of a large spectrum of both general and specialized signaling pathways (PubMed:15731107, PubMed:22634725, PubMed:28202711, PubMed:37797010). Binds to a large number of partners, usually by recognition of a phosphoserine or phosphothreonine motif (PubMed:15731107, PubMed:22634725, PubMed:28202711, PubMed:37797010). Binding generally results in the modulation of the activity of the binding partner (PubMed:15731107, PubMed:22634725, PubMed:28202711, PubMed:37797010). Promotes cytosolic retention of GBP1 GTPase by binding to phosphorylated GBP1, thereby inhibiting the innate immune response (PubMed:37797010). Also acts as a TP53/p53-regulated inhibitor of G2/M progression (PubMed:9659898). When bound to KRT17, regulates protein synthesis and epithelial cell growth by stimulating Akt/mTOR pathway (By similarity). Acts to maintain desmosome cell junction adhesion in epithelial cells via interacting with and sequestering PKP3 to the cytoplasm, thereby restricting its translocation to existing desmosome structures and therefore maintaining desmosome protein homeostasis (PubMed:24124604). Also acts to facilitate PKP3 exchange at desmosome plaques, thereby maintaining keratinocyte intercellular adhesion (PubMed:29678907). May also regulate MDM2 autoubiquitination and degradation and thereby activate p53/TP53 (PubMed:18382127).</text>
</comment>
<comment type="subunit">
    <text evidence="1 3 4 6 7 8 9 10 11 12 13 14 15 16">Homodimer (PubMed:28202711). Interacts with KRT17 and SAMSN1 (By similarity). Found in a complex with XPO7, EIF4A1, ARHGAP1, VPS26A, VPS29 and VPS35 (PubMed:15282546). Interacts with GAB2 (PubMed:19172738). Interacts with SRPK2 (PubMed:19592491). Interacts with COPS6 (PubMed:21625211). Interacts with COP1; this interaction leads to proteasomal degradation (PubMed:21625211). Interacts with the 'Thr-369' phosphorylated form of DAPK2 (PubMed:26047703). Interacts with PI4KB (PubMed:23572552). Interacts with SLITRK1 (PubMed:19640509). Interacts with LRRK2; this interaction is dependent on LRRK2 phosphorylation (PubMed:28202711). Interacts with PKP3 (via N-terminus); the interaction maintains the cytoplasmic pool of PKP3, facilitates PKP3 exchange at desmosomes and restricts PKP3 localization to existing desmosome cell junctions (PubMed:24124604, PubMed:29678907). Interacts with LCP2 (PubMed:33159816).</text>
</comment>
<comment type="interaction">
    <interactant intactId="EBI-476295">
        <id>P31947</id>
    </interactant>
    <interactant intactId="EBI-375543">
        <id>P00519</id>
        <label>ABL1</label>
    </interactant>
    <organismsDiffer>false</organismsDiffer>
    <experiments>5</experiments>
</comment>
<comment type="interaction">
    <interactant intactId="EBI-476295">
        <id>P31947</id>
    </interactant>
    <interactant intactId="EBI-487024">
        <id>O14639</id>
        <label>ABLIM1</label>
    </interactant>
    <organismsDiffer>false</organismsDiffer>
    <experiments>5</experiments>
</comment>
<comment type="interaction">
    <interactant intactId="EBI-476295">
        <id>P31947</id>
    </interactant>
    <interactant intactId="EBI-949782">
        <id>Q96IF1</id>
        <label>AJUBA</label>
    </interactant>
    <organismsDiffer>false</organismsDiffer>
    <experiments>2</experiments>
</comment>
<comment type="interaction">
    <interactant intactId="EBI-476295">
        <id>P31947</id>
    </interactant>
    <interactant intactId="EBI-1048612">
        <id>Q92625</id>
        <label>ANKS1A</label>
    </interactant>
    <organismsDiffer>false</organismsDiffer>
    <experiments>4</experiments>
</comment>
<comment type="interaction">
    <interactant intactId="EBI-476295">
        <id>P31947</id>
    </interactant>
    <interactant intactId="EBI-365961">
        <id>P10398</id>
        <label>ARAF</label>
    </interactant>
    <organismsDiffer>false</organismsDiffer>
    <experiments>4</experiments>
</comment>
<comment type="interaction">
    <interactant intactId="EBI-476295">
        <id>P31947</id>
    </interactant>
    <interactant intactId="EBI-1642518">
        <id>Q5T5U3</id>
        <label>ARHGAP21</label>
    </interactant>
    <organismsDiffer>false</organismsDiffer>
    <experiments>4</experiments>
</comment>
<comment type="interaction">
    <interactant intactId="EBI-476295">
        <id>P31947</id>
    </interactant>
    <interactant intactId="EBI-308663">
        <id>A7KAX9</id>
        <label>ARHGAP32</label>
    </interactant>
    <organismsDiffer>false</organismsDiffer>
    <experiments>3</experiments>
</comment>
<comment type="interaction">
    <interactant intactId="EBI-476295">
        <id>P31947</id>
    </interactant>
    <interactant intactId="EBI-1057448">
        <id>Q5VV41</id>
        <label>ARHGEF16</label>
    </interactant>
    <organismsDiffer>false</organismsDiffer>
    <experiments>5</experiments>
</comment>
<comment type="interaction">
    <interactant intactId="EBI-476295">
        <id>P31947</id>
    </interactant>
    <interactant intactId="EBI-302405">
        <id>Q92974</id>
        <label>ARHGEF2</label>
    </interactant>
    <organismsDiffer>false</organismsDiffer>
    <experiments>4</experiments>
</comment>
<comment type="interaction">
    <interactant intactId="EBI-476295">
        <id>P31947</id>
    </interactant>
    <interactant intactId="EBI-602199">
        <id>Q12774</id>
        <label>ARHGEF5</label>
    </interactant>
    <organismsDiffer>false</organismsDiffer>
    <experiments>4</experiments>
</comment>
<comment type="interaction">
    <interactant intactId="EBI-476295">
        <id>P31947</id>
    </interactant>
    <interactant intactId="EBI-700771">
        <id>Q92934</id>
        <label>BAD</label>
    </interactant>
    <organismsDiffer>false</organismsDiffer>
    <experiments>9</experiments>
</comment>
<comment type="interaction">
    <interactant intactId="EBI-476295">
        <id>P31947</id>
    </interactant>
    <interactant intactId="EBI-525456">
        <id>Q9UQB8</id>
        <label>BAIAP2</label>
    </interactant>
    <organismsDiffer>false</organismsDiffer>
    <experiments>4</experiments>
</comment>
<comment type="interaction">
    <interactant intactId="EBI-476295">
        <id>P31947</id>
    </interactant>
    <interactant intactId="EBI-365980">
        <id>P15056</id>
        <label>BRAF</label>
    </interactant>
    <organismsDiffer>false</organismsDiffer>
    <experiments>5</experiments>
</comment>
<comment type="interaction">
    <interactant intactId="EBI-476295">
        <id>P31947</id>
    </interactant>
    <interactant intactId="EBI-518228">
        <id>P22681</id>
        <label>CBL</label>
    </interactant>
    <organismsDiffer>false</organismsDiffer>
    <experiments>2</experiments>
</comment>
<comment type="interaction">
    <interactant intactId="EBI-476295">
        <id>P31947</id>
    </interactant>
    <interactant intactId="EBI-10171570">
        <id>Q68D86</id>
        <label>CCDC102B</label>
    </interactant>
    <organismsDiffer>false</organismsDiffer>
    <experiments>3</experiments>
</comment>
<comment type="interaction">
    <interactant intactId="EBI-476295">
        <id>P31947</id>
    </interactant>
    <interactant intactId="EBI-11977221">
        <id>Q86Z20</id>
        <label>CCDC125</label>
    </interactant>
    <organismsDiffer>false</organismsDiffer>
    <experiments>3</experiments>
</comment>
<comment type="interaction">
    <interactant intactId="EBI-476295">
        <id>P31947</id>
    </interactant>
    <interactant intactId="EBI-741406">
        <id>P51946</id>
        <label>CCNH</label>
    </interactant>
    <organismsDiffer>false</organismsDiffer>
    <experiments>4</experiments>
</comment>
<comment type="interaction">
    <interactant intactId="EBI-476295">
        <id>P31947</id>
    </interactant>
    <interactant intactId="EBI-1051746">
        <id>P30305</id>
        <label>CDC25B</label>
    </interactant>
    <organismsDiffer>false</organismsDiffer>
    <experiments>2</experiments>
</comment>
<comment type="interaction">
    <interactant intactId="EBI-476295">
        <id>P31947</id>
    </interactant>
    <interactant intactId="EBI-79537">
        <id>Q9P2M7</id>
        <label>CGN</label>
    </interactant>
    <organismsDiffer>false</organismsDiffer>
    <experiments>4</experiments>
</comment>
<comment type="interaction">
    <interactant intactId="EBI-476295">
        <id>P31947</id>
    </interactant>
    <interactant intactId="EBI-913476">
        <id>Q7Z460</id>
        <label>CLASP1</label>
    </interactant>
    <organismsDiffer>false</organismsDiffer>
    <experiments>3</experiments>
</comment>
<comment type="interaction">
    <interactant intactId="EBI-476295">
        <id>P31947</id>
    </interactant>
    <interactant intactId="EBI-913524">
        <id>O75122</id>
        <label>CLASP2</label>
    </interactant>
    <organismsDiffer>false</organismsDiffer>
    <experiments>4</experiments>
</comment>
<comment type="interaction">
    <interactant intactId="EBI-476295">
        <id>P31947</id>
    </interactant>
    <interactant intactId="EBI-1176214">
        <id>Q8NHY2</id>
        <label>COP1</label>
    </interactant>
    <organismsDiffer>false</organismsDiffer>
    <experiments>6</experiments>
</comment>
<comment type="interaction">
    <interactant intactId="EBI-476295">
        <id>P31947</id>
    </interactant>
    <interactant intactId="EBI-486838">
        <id>Q7L5N1</id>
        <label>COPS6</label>
    </interactant>
    <organismsDiffer>false</organismsDiffer>
    <experiments>7</experiments>
</comment>
<comment type="interaction">
    <interactant intactId="EBI-476295">
        <id>P31947</id>
    </interactant>
    <interactant intactId="EBI-357034">
        <id>P25685</id>
        <label>DNAJB1</label>
    </interactant>
    <organismsDiffer>false</organismsDiffer>
    <experiments>2</experiments>
</comment>
<comment type="interaction">
    <interactant intactId="EBI-476295">
        <id>P31947</id>
    </interactant>
    <interactant intactId="EBI-997311">
        <id>Q96F86</id>
        <label>EDC3</label>
    </interactant>
    <organismsDiffer>false</organismsDiffer>
    <experiments>4</experiments>
</comment>
<comment type="interaction">
    <interactant intactId="EBI-476295">
        <id>P31947</id>
    </interactant>
    <interactant intactId="EBI-297353">
        <id>P00533</id>
        <label>EGFR</label>
    </interactant>
    <organismsDiffer>false</organismsDiffer>
    <experiments>9</experiments>
</comment>
<comment type="interaction">
    <interactant intactId="EBI-476295">
        <id>P31947</id>
    </interactant>
    <interactant intactId="EBI-1052044">
        <id>O43491</id>
        <label>EPB41L2</label>
    </interactant>
    <organismsDiffer>false</organismsDiffer>
    <experiments>3</experiments>
</comment>
<comment type="interaction">
    <interactant intactId="EBI-476295">
        <id>P31947</id>
    </interactant>
    <interactant intactId="EBI-2941912">
        <id>Q9UJM3</id>
        <label>ERRFI1</label>
    </interactant>
    <organismsDiffer>false</organismsDiffer>
    <experiments>3</experiments>
</comment>
<comment type="interaction">
    <interactant intactId="EBI-476295">
        <id>P31947</id>
    </interactant>
    <interactant intactId="EBI-3893327">
        <id>Q6P1L5</id>
        <label>FAM117B</label>
    </interactant>
    <organismsDiffer>false</organismsDiffer>
    <experiments>4</experiments>
</comment>
<comment type="interaction">
    <interactant intactId="EBI-476295">
        <id>P31947</id>
    </interactant>
    <interactant intactId="EBI-7545653">
        <id>Q14153</id>
        <label>FAM53B</label>
    </interactant>
    <organismsDiffer>false</organismsDiffer>
    <experiments>2</experiments>
</comment>
<comment type="interaction">
    <interactant intactId="EBI-476295">
        <id>P31947</id>
    </interactant>
    <interactant intactId="EBI-1644252">
        <id>Q9NYF3</id>
        <label>FAM53C</label>
    </interactant>
    <organismsDiffer>false</organismsDiffer>
    <experiments>3</experiments>
</comment>
<comment type="interaction">
    <interactant intactId="EBI-476295">
        <id>P31947</id>
    </interactant>
    <interactant intactId="EBI-10175124">
        <id>Q8IZU0</id>
        <label>FAM9B</label>
    </interactant>
    <organismsDiffer>false</organismsDiffer>
    <experiments>3</experiments>
</comment>
<comment type="interaction">
    <interactant intactId="EBI-476295">
        <id>P31947</id>
    </interactant>
    <interactant intactId="EBI-1644164">
        <id>O43524</id>
        <label>FOXO3</label>
    </interactant>
    <organismsDiffer>false</organismsDiffer>
    <experiments>3</experiments>
</comment>
<comment type="interaction">
    <interactant intactId="EBI-476295">
        <id>P31947</id>
    </interactant>
    <interactant intactId="EBI-4481939">
        <id>P98177</id>
        <label>FOXO4</label>
    </interactant>
    <organismsDiffer>false</organismsDiffer>
    <experiments>4</experiments>
</comment>
<comment type="interaction">
    <interactant intactId="EBI-476295">
        <id>P31947</id>
    </interactant>
    <interactant intactId="EBI-764342">
        <id>Q9H2C0</id>
        <label>GAN</label>
    </interactant>
    <organismsDiffer>false</organismsDiffer>
    <experiments>3</experiments>
</comment>
<comment type="interaction">
    <interactant intactId="EBI-476295">
        <id>P31947</id>
    </interactant>
    <interactant intactId="EBI-740397">
        <id>O60269</id>
        <label>GPRIN2</label>
    </interactant>
    <organismsDiffer>false</organismsDiffer>
    <experiments>2</experiments>
</comment>
<comment type="interaction">
    <interactant intactId="EBI-476295">
        <id>P31947</id>
    </interactant>
    <interactant intactId="EBI-80275">
        <id>Q13322</id>
        <label>GRB10</label>
    </interactant>
    <organismsDiffer>false</organismsDiffer>
    <experiments>2</experiments>
</comment>
<comment type="interaction">
    <interactant intactId="EBI-476295">
        <id>P31947</id>
    </interactant>
    <interactant intactId="EBI-308629">
        <id>P56524</id>
        <label>HDAC4</label>
    </interactant>
    <organismsDiffer>false</organismsDiffer>
    <experiments>8</experiments>
</comment>
<comment type="interaction">
    <interactant intactId="EBI-476295">
        <id>P31947</id>
    </interactant>
    <interactant intactId="EBI-715576">
        <id>Q9UQL6</id>
        <label>HDAC5</label>
    </interactant>
    <organismsDiffer>false</organismsDiffer>
    <experiments>3</experiments>
</comment>
<comment type="interaction">
    <interactant intactId="EBI-476295">
        <id>P31947</id>
    </interactant>
    <interactant intactId="EBI-1048378">
        <id>Q8WUI4</id>
        <label>HDAC7</label>
    </interactant>
    <organismsDiffer>false</organismsDiffer>
    <experiments>3</experiments>
</comment>
<comment type="interaction">
    <interactant intactId="EBI-476295">
        <id>P31947</id>
    </interactant>
    <interactant intactId="EBI-28989979">
        <id>Q5T1R4</id>
        <label>HIVEP3</label>
    </interactant>
    <organismsDiffer>false</organismsDiffer>
    <experiments>5</experiments>
</comment>
<comment type="interaction">
    <interactant intactId="EBI-476295">
        <id>P31947</id>
    </interactant>
    <interactant intactId="EBI-432545">
        <id>Q14103-4</id>
        <label>HNRNPD</label>
    </interactant>
    <organismsDiffer>false</organismsDiffer>
    <experiments>7</experiments>
</comment>
<comment type="interaction">
    <interactant intactId="EBI-476295">
        <id>P31947</id>
    </interactant>
    <interactant intactId="EBI-366258">
        <id>Q16352</id>
        <label>INA</label>
    </interactant>
    <organismsDiffer>false</organismsDiffer>
    <experiments>2</experiments>
</comment>
<comment type="interaction">
    <interactant intactId="EBI-476295">
        <id>P31947</id>
    </interactant>
    <interactant intactId="EBI-517592">
        <id>P35568</id>
        <label>IRS1</label>
    </interactant>
    <organismsDiffer>false</organismsDiffer>
    <experiments>2</experiments>
</comment>
<comment type="interaction">
    <interactant intactId="EBI-476295">
        <id>P31947</id>
    </interactant>
    <interactant intactId="EBI-1049582">
        <id>Q9Y4H2</id>
        <label>IRS2</label>
    </interactant>
    <organismsDiffer>false</organismsDiffer>
    <experiments>4</experiments>
</comment>
<comment type="interaction">
    <interactant intactId="EBI-476295">
        <id>P31947</id>
    </interactant>
    <interactant intactId="EBI-356594">
        <id>O14654</id>
        <label>IRS4</label>
    </interactant>
    <organismsDiffer>false</organismsDiffer>
    <experiments>4</experiments>
</comment>
<comment type="interaction">
    <interactant intactId="EBI-476295">
        <id>P31947</id>
    </interactant>
    <interactant intactId="EBI-1047335">
        <id>Q9H1K1</id>
        <label>ISCU</label>
    </interactant>
    <organismsDiffer>false</organismsDiffer>
    <experiments>2</experiments>
</comment>
<comment type="interaction">
    <interactant intactId="EBI-476295">
        <id>P31947</id>
    </interactant>
    <interactant intactId="EBI-968552">
        <id>Q08881</id>
        <label>ITK</label>
    </interactant>
    <organismsDiffer>false</organismsDiffer>
    <experiments>2</experiments>
</comment>
<comment type="interaction">
    <interactant intactId="EBI-476295">
        <id>P31947</id>
    </interactant>
    <interactant intactId="EBI-1053969">
        <id>Q6ICG6</id>
        <label>KIAA0930</label>
    </interactant>
    <organismsDiffer>false</organismsDiffer>
    <experiments>3</experiments>
</comment>
<comment type="interaction">
    <interactant intactId="EBI-476295">
        <id>P31947</id>
    </interactant>
    <interactant intactId="EBI-465633">
        <id>O60333</id>
        <label>KIF1B</label>
    </interactant>
    <organismsDiffer>false</organismsDiffer>
    <experiments>4</experiments>
</comment>
<comment type="interaction">
    <interactant intactId="EBI-476295">
        <id>P31947</id>
    </interactant>
    <interactant intactId="EBI-306852">
        <id>Q02241</id>
        <label>KIF23</label>
    </interactant>
    <organismsDiffer>false</organismsDiffer>
    <experiments>4</experiments>
</comment>
<comment type="interaction">
    <interactant intactId="EBI-476295">
        <id>P31947</id>
    </interactant>
    <interactant intactId="EBI-726994">
        <id>Q9H0B6</id>
        <label>KLC2</label>
    </interactant>
    <organismsDiffer>false</organismsDiffer>
    <experiments>5</experiments>
</comment>
<comment type="interaction">
    <interactant intactId="EBI-476295">
        <id>P31947</id>
    </interactant>
    <interactant intactId="EBI-949319">
        <id>Q9NSK0</id>
        <label>KLC4</label>
    </interactant>
    <organismsDiffer>false</organismsDiffer>
    <experiments>4</experiments>
</comment>
<comment type="interaction">
    <interactant intactId="EBI-476295">
        <id>P31947</id>
    </interactant>
    <interactant intactId="EBI-1052114">
        <id>Q6PKG0</id>
        <label>LARP1</label>
    </interactant>
    <organismsDiffer>false</organismsDiffer>
    <experiments>4</experiments>
</comment>
<comment type="interaction">
    <interactant intactId="EBI-476295">
        <id>P31947</id>
    </interactant>
    <interactant intactId="EBI-2341787">
        <id>Q17RB8</id>
        <label>LONRF1</label>
    </interactant>
    <organismsDiffer>false</organismsDiffer>
    <experiments>3</experiments>
</comment>
<comment type="interaction">
    <interactant intactId="EBI-476295">
        <id>P31947</id>
    </interactant>
    <interactant intactId="EBI-5323863">
        <id>Q5S007</id>
        <label>LRRK2</label>
    </interactant>
    <organismsDiffer>false</organismsDiffer>
    <experiments>5</experiments>
</comment>
<comment type="interaction">
    <interactant intactId="EBI-476295">
        <id>P31947</id>
    </interactant>
    <interactant intactId="EBI-350467">
        <id>Q86V48</id>
        <label>LUZP1</label>
    </interactant>
    <organismsDiffer>false</organismsDiffer>
    <experiments>4</experiments>
</comment>
<comment type="interaction">
    <interactant intactId="EBI-476295">
        <id>P31947</id>
    </interactant>
    <interactant intactId="EBI-740978">
        <id>P43355</id>
        <label>MAGEA1</label>
    </interactant>
    <organismsDiffer>false</organismsDiffer>
    <experiments>3</experiments>
</comment>
<comment type="interaction">
    <interactant intactId="EBI-476295">
        <id>P31947</id>
    </interactant>
    <interactant intactId="EBI-357393">
        <id>Q9Y2U5</id>
        <label>MAP3K2</label>
    </interactant>
    <organismsDiffer>false</organismsDiffer>
    <experiments>3</experiments>
</comment>
<comment type="interaction">
    <interactant intactId="EBI-476295">
        <id>P31947</id>
    </interactant>
    <interactant intactId="EBI-602273">
        <id>Q9NYL2</id>
        <label>MAP3K20</label>
    </interactant>
    <organismsDiffer>false</organismsDiffer>
    <experiments>4</experiments>
</comment>
<comment type="interaction">
    <interactant intactId="EBI-476295">
        <id>P31947</id>
    </interactant>
    <interactant intactId="EBI-1254761">
        <id>O95382</id>
        <label>MAP3K6</label>
    </interactant>
    <organismsDiffer>false</organismsDiffer>
    <experiments>2</experiments>
</comment>
<comment type="interaction">
    <interactant intactId="EBI-476295">
        <id>P31947</id>
    </interactant>
    <interactant intactId="EBI-7796412">
        <id>P10636-2</id>
        <label>MAPT</label>
    </interactant>
    <organismsDiffer>false</organismsDiffer>
    <experiments>2</experiments>
</comment>
<comment type="interaction">
    <interactant intactId="EBI-476295">
        <id>P31947</id>
    </interactant>
    <interactant intactId="EBI-707595">
        <id>P27448</id>
        <label>MARK3</label>
    </interactant>
    <organismsDiffer>false</organismsDiffer>
    <experiments>5</experiments>
</comment>
<comment type="interaction">
    <interactant intactId="EBI-476295">
        <id>P31947</id>
    </interactant>
    <interactant intactId="EBI-398437">
        <id>O15151</id>
        <label>MDM4</label>
    </interactant>
    <organismsDiffer>false</organismsDiffer>
    <experiments>2</experiments>
</comment>
<comment type="interaction">
    <interactant intactId="EBI-476295">
        <id>P31947</id>
    </interactant>
    <interactant intactId="EBI-2133481">
        <id>Q8N4C8</id>
        <label>MINK1</label>
    </interactant>
    <organismsDiffer>false</organismsDiffer>
    <experiments>3</experiments>
</comment>
<comment type="interaction">
    <interactant intactId="EBI-476295">
        <id>P31947</id>
    </interactant>
    <interactant intactId="EBI-2340269">
        <id>Q13064</id>
        <label>MKRN3</label>
    </interactant>
    <organismsDiffer>false</organismsDiffer>
    <experiments>3</experiments>
</comment>
<comment type="interaction">
    <interactant intactId="EBI-476295">
        <id>P31947</id>
    </interactant>
    <interactant intactId="EBI-1022605">
        <id>Q6WCQ1</id>
        <label>MPRIP</label>
    </interactant>
    <organismsDiffer>false</organismsDiffer>
    <experiments>3</experiments>
</comment>
<comment type="interaction">
    <interactant intactId="EBI-476295">
        <id>P31947</id>
    </interactant>
    <interactant intactId="EBI-1043774">
        <id>O75592</id>
        <label>MYCBP2</label>
    </interactant>
    <organismsDiffer>false</organismsDiffer>
    <experiments>4</experiments>
</comment>
<comment type="interaction">
    <interactant intactId="EBI-476295">
        <id>P31947</id>
    </interactant>
    <interactant intactId="EBI-308358">
        <id>Q8NEY1</id>
        <label>NAV1</label>
    </interactant>
    <organismsDiffer>false</organismsDiffer>
    <experiments>4</experiments>
</comment>
<comment type="interaction">
    <interactant intactId="EBI-476295">
        <id>P31947</id>
    </interactant>
    <interactant intactId="EBI-741158">
        <id>Q96HA8</id>
        <label>NTAQ1</label>
    </interactant>
    <organismsDiffer>false</organismsDiffer>
    <experiments>4</experiments>
</comment>
<comment type="interaction">
    <interactant intactId="EBI-476295">
        <id>P31947</id>
    </interactant>
    <interactant intactId="EBI-3936704">
        <id>Q16288</id>
        <label>NTRK3</label>
    </interactant>
    <organismsDiffer>false</organismsDiffer>
    <experiments>2</experiments>
</comment>
<comment type="interaction">
    <interactant intactId="EBI-476295">
        <id>P31947</id>
    </interactant>
    <interactant intactId="EBI-1181722">
        <id>Q9H093</id>
        <label>NUAK2</label>
    </interactant>
    <organismsDiffer>false</organismsDiffer>
    <experiments>2</experiments>
</comment>
<comment type="interaction">
    <interactant intactId="EBI-476295">
        <id>P31947</id>
    </interactant>
    <interactant intactId="EBI-713738">
        <id>O96013</id>
        <label>PAK4</label>
    </interactant>
    <organismsDiffer>false</organismsDiffer>
    <experiments>5</experiments>
</comment>
<comment type="interaction">
    <interactant intactId="EBI-476295">
        <id>P31947</id>
    </interactant>
    <interactant intactId="EBI-81968">
        <id>Q8TEW0</id>
        <label>PARD3</label>
    </interactant>
    <organismsDiffer>false</organismsDiffer>
    <experiments>4</experiments>
</comment>
<comment type="interaction">
    <interactant intactId="EBI-476295">
        <id>P31947</id>
    </interactant>
    <interactant intactId="EBI-12111000">
        <id>P55771</id>
        <label>PAX9</label>
    </interactant>
    <organismsDiffer>false</organismsDiffer>
    <experiments>3</experiments>
</comment>
<comment type="interaction">
    <interactant intactId="EBI-476295">
        <id>P31947</id>
    </interactant>
    <interactant intactId="EBI-2861522">
        <id>P16234</id>
        <label>PDGFRA</label>
    </interactant>
    <organismsDiffer>false</organismsDiffer>
    <experiments>2</experiments>
</comment>
<comment type="interaction">
    <interactant intactId="EBI-476295">
        <id>P31947</id>
    </interactant>
    <interactant intactId="EBI-641107">
        <id>O00750</id>
        <label>PIK3C2B</label>
    </interactant>
    <organismsDiffer>false</organismsDiffer>
    <experiments>4</experiments>
</comment>
<comment type="interaction">
    <interactant intactId="EBI-476295">
        <id>P31947</id>
    </interactant>
    <interactant intactId="EBI-702235">
        <id>Q99959</id>
        <label>PKP2</label>
    </interactant>
    <organismsDiffer>false</organismsDiffer>
    <experiments>5</experiments>
</comment>
<comment type="interaction">
    <interactant intactId="EBI-476295">
        <id>P31947</id>
    </interactant>
    <interactant intactId="EBI-2125301">
        <id>Q6IQ23</id>
        <label>PLEKHA7</label>
    </interactant>
    <organismsDiffer>false</organismsDiffer>
    <experiments>4</experiments>
</comment>
<comment type="interaction">
    <interactant intactId="EBI-476295">
        <id>P31947</id>
    </interactant>
    <interactant intactId="EBI-746202">
        <id>O00444</id>
        <label>PLK4</label>
    </interactant>
    <organismsDiffer>false</organismsDiffer>
    <experiments>3</experiments>
</comment>
<comment type="interaction">
    <interactant intactId="EBI-476295">
        <id>P31947</id>
    </interactant>
    <interactant intactId="EBI-1045582">
        <id>Q86W92</id>
        <label>PPFIBP1</label>
    </interactant>
    <organismsDiffer>false</organismsDiffer>
    <experiments>4</experiments>
</comment>
<comment type="interaction">
    <interactant intactId="EBI-476295">
        <id>P31947</id>
    </interactant>
    <interactant intactId="EBI-719420">
        <id>Q86YV5</id>
        <label>PRAG1</label>
    </interactant>
    <organismsDiffer>false</organismsDiffer>
    <experiments>2</experiments>
</comment>
<comment type="interaction">
    <interactant intactId="EBI-476295">
        <id>P31947</id>
    </interactant>
    <interactant intactId="EBI-706254">
        <id>Q02156</id>
        <label>PRKCE</label>
    </interactant>
    <organismsDiffer>false</organismsDiffer>
    <experiments>2</experiments>
</comment>
<comment type="interaction">
    <interactant intactId="EBI-476295">
        <id>P31947</id>
    </interactant>
    <interactant intactId="EBI-948453">
        <id>Q14671</id>
        <label>PUM1</label>
    </interactant>
    <organismsDiffer>false</organismsDiffer>
    <experiments>4</experiments>
</comment>
<comment type="interaction">
    <interactant intactId="EBI-476295">
        <id>P31947</id>
    </interactant>
    <interactant intactId="EBI-747844">
        <id>Q96QF0</id>
        <label>RAB3IP</label>
    </interactant>
    <organismsDiffer>false</organismsDiffer>
    <experiments>3</experiments>
</comment>
<comment type="interaction">
    <interactant intactId="EBI-476295">
        <id>P31947</id>
    </interactant>
    <interactant intactId="EBI-365996">
        <id>P04049</id>
        <label>RAF1</label>
    </interactant>
    <organismsDiffer>false</organismsDiffer>
    <experiments>9</experiments>
</comment>
<comment type="interaction">
    <interactant intactId="EBI-476295">
        <id>P31947</id>
    </interactant>
    <interactant intactId="EBI-1050841">
        <id>Q86X27</id>
        <label>RALGPS2</label>
    </interactant>
    <organismsDiffer>false</organismsDiffer>
    <experiments>2</experiments>
</comment>
<comment type="interaction">
    <interactant intactId="EBI-476295">
        <id>P31947</id>
    </interactant>
    <interactant intactId="EBI-7545786">
        <id>Q6NUK4</id>
        <label>REEP3</label>
    </interactant>
    <organismsDiffer>false</organismsDiffer>
    <experiments>2</experiments>
</comment>
<comment type="interaction">
    <interactant intactId="EBI-476295">
        <id>P31947</id>
    </interactant>
    <interactant intactId="EBI-7545592">
        <id>Q9H6H4</id>
        <label>REEP4</label>
    </interactant>
    <organismsDiffer>false</organismsDiffer>
    <experiments>4</experiments>
</comment>
<comment type="interaction">
    <interactant intactId="EBI-476295">
        <id>P31947</id>
    </interactant>
    <interactant intactId="EBI-7067016">
        <id>Q8NFH8</id>
        <label>REPS2</label>
    </interactant>
    <organismsDiffer>false</organismsDiffer>
    <experiments>2</experiments>
</comment>
<comment type="interaction">
    <interactant intactId="EBI-476295">
        <id>P31947</id>
    </interactant>
    <interactant intactId="EBI-1387196">
        <id>Q6R327</id>
        <label>RICTOR</label>
    </interactant>
    <organismsDiffer>false</organismsDiffer>
    <experiments>4</experiments>
</comment>
<comment type="interaction">
    <interactant intactId="EBI-476295">
        <id>P31947</id>
    </interactant>
    <interactant intactId="EBI-1047497">
        <id>Q9UPU9</id>
        <label>SAMD4A</label>
    </interactant>
    <organismsDiffer>false</organismsDiffer>
    <experiments>4</experiments>
</comment>
<comment type="interaction">
    <interactant intactId="EBI-476295">
        <id>P31947</id>
    </interactant>
    <interactant intactId="EBI-1761310">
        <id>O94885</id>
        <label>SASH1</label>
    </interactant>
    <organismsDiffer>false</organismsDiffer>
    <experiments>4</experiments>
</comment>
<comment type="interaction">
    <interactant intactId="EBI-476295">
        <id>P31947</id>
    </interactant>
    <interactant intactId="EBI-476295">
        <id>P31947</id>
        <label>SFN</label>
    </interactant>
    <organismsDiffer>false</organismsDiffer>
    <experiments>5</experiments>
</comment>
<comment type="interaction">
    <interactant intactId="EBI-476295">
        <id>P31947</id>
    </interactant>
    <interactant intactId="EBI-311339">
        <id>Q7Z6J0</id>
        <label>SH3RF1</label>
    </interactant>
    <organismsDiffer>false</organismsDiffer>
    <experiments>2</experiments>
</comment>
<comment type="interaction">
    <interactant intactId="EBI-476295">
        <id>P31947</id>
    </interactant>
    <interactant intactId="EBI-310678">
        <id>O43166</id>
        <label>SIPA1L1</label>
    </interactant>
    <organismsDiffer>false</organismsDiffer>
    <experiments>3</experiments>
</comment>
<comment type="interaction">
    <interactant intactId="EBI-476295">
        <id>P31947</id>
    </interactant>
    <interactant intactId="EBI-2559690">
        <id>O60292</id>
        <label>SIPA1L3</label>
    </interactant>
    <organismsDiffer>false</organismsDiffer>
    <experiments>4</experiments>
</comment>
<comment type="interaction">
    <interactant intactId="EBI-476295">
        <id>P31947</id>
    </interactant>
    <interactant intactId="EBI-311323">
        <id>O94875</id>
        <label>SORBS2</label>
    </interactant>
    <organismsDiffer>false</organismsDiffer>
    <experiments>4</experiments>
</comment>
<comment type="interaction">
    <interactant intactId="EBI-476295">
        <id>P31947</id>
    </interactant>
    <interactant intactId="EBI-353655">
        <id>O75494</id>
        <label>SRSF10</label>
    </interactant>
    <organismsDiffer>false</organismsDiffer>
    <experiments>3</experiments>
</comment>
<comment type="interaction">
    <interactant intactId="EBI-476295">
        <id>P31947</id>
    </interactant>
    <interactant intactId="EBI-522028">
        <id>O60343</id>
        <label>TBC1D4</label>
    </interactant>
    <organismsDiffer>false</organismsDiffer>
    <experiments>4</experiments>
</comment>
<comment type="interaction">
    <interactant intactId="EBI-476295">
        <id>P31947</id>
    </interactant>
    <interactant intactId="EBI-1383444">
        <id>Q13470</id>
        <label>TNK1</label>
    </interactant>
    <organismsDiffer>false</organismsDiffer>
    <experiments>3</experiments>
</comment>
<comment type="interaction">
    <interactant intactId="EBI-476295">
        <id>P31947</id>
    </interactant>
    <interactant intactId="EBI-366083">
        <id>P04637</id>
        <label>TP53</label>
    </interactant>
    <organismsDiffer>false</organismsDiffer>
    <experiments>5</experiments>
</comment>
<comment type="interaction">
    <interactant intactId="EBI-476295">
        <id>P31947</id>
    </interactant>
    <interactant intactId="EBI-1050865">
        <id>P40818</id>
        <label>USP8</label>
    </interactant>
    <organismsDiffer>false</organismsDiffer>
    <experiments>5</experiments>
</comment>
<comment type="interaction">
    <interactant intactId="EBI-476295">
        <id>P31947</id>
    </interactant>
    <interactant intactId="EBI-714790">
        <id>O43379</id>
        <label>WDR62</label>
    </interactant>
    <organismsDiffer>false</organismsDiffer>
    <experiments>4</experiments>
</comment>
<comment type="interaction">
    <interactant intactId="EBI-476295">
        <id>P31947</id>
    </interactant>
    <interactant intactId="EBI-914695">
        <id>P30291</id>
        <label>WEE1</label>
    </interactant>
    <organismsDiffer>false</organismsDiffer>
    <experiments>5</experiments>
</comment>
<comment type="interaction">
    <interactant intactId="EBI-476295">
        <id>P31947</id>
    </interactant>
    <interactant intactId="EBI-457907">
        <id>Q9H4A3</id>
        <label>WNK1</label>
    </interactant>
    <organismsDiffer>false</organismsDiffer>
    <experiments>4</experiments>
</comment>
<comment type="interaction">
    <interactant intactId="EBI-476295">
        <id>P31947</id>
    </interactant>
    <interactant intactId="EBI-356498">
        <id>P62258</id>
        <label>YWHAE</label>
    </interactant>
    <organismsDiffer>false</organismsDiffer>
    <experiments>5</experiments>
</comment>
<comment type="interaction">
    <interactant intactId="EBI-476295">
        <id>P31947</id>
    </interactant>
    <interactant intactId="EBI-359832">
        <id>P61981</id>
        <label>YWHAG</label>
    </interactant>
    <organismsDiffer>false</organismsDiffer>
    <experiments>4</experiments>
</comment>
<comment type="interaction">
    <interactant intactId="EBI-476295">
        <id>P31947</id>
    </interactant>
    <interactant intactId="EBI-347088">
        <id>P63104</id>
        <label>YWHAZ</label>
    </interactant>
    <organismsDiffer>false</organismsDiffer>
    <experiments>8</experiments>
</comment>
<comment type="interaction">
    <interactant intactId="EBI-476295">
        <id>P31947</id>
    </interactant>
    <interactant intactId="EBI-740767">
        <id>Q53FD0</id>
        <label>ZC2HC1C</label>
    </interactant>
    <organismsDiffer>false</organismsDiffer>
    <experiments>3</experiments>
</comment>
<comment type="interaction">
    <interactant intactId="EBI-476295">
        <id>P31947</id>
    </interactant>
    <interactant intactId="EBI-1644149">
        <id>P47974</id>
        <label>ZFP36L2</label>
    </interactant>
    <organismsDiffer>false</organismsDiffer>
    <experiments>4</experiments>
</comment>
<comment type="subcellular location">
    <subcellularLocation>
        <location evidence="12 17">Cytoplasm</location>
    </subcellularLocation>
    <subcellularLocation>
        <location evidence="1">Nucleus</location>
    </subcellularLocation>
    <subcellularLocation>
        <location evidence="25">Secreted</location>
    </subcellularLocation>
    <text evidence="25">May be secreted by a non-classical secretory pathway.</text>
</comment>
<comment type="alternative products">
    <event type="alternative splicing"/>
    <isoform>
        <id>P31947-1</id>
        <name>1</name>
        <sequence type="displayed"/>
    </isoform>
    <isoform>
        <id>P31947-2</id>
        <name>2</name>
        <sequence type="described" ref="VSP_021768"/>
    </isoform>
</comment>
<comment type="tissue specificity">
    <text evidence="2">Present mainly in tissues enriched in stratified squamous keratinizing epithelium.</text>
</comment>
<comment type="PTM">
    <text evidence="5">Ubiquitinated. Ubiquitination by RFFL induces proteasomal degradation and indirectly regulates p53/TP53 activation.</text>
</comment>
<comment type="similarity">
    <text evidence="24">Belongs to the 14-3-3 family.</text>
</comment>
<proteinExistence type="evidence at protein level"/>
<feature type="chain" id="PRO_0000058643" description="14-3-3 protein sigma">
    <location>
        <begin position="1"/>
        <end position="248"/>
    </location>
</feature>
<feature type="site" description="Interaction with phosphoserine on interacting protein">
    <location>
        <position position="56"/>
    </location>
</feature>
<feature type="site" description="Interaction with phosphoserine on interacting protein">
    <location>
        <position position="129"/>
    </location>
</feature>
<feature type="modified residue" description="Phosphoserine" evidence="33">
    <location>
        <position position="5"/>
    </location>
</feature>
<feature type="modified residue" description="Phosphoserine" evidence="34">
    <location>
        <position position="74"/>
    </location>
</feature>
<feature type="modified residue" description="Phosphoserine" evidence="30 31 32 33">
    <location>
        <position position="248"/>
    </location>
</feature>
<feature type="splice variant" id="VSP_021768" description="In isoform 2." evidence="20">
    <location>
        <begin position="85"/>
        <end position="116"/>
    </location>
</feature>
<feature type="sequence variant" id="VAR_048095" description="In dbSNP:rs11542705.">
    <original>M</original>
    <variation>I</variation>
    <location>
        <position position="155"/>
    </location>
</feature>
<feature type="sequence conflict" description="In Ref. 4; CAG46703." evidence="24" ref="4">
    <original>K</original>
    <variation>M</variation>
    <location>
        <position position="77"/>
    </location>
</feature>
<feature type="sequence conflict" description="In Ref. 2; AAA59546." evidence="24" ref="2">
    <original>Y</original>
    <variation>H</variation>
    <location>
        <position position="120"/>
    </location>
</feature>
<feature type="sequence conflict" description="In Ref. 2; AAA59546." evidence="24" ref="2">
    <original>A</original>
    <variation>V</variation>
    <location>
        <position position="242"/>
    </location>
</feature>
<feature type="helix" evidence="35">
    <location>
        <begin position="3"/>
        <end position="15"/>
    </location>
</feature>
<feature type="helix" evidence="35">
    <location>
        <begin position="19"/>
        <end position="31"/>
    </location>
</feature>
<feature type="helix" evidence="35">
    <location>
        <begin position="38"/>
        <end position="69"/>
    </location>
</feature>
<feature type="strand" evidence="37">
    <location>
        <begin position="71"/>
        <end position="73"/>
    </location>
</feature>
<feature type="helix" evidence="35">
    <location>
        <begin position="80"/>
        <end position="104"/>
    </location>
</feature>
<feature type="helix" evidence="35">
    <location>
        <begin position="107"/>
        <end position="110"/>
    </location>
</feature>
<feature type="helix" evidence="35">
    <location>
        <begin position="114"/>
        <end position="134"/>
    </location>
</feature>
<feature type="helix" evidence="36">
    <location>
        <begin position="137"/>
        <end position="139"/>
    </location>
</feature>
<feature type="helix" evidence="35">
    <location>
        <begin position="140"/>
        <end position="161"/>
    </location>
</feature>
<feature type="helix" evidence="35">
    <location>
        <begin position="167"/>
        <end position="182"/>
    </location>
</feature>
<feature type="helix" evidence="35">
    <location>
        <begin position="187"/>
        <end position="204"/>
    </location>
</feature>
<feature type="helix" evidence="35">
    <location>
        <begin position="205"/>
        <end position="207"/>
    </location>
</feature>
<feature type="helix" evidence="35">
    <location>
        <begin position="210"/>
        <end position="230"/>
    </location>
</feature>
<dbReference type="EMBL" id="M93010">
    <property type="protein sequence ID" value="AAA59546.1"/>
    <property type="molecule type" value="mRNA"/>
</dbReference>
<dbReference type="EMBL" id="X57348">
    <property type="protein sequence ID" value="CAA40623.1"/>
    <property type="molecule type" value="mRNA"/>
</dbReference>
<dbReference type="EMBL" id="AF029081">
    <property type="protein sequence ID" value="AAC52029.1"/>
    <property type="molecule type" value="Genomic_DNA"/>
</dbReference>
<dbReference type="EMBL" id="AF029082">
    <property type="protein sequence ID" value="AAC52030.1"/>
    <property type="molecule type" value="mRNA"/>
</dbReference>
<dbReference type="EMBL" id="CR541905">
    <property type="protein sequence ID" value="CAG46703.1"/>
    <property type="molecule type" value="mRNA"/>
</dbReference>
<dbReference type="EMBL" id="CR541926">
    <property type="protein sequence ID" value="CAG46724.1"/>
    <property type="molecule type" value="mRNA"/>
</dbReference>
<dbReference type="EMBL" id="AL034380">
    <property type="status" value="NOT_ANNOTATED_CDS"/>
    <property type="molecule type" value="Genomic_DNA"/>
</dbReference>
<dbReference type="EMBL" id="BC000329">
    <property type="protein sequence ID" value="AAH00329.1"/>
    <property type="molecule type" value="mRNA"/>
</dbReference>
<dbReference type="EMBL" id="BC000995">
    <property type="protein sequence ID" value="AAH00995.1"/>
    <property type="molecule type" value="mRNA"/>
</dbReference>
<dbReference type="EMBL" id="BC001550">
    <property type="protein sequence ID" value="AAH01550.1"/>
    <property type="molecule type" value="mRNA"/>
</dbReference>
<dbReference type="EMBL" id="BC002995">
    <property type="protein sequence ID" value="AAH02995.1"/>
    <property type="molecule type" value="mRNA"/>
</dbReference>
<dbReference type="EMBL" id="BC023552">
    <property type="protein sequence ID" value="AAH23552.1"/>
    <property type="molecule type" value="mRNA"/>
</dbReference>
<dbReference type="CCDS" id="CCDS288.1">
    <molecule id="P31947-1"/>
</dbReference>
<dbReference type="PIR" id="S34753">
    <property type="entry name" value="S34753"/>
</dbReference>
<dbReference type="PIR" id="S38956">
    <property type="entry name" value="S38956"/>
</dbReference>
<dbReference type="RefSeq" id="NP_006133.1">
    <molecule id="P31947-1"/>
    <property type="nucleotide sequence ID" value="NM_006142.5"/>
</dbReference>
<dbReference type="PDB" id="1YWT">
    <property type="method" value="X-ray"/>
    <property type="resolution" value="2.40 A"/>
    <property type="chains" value="A/B=1-248"/>
</dbReference>
<dbReference type="PDB" id="1YZ5">
    <property type="method" value="X-ray"/>
    <property type="resolution" value="2.80 A"/>
    <property type="chains" value="A/B=1-248"/>
</dbReference>
<dbReference type="PDB" id="3IQJ">
    <property type="method" value="X-ray"/>
    <property type="resolution" value="1.15 A"/>
    <property type="chains" value="A=1-231"/>
</dbReference>
<dbReference type="PDB" id="3IQU">
    <property type="method" value="X-ray"/>
    <property type="resolution" value="1.05 A"/>
    <property type="chains" value="A=1-231"/>
</dbReference>
<dbReference type="PDB" id="3IQV">
    <property type="method" value="X-ray"/>
    <property type="resolution" value="1.20 A"/>
    <property type="chains" value="A=1-231"/>
</dbReference>
<dbReference type="PDB" id="3LW1">
    <property type="method" value="X-ray"/>
    <property type="resolution" value="1.28 A"/>
    <property type="chains" value="A=1-248"/>
</dbReference>
<dbReference type="PDB" id="3MHR">
    <property type="method" value="X-ray"/>
    <property type="resolution" value="1.15 A"/>
    <property type="chains" value="A=1-231"/>
</dbReference>
<dbReference type="PDB" id="3O8I">
    <property type="method" value="X-ray"/>
    <property type="resolution" value="2.00 A"/>
    <property type="chains" value="A=1-231"/>
</dbReference>
<dbReference type="PDB" id="3P1N">
    <property type="method" value="X-ray"/>
    <property type="resolution" value="1.40 A"/>
    <property type="chains" value="A=1-231"/>
</dbReference>
<dbReference type="PDB" id="3P1O">
    <property type="method" value="X-ray"/>
    <property type="resolution" value="1.90 A"/>
    <property type="chains" value="A=1-231"/>
</dbReference>
<dbReference type="PDB" id="3P1P">
    <property type="method" value="X-ray"/>
    <property type="resolution" value="1.95 A"/>
    <property type="chains" value="A=1-231"/>
</dbReference>
<dbReference type="PDB" id="3P1Q">
    <property type="method" value="X-ray"/>
    <property type="resolution" value="1.70 A"/>
    <property type="chains" value="A=1-231"/>
</dbReference>
<dbReference type="PDB" id="3P1R">
    <property type="method" value="X-ray"/>
    <property type="resolution" value="1.70 A"/>
    <property type="chains" value="A=1-231"/>
</dbReference>
<dbReference type="PDB" id="3P1S">
    <property type="method" value="X-ray"/>
    <property type="resolution" value="1.65 A"/>
    <property type="chains" value="A=1-231"/>
</dbReference>
<dbReference type="PDB" id="3SMK">
    <property type="method" value="X-ray"/>
    <property type="resolution" value="2.10 A"/>
    <property type="chains" value="A=1-231"/>
</dbReference>
<dbReference type="PDB" id="3SML">
    <property type="method" value="X-ray"/>
    <property type="resolution" value="1.90 A"/>
    <property type="chains" value="A=1-231"/>
</dbReference>
<dbReference type="PDB" id="3SMM">
    <property type="method" value="X-ray"/>
    <property type="resolution" value="2.00 A"/>
    <property type="chains" value="A=1-231"/>
</dbReference>
<dbReference type="PDB" id="3SMN">
    <property type="method" value="X-ray"/>
    <property type="resolution" value="2.00 A"/>
    <property type="chains" value="A=1-231"/>
</dbReference>
<dbReference type="PDB" id="3SMO">
    <property type="method" value="X-ray"/>
    <property type="resolution" value="1.80 A"/>
    <property type="chains" value="A=1-231"/>
</dbReference>
<dbReference type="PDB" id="3SP5">
    <property type="method" value="X-ray"/>
    <property type="resolution" value="1.80 A"/>
    <property type="chains" value="A=1-231"/>
</dbReference>
<dbReference type="PDB" id="3SPR">
    <property type="method" value="X-ray"/>
    <property type="resolution" value="1.99 A"/>
    <property type="chains" value="A=1-231"/>
</dbReference>
<dbReference type="PDB" id="3T0L">
    <property type="method" value="X-ray"/>
    <property type="resolution" value="1.60 A"/>
    <property type="chains" value="A=1-231"/>
</dbReference>
<dbReference type="PDB" id="3T0M">
    <property type="method" value="X-ray"/>
    <property type="resolution" value="1.62 A"/>
    <property type="chains" value="A=1-231"/>
</dbReference>
<dbReference type="PDB" id="3U9X">
    <property type="method" value="X-ray"/>
    <property type="resolution" value="1.80 A"/>
    <property type="chains" value="A=1-231"/>
</dbReference>
<dbReference type="PDB" id="3UX0">
    <property type="method" value="X-ray"/>
    <property type="resolution" value="1.75 A"/>
    <property type="chains" value="A=1-231"/>
</dbReference>
<dbReference type="PDB" id="4DAT">
    <property type="method" value="X-ray"/>
    <property type="resolution" value="1.40 A"/>
    <property type="chains" value="A=1-231"/>
</dbReference>
<dbReference type="PDB" id="4DAU">
    <property type="method" value="X-ray"/>
    <property type="resolution" value="2.00 A"/>
    <property type="chains" value="A=1-231"/>
</dbReference>
<dbReference type="PDB" id="4DHM">
    <property type="method" value="X-ray"/>
    <property type="resolution" value="1.70 A"/>
    <property type="chains" value="A=1-231"/>
</dbReference>
<dbReference type="PDB" id="4DHN">
    <property type="method" value="X-ray"/>
    <property type="resolution" value="1.80 A"/>
    <property type="chains" value="A=1-231"/>
</dbReference>
<dbReference type="PDB" id="4DHO">
    <property type="method" value="X-ray"/>
    <property type="resolution" value="1.70 A"/>
    <property type="chains" value="A=1-231"/>
</dbReference>
<dbReference type="PDB" id="4DHP">
    <property type="method" value="X-ray"/>
    <property type="resolution" value="1.75 A"/>
    <property type="chains" value="A=1-231"/>
</dbReference>
<dbReference type="PDB" id="4DHQ">
    <property type="method" value="X-ray"/>
    <property type="resolution" value="1.75 A"/>
    <property type="chains" value="A=1-231"/>
</dbReference>
<dbReference type="PDB" id="4DHR">
    <property type="method" value="X-ray"/>
    <property type="resolution" value="1.40 A"/>
    <property type="chains" value="A=1-231"/>
</dbReference>
<dbReference type="PDB" id="4DHS">
    <property type="method" value="X-ray"/>
    <property type="resolution" value="1.74 A"/>
    <property type="chains" value="A=1-231"/>
</dbReference>
<dbReference type="PDB" id="4DHT">
    <property type="method" value="X-ray"/>
    <property type="resolution" value="1.80 A"/>
    <property type="chains" value="A=1-231"/>
</dbReference>
<dbReference type="PDB" id="4DHU">
    <property type="method" value="X-ray"/>
    <property type="resolution" value="1.67 A"/>
    <property type="chains" value="A=1-231"/>
</dbReference>
<dbReference type="PDB" id="4FL5">
    <property type="method" value="X-ray"/>
    <property type="resolution" value="1.90 A"/>
    <property type="chains" value="A/B=1-231"/>
</dbReference>
<dbReference type="PDB" id="4FR3">
    <property type="method" value="X-ray"/>
    <property type="resolution" value="1.90 A"/>
    <property type="chains" value="A=1-231"/>
</dbReference>
<dbReference type="PDB" id="4IEA">
    <property type="method" value="X-ray"/>
    <property type="resolution" value="1.70 A"/>
    <property type="chains" value="A=1-231"/>
</dbReference>
<dbReference type="PDB" id="4JC3">
    <property type="method" value="X-ray"/>
    <property type="resolution" value="2.05 A"/>
    <property type="chains" value="A=1-231"/>
</dbReference>
<dbReference type="PDB" id="4JDD">
    <property type="method" value="X-ray"/>
    <property type="resolution" value="2.10 A"/>
    <property type="chains" value="A=1-231"/>
</dbReference>
<dbReference type="PDB" id="4QLI">
    <property type="method" value="X-ray"/>
    <property type="resolution" value="1.45 A"/>
    <property type="chains" value="A=1-231"/>
</dbReference>
<dbReference type="PDB" id="4Y32">
    <property type="method" value="X-ray"/>
    <property type="resolution" value="1.70 A"/>
    <property type="chains" value="A/B=1-231"/>
</dbReference>
<dbReference type="PDB" id="4Y3B">
    <property type="method" value="X-ray"/>
    <property type="resolution" value="1.80 A"/>
    <property type="chains" value="A/B=1-231"/>
</dbReference>
<dbReference type="PDB" id="4Y5I">
    <property type="method" value="X-ray"/>
    <property type="resolution" value="1.40 A"/>
    <property type="chains" value="A/B=1-231"/>
</dbReference>
<dbReference type="PDB" id="5BTV">
    <property type="method" value="X-ray"/>
    <property type="resolution" value="1.70 A"/>
    <property type="chains" value="A=1-231"/>
</dbReference>
<dbReference type="PDB" id="5HF3">
    <property type="method" value="X-ray"/>
    <property type="resolution" value="1.80 A"/>
    <property type="chains" value="A=1-231"/>
</dbReference>
<dbReference type="PDB" id="5LTW">
    <property type="method" value="X-ray"/>
    <property type="resolution" value="4.50 A"/>
    <property type="chains" value="A/B/E/F/I/J=1-231"/>
</dbReference>
<dbReference type="PDB" id="5LU1">
    <property type="method" value="X-ray"/>
    <property type="resolution" value="2.40 A"/>
    <property type="chains" value="A/B/E/F=1-231"/>
</dbReference>
<dbReference type="PDB" id="5LU2">
    <property type="method" value="X-ray"/>
    <property type="resolution" value="2.50 A"/>
    <property type="chains" value="A/B=1-231"/>
</dbReference>
<dbReference type="PDB" id="5MHC">
    <property type="method" value="X-ray"/>
    <property type="resolution" value="1.20 A"/>
    <property type="chains" value="A=1-231"/>
</dbReference>
<dbReference type="PDB" id="5MOC">
    <property type="method" value="X-ray"/>
    <property type="resolution" value="1.80 A"/>
    <property type="chains" value="A=1-231"/>
</dbReference>
<dbReference type="PDB" id="5MXO">
    <property type="method" value="X-ray"/>
    <property type="resolution" value="1.20 A"/>
    <property type="chains" value="A=1-231"/>
</dbReference>
<dbReference type="PDB" id="5MY9">
    <property type="method" value="X-ray"/>
    <property type="resolution" value="1.33 A"/>
    <property type="chains" value="A=1-231"/>
</dbReference>
<dbReference type="PDB" id="5MYC">
    <property type="method" value="X-ray"/>
    <property type="resolution" value="1.46 A"/>
    <property type="chains" value="A=1-231"/>
</dbReference>
<dbReference type="PDB" id="5N5R">
    <property type="method" value="X-ray"/>
    <property type="resolution" value="1.80 A"/>
    <property type="chains" value="A=1-231"/>
</dbReference>
<dbReference type="PDB" id="5N5T">
    <property type="method" value="X-ray"/>
    <property type="resolution" value="1.80 A"/>
    <property type="chains" value="A=1-231"/>
</dbReference>
<dbReference type="PDB" id="5N5W">
    <property type="method" value="X-ray"/>
    <property type="resolution" value="1.37 A"/>
    <property type="chains" value="A=1-231"/>
</dbReference>
<dbReference type="PDB" id="5N75">
    <property type="method" value="X-ray"/>
    <property type="resolution" value="1.80 A"/>
    <property type="chains" value="A=1-231"/>
</dbReference>
<dbReference type="PDB" id="5OEG">
    <property type="method" value="X-ray"/>
    <property type="resolution" value="3.15 A"/>
    <property type="chains" value="A=1-231"/>
</dbReference>
<dbReference type="PDB" id="5OEH">
    <property type="method" value="X-ray"/>
    <property type="resolution" value="2.35 A"/>
    <property type="chains" value="A=1-231"/>
</dbReference>
<dbReference type="PDB" id="5OK9">
    <property type="method" value="X-ray"/>
    <property type="resolution" value="2.35 A"/>
    <property type="chains" value="A/B/E/F=1-231"/>
</dbReference>
<dbReference type="PDB" id="5OKF">
    <property type="method" value="X-ray"/>
    <property type="resolution" value="3.20 A"/>
    <property type="chains" value="A/B/C/D=1-231"/>
</dbReference>
<dbReference type="PDB" id="5OM0">
    <property type="method" value="X-ray"/>
    <property type="resolution" value="3.20 A"/>
    <property type="chains" value="A/B=1-231"/>
</dbReference>
<dbReference type="PDB" id="5OMA">
    <property type="method" value="X-ray"/>
    <property type="resolution" value="3.90 A"/>
    <property type="chains" value="A/B/C/D=1-231"/>
</dbReference>
<dbReference type="PDB" id="6FAU">
    <property type="method" value="X-ray"/>
    <property type="resolution" value="1.25 A"/>
    <property type="chains" value="A/C=1-231"/>
</dbReference>
<dbReference type="PDB" id="6FAV">
    <property type="method" value="X-ray"/>
    <property type="resolution" value="1.40 A"/>
    <property type="chains" value="A/C=1-231"/>
</dbReference>
<dbReference type="PDB" id="6FAW">
    <property type="method" value="X-ray"/>
    <property type="resolution" value="1.40 A"/>
    <property type="chains" value="A/C=1-231"/>
</dbReference>
<dbReference type="PDB" id="6FBB">
    <property type="method" value="X-ray"/>
    <property type="resolution" value="1.30 A"/>
    <property type="chains" value="A=1-231"/>
</dbReference>
<dbReference type="PDB" id="6FBW">
    <property type="method" value="X-ray"/>
    <property type="resolution" value="1.45 A"/>
    <property type="chains" value="A/C=1-231"/>
</dbReference>
<dbReference type="PDB" id="6FBY">
    <property type="method" value="X-ray"/>
    <property type="resolution" value="1.50 A"/>
    <property type="chains" value="A/C=1-231"/>
</dbReference>
<dbReference type="PDB" id="6FCP">
    <property type="method" value="X-ray"/>
    <property type="resolution" value="1.45 A"/>
    <property type="chains" value="A=1-231"/>
</dbReference>
<dbReference type="PDB" id="6FI4">
    <property type="method" value="X-ray"/>
    <property type="resolution" value="2.00 A"/>
    <property type="chains" value="A=1-231"/>
</dbReference>
<dbReference type="PDB" id="6FI5">
    <property type="method" value="X-ray"/>
    <property type="resolution" value="1.70 A"/>
    <property type="chains" value="A=1-231"/>
</dbReference>
<dbReference type="PDB" id="6G6X">
    <property type="method" value="X-ray"/>
    <property type="resolution" value="1.13 A"/>
    <property type="chains" value="A=1-231"/>
</dbReference>
<dbReference type="PDB" id="6G8I">
    <property type="method" value="X-ray"/>
    <property type="resolution" value="1.60 A"/>
    <property type="chains" value="A=1-231"/>
</dbReference>
<dbReference type="PDB" id="6G8J">
    <property type="method" value="X-ray"/>
    <property type="resolution" value="1.47 A"/>
    <property type="chains" value="A=1-231"/>
</dbReference>
<dbReference type="PDB" id="6G8K">
    <property type="method" value="X-ray"/>
    <property type="resolution" value="1.25 A"/>
    <property type="chains" value="A=1-231"/>
</dbReference>
<dbReference type="PDB" id="6G8L">
    <property type="method" value="X-ray"/>
    <property type="resolution" value="1.37 A"/>
    <property type="chains" value="A=1-231"/>
</dbReference>
<dbReference type="PDB" id="6G8P">
    <property type="method" value="X-ray"/>
    <property type="resolution" value="1.90 A"/>
    <property type="chains" value="A=1-231"/>
</dbReference>
<dbReference type="PDB" id="6G8Q">
    <property type="method" value="X-ray"/>
    <property type="resolution" value="1.85 A"/>
    <property type="chains" value="A=1-231"/>
</dbReference>
<dbReference type="PDB" id="6GHP">
    <property type="method" value="X-ray"/>
    <property type="resolution" value="1.95 A"/>
    <property type="chains" value="A=1-231"/>
</dbReference>
<dbReference type="PDB" id="6HHP">
    <property type="method" value="X-ray"/>
    <property type="resolution" value="1.80 A"/>
    <property type="chains" value="A=1-231"/>
</dbReference>
<dbReference type="PDB" id="6HKB">
    <property type="method" value="X-ray"/>
    <property type="resolution" value="1.70 A"/>
    <property type="chains" value="A=1-231"/>
</dbReference>
<dbReference type="PDB" id="6HKF">
    <property type="method" value="X-ray"/>
    <property type="resolution" value="1.80 A"/>
    <property type="chains" value="A=1-231"/>
</dbReference>
<dbReference type="PDB" id="6HMT">
    <property type="method" value="X-ray"/>
    <property type="resolution" value="1.10 A"/>
    <property type="chains" value="A=1-231"/>
</dbReference>
<dbReference type="PDB" id="6HMU">
    <property type="method" value="X-ray"/>
    <property type="resolution" value="1.20 A"/>
    <property type="chains" value="A=1-231"/>
</dbReference>
<dbReference type="PDB" id="6HN2">
    <property type="method" value="X-ray"/>
    <property type="resolution" value="1.70 A"/>
    <property type="chains" value="A=1-231"/>
</dbReference>
<dbReference type="PDB" id="6NV2">
    <property type="method" value="X-ray"/>
    <property type="resolution" value="1.13 A"/>
    <property type="chains" value="A=1-231"/>
</dbReference>
<dbReference type="PDB" id="6QDR">
    <property type="method" value="X-ray"/>
    <property type="resolution" value="1.61 A"/>
    <property type="chains" value="A=1-231"/>
</dbReference>
<dbReference type="PDB" id="6QDS">
    <property type="method" value="X-ray"/>
    <property type="resolution" value="1.72 A"/>
    <property type="chains" value="A=1-231"/>
</dbReference>
<dbReference type="PDB" id="6QDT">
    <property type="method" value="X-ray"/>
    <property type="resolution" value="1.70 A"/>
    <property type="chains" value="A=1-231"/>
</dbReference>
<dbReference type="PDB" id="6QDU">
    <property type="method" value="X-ray"/>
    <property type="resolution" value="1.63 A"/>
    <property type="chains" value="A=1-231"/>
</dbReference>
<dbReference type="PDB" id="6QHL">
    <property type="method" value="X-ray"/>
    <property type="resolution" value="1.20 A"/>
    <property type="chains" value="A=1-248"/>
</dbReference>
<dbReference type="PDB" id="6QHM">
    <property type="method" value="X-ray"/>
    <property type="resolution" value="1.25 A"/>
    <property type="chains" value="A=1-248"/>
</dbReference>
<dbReference type="PDB" id="6QIU">
    <property type="method" value="X-ray"/>
    <property type="resolution" value="1.80 A"/>
    <property type="chains" value="A=1-231"/>
</dbReference>
<dbReference type="PDB" id="6QZR">
    <property type="method" value="X-ray"/>
    <property type="resolution" value="2.30 A"/>
    <property type="chains" value="A/B/C/D/E/F/G/H=1-248"/>
</dbReference>
<dbReference type="PDB" id="6QZS">
    <property type="method" value="X-ray"/>
    <property type="resolution" value="1.90 A"/>
    <property type="chains" value="A/B=1-248"/>
</dbReference>
<dbReference type="PDB" id="6R5L">
    <property type="method" value="X-ray"/>
    <property type="resolution" value="1.88 A"/>
    <property type="chains" value="A=1-231"/>
</dbReference>
<dbReference type="PDB" id="6RHC">
    <property type="method" value="X-ray"/>
    <property type="resolution" value="1.20 A"/>
    <property type="chains" value="A=1-231"/>
</dbReference>
<dbReference type="PDB" id="6RJL">
    <property type="method" value="X-ray"/>
    <property type="resolution" value="1.28 A"/>
    <property type="chains" value="A=1-248"/>
</dbReference>
<dbReference type="PDB" id="6RJQ">
    <property type="method" value="X-ray"/>
    <property type="resolution" value="1.89 A"/>
    <property type="chains" value="A=1-248"/>
</dbReference>
<dbReference type="PDB" id="6RJZ">
    <property type="method" value="X-ray"/>
    <property type="resolution" value="1.58 A"/>
    <property type="chains" value="A=1-248"/>
</dbReference>
<dbReference type="PDB" id="6RK8">
    <property type="method" value="X-ray"/>
    <property type="resolution" value="1.60 A"/>
    <property type="chains" value="A=1-248"/>
</dbReference>
<dbReference type="PDB" id="6RKI">
    <property type="method" value="X-ray"/>
    <property type="resolution" value="1.88 A"/>
    <property type="chains" value="A=1-248"/>
</dbReference>
<dbReference type="PDB" id="6RKK">
    <property type="method" value="X-ray"/>
    <property type="resolution" value="1.88 A"/>
    <property type="chains" value="A=1-248"/>
</dbReference>
<dbReference type="PDB" id="6RKM">
    <property type="method" value="X-ray"/>
    <property type="resolution" value="1.88 A"/>
    <property type="chains" value="A=1-248"/>
</dbReference>
<dbReference type="PDB" id="6RL3">
    <property type="method" value="X-ray"/>
    <property type="resolution" value="1.30 A"/>
    <property type="chains" value="A=1-248"/>
</dbReference>
<dbReference type="PDB" id="6RL4">
    <property type="method" value="X-ray"/>
    <property type="resolution" value="1.60 A"/>
    <property type="chains" value="A=1-248"/>
</dbReference>
<dbReference type="PDB" id="6RL6">
    <property type="method" value="X-ray"/>
    <property type="resolution" value="1.60 A"/>
    <property type="chains" value="A=1-248"/>
</dbReference>
<dbReference type="PDB" id="6RM5">
    <property type="method" value="X-ray"/>
    <property type="resolution" value="1.88 A"/>
    <property type="chains" value="A=1-248"/>
</dbReference>
<dbReference type="PDB" id="6RM7">
    <property type="method" value="X-ray"/>
    <property type="resolution" value="1.60 A"/>
    <property type="chains" value="A=1-248"/>
</dbReference>
<dbReference type="PDB" id="6RP6">
    <property type="method" value="X-ray"/>
    <property type="resolution" value="1.89 A"/>
    <property type="chains" value="A=1-231"/>
</dbReference>
<dbReference type="PDB" id="6RWH">
    <property type="method" value="X-ray"/>
    <property type="resolution" value="1.68 A"/>
    <property type="chains" value="A=1-248"/>
</dbReference>
<dbReference type="PDB" id="6RWI">
    <property type="method" value="X-ray"/>
    <property type="resolution" value="1.65 A"/>
    <property type="chains" value="A=1-248"/>
</dbReference>
<dbReference type="PDB" id="6RWS">
    <property type="method" value="X-ray"/>
    <property type="resolution" value="1.53 A"/>
    <property type="chains" value="A=1-248"/>
</dbReference>
<dbReference type="PDB" id="6RWU">
    <property type="method" value="X-ray"/>
    <property type="resolution" value="1.46 A"/>
    <property type="chains" value="A=1-248"/>
</dbReference>
<dbReference type="PDB" id="6RX2">
    <property type="method" value="X-ray"/>
    <property type="resolution" value="1.82 A"/>
    <property type="chains" value="A=1-248"/>
</dbReference>
<dbReference type="PDB" id="6S39">
    <property type="method" value="X-ray"/>
    <property type="resolution" value="1.88 A"/>
    <property type="chains" value="A=1-248"/>
</dbReference>
<dbReference type="PDB" id="6S3C">
    <property type="method" value="X-ray"/>
    <property type="resolution" value="2.00 A"/>
    <property type="chains" value="A=1-248"/>
</dbReference>
<dbReference type="PDB" id="6S40">
    <property type="method" value="X-ray"/>
    <property type="resolution" value="1.90 A"/>
    <property type="chains" value="A=1-248"/>
</dbReference>
<dbReference type="PDB" id="6S9Q">
    <property type="method" value="X-ray"/>
    <property type="resolution" value="1.69 A"/>
    <property type="chains" value="A=1-248"/>
</dbReference>
<dbReference type="PDB" id="6SIN">
    <property type="method" value="X-ray"/>
    <property type="resolution" value="1.64 A"/>
    <property type="chains" value="A=1-231"/>
</dbReference>
<dbReference type="PDB" id="6SIO">
    <property type="method" value="X-ray"/>
    <property type="resolution" value="1.60 A"/>
    <property type="chains" value="A=1-231"/>
</dbReference>
<dbReference type="PDB" id="6SIP">
    <property type="method" value="X-ray"/>
    <property type="resolution" value="1.60 A"/>
    <property type="chains" value="A=1-231"/>
</dbReference>
<dbReference type="PDB" id="6SIQ">
    <property type="method" value="X-ray"/>
    <property type="resolution" value="1.60 A"/>
    <property type="chains" value="A=1-231"/>
</dbReference>
<dbReference type="PDB" id="6SLV">
    <property type="method" value="X-ray"/>
    <property type="resolution" value="1.90 A"/>
    <property type="chains" value="A=1-231"/>
</dbReference>
<dbReference type="PDB" id="6SLW">
    <property type="method" value="X-ray"/>
    <property type="resolution" value="2.00 A"/>
    <property type="chains" value="A=1-248"/>
</dbReference>
<dbReference type="PDB" id="6SLX">
    <property type="method" value="X-ray"/>
    <property type="resolution" value="1.80 A"/>
    <property type="chains" value="A=1-248"/>
</dbReference>
<dbReference type="PDB" id="6T5F">
    <property type="method" value="X-ray"/>
    <property type="resolution" value="2.63 A"/>
    <property type="chains" value="A/B/C/D=1-231"/>
</dbReference>
<dbReference type="PDB" id="6T5H">
    <property type="method" value="X-ray"/>
    <property type="resolution" value="2.04 A"/>
    <property type="chains" value="A/B=1-231"/>
</dbReference>
<dbReference type="PDB" id="6T80">
    <property type="method" value="X-ray"/>
    <property type="resolution" value="2.99 A"/>
    <property type="chains" value="A/B/C/D=1-231"/>
</dbReference>
<dbReference type="PDB" id="6TCH">
    <property type="method" value="X-ray"/>
    <property type="resolution" value="1.80 A"/>
    <property type="chains" value="B=1-231"/>
</dbReference>
<dbReference type="PDB" id="6TJM">
    <property type="method" value="X-ray"/>
    <property type="resolution" value="1.85 A"/>
    <property type="chains" value="A=1-231"/>
</dbReference>
<dbReference type="PDB" id="6TL3">
    <property type="method" value="X-ray"/>
    <property type="resolution" value="2.46 A"/>
    <property type="chains" value="A=1-231"/>
</dbReference>
<dbReference type="PDB" id="6TLF">
    <property type="method" value="X-ray"/>
    <property type="resolution" value="2.90 A"/>
    <property type="chains" value="A=1-248"/>
</dbReference>
<dbReference type="PDB" id="6TLG">
    <property type="method" value="X-ray"/>
    <property type="resolution" value="2.40 A"/>
    <property type="chains" value="A=1-248"/>
</dbReference>
<dbReference type="PDB" id="6TM7">
    <property type="method" value="X-ray"/>
    <property type="resolution" value="3.00 A"/>
    <property type="chains" value="A/B=1-248"/>
</dbReference>
<dbReference type="PDB" id="6TWZ">
    <property type="method" value="X-ray"/>
    <property type="resolution" value="2.80 A"/>
    <property type="chains" value="A/B/C/D=1-231"/>
</dbReference>
<dbReference type="PDB" id="6W0L">
    <property type="method" value="X-ray"/>
    <property type="resolution" value="2.30 A"/>
    <property type="chains" value="A=1-231"/>
</dbReference>
<dbReference type="PDB" id="6XWD">
    <property type="method" value="X-ray"/>
    <property type="resolution" value="1.60 A"/>
    <property type="chains" value="A=1-231"/>
</dbReference>
<dbReference type="PDB" id="6XXC">
    <property type="method" value="X-ray"/>
    <property type="resolution" value="1.30 A"/>
    <property type="chains" value="A=1-231"/>
</dbReference>
<dbReference type="PDB" id="6XY5">
    <property type="method" value="X-ray"/>
    <property type="resolution" value="1.30 A"/>
    <property type="chains" value="A=1-231"/>
</dbReference>
<dbReference type="PDB" id="6Y18">
    <property type="method" value="X-ray"/>
    <property type="resolution" value="1.30 A"/>
    <property type="chains" value="A=1-231"/>
</dbReference>
<dbReference type="PDB" id="6Y1D">
    <property type="method" value="X-ray"/>
    <property type="resolution" value="1.38 A"/>
    <property type="chains" value="A=1-231"/>
</dbReference>
<dbReference type="PDB" id="6Y1J">
    <property type="method" value="X-ray"/>
    <property type="resolution" value="1.13 A"/>
    <property type="chains" value="A=1-248"/>
</dbReference>
<dbReference type="PDB" id="6Y3M">
    <property type="method" value="X-ray"/>
    <property type="resolution" value="1.50 A"/>
    <property type="chains" value="A=1-248"/>
</dbReference>
<dbReference type="PDB" id="6Y3O">
    <property type="method" value="X-ray"/>
    <property type="resolution" value="1.50 A"/>
    <property type="chains" value="A=1-248"/>
</dbReference>
<dbReference type="PDB" id="6Y3R">
    <property type="method" value="X-ray"/>
    <property type="resolution" value="1.50 A"/>
    <property type="chains" value="A=1-248"/>
</dbReference>
<dbReference type="PDB" id="6Y3S">
    <property type="method" value="X-ray"/>
    <property type="resolution" value="1.95 A"/>
    <property type="chains" value="A=1-248"/>
</dbReference>
<dbReference type="PDB" id="6Y3V">
    <property type="method" value="X-ray"/>
    <property type="resolution" value="1.50 A"/>
    <property type="chains" value="A=1-248"/>
</dbReference>
<dbReference type="PDB" id="6Y3W">
    <property type="method" value="X-ray"/>
    <property type="resolution" value="1.34 A"/>
    <property type="chains" value="A=1-231"/>
</dbReference>
<dbReference type="PDB" id="6Y40">
    <property type="method" value="X-ray"/>
    <property type="resolution" value="1.75 A"/>
    <property type="chains" value="A=1-248"/>
</dbReference>
<dbReference type="PDB" id="6Y44">
    <property type="method" value="X-ray"/>
    <property type="resolution" value="1.71 A"/>
    <property type="chains" value="A=1-248"/>
</dbReference>
<dbReference type="PDB" id="6Y58">
    <property type="method" value="X-ray"/>
    <property type="resolution" value="1.90 A"/>
    <property type="chains" value="A=1-231"/>
</dbReference>
<dbReference type="PDB" id="6Y7T">
    <property type="method" value="X-ray"/>
    <property type="resolution" value="2.50 A"/>
    <property type="chains" value="A/F/K/P=1-248"/>
</dbReference>
<dbReference type="PDB" id="6Y8A">
    <property type="method" value="X-ray"/>
    <property type="resolution" value="1.50 A"/>
    <property type="chains" value="A=1-248"/>
</dbReference>
<dbReference type="PDB" id="6Y8B">
    <property type="method" value="X-ray"/>
    <property type="resolution" value="1.54 A"/>
    <property type="chains" value="A=1-248"/>
</dbReference>
<dbReference type="PDB" id="6Y8D">
    <property type="method" value="X-ray"/>
    <property type="resolution" value="1.51 A"/>
    <property type="chains" value="A=1-248"/>
</dbReference>
<dbReference type="PDB" id="6Y8E">
    <property type="method" value="X-ray"/>
    <property type="resolution" value="1.42 A"/>
    <property type="chains" value="A=1-248"/>
</dbReference>
<dbReference type="PDB" id="6YE9">
    <property type="method" value="X-ray"/>
    <property type="resolution" value="1.80 A"/>
    <property type="chains" value="A=1-231"/>
</dbReference>
<dbReference type="PDB" id="6YIA">
    <property type="method" value="X-ray"/>
    <property type="resolution" value="1.30 A"/>
    <property type="chains" value="A=1-231"/>
</dbReference>
<dbReference type="PDB" id="6YIB">
    <property type="method" value="X-ray"/>
    <property type="resolution" value="1.70 A"/>
    <property type="chains" value="A=1-231"/>
</dbReference>
<dbReference type="PDB" id="6YIC">
    <property type="method" value="X-ray"/>
    <property type="resolution" value="1.60 A"/>
    <property type="chains" value="A=1-231"/>
</dbReference>
<dbReference type="PDB" id="6YLU">
    <property type="method" value="X-ray"/>
    <property type="resolution" value="1.88 A"/>
    <property type="chains" value="A=1-231"/>
</dbReference>
<dbReference type="PDB" id="6YOW">
    <property type="method" value="X-ray"/>
    <property type="resolution" value="1.23 A"/>
    <property type="chains" value="A=1-231"/>
</dbReference>
<dbReference type="PDB" id="6YOX">
    <property type="method" value="X-ray"/>
    <property type="resolution" value="2.05 A"/>
    <property type="chains" value="A=1-248"/>
</dbReference>
<dbReference type="PDB" id="6YOY">
    <property type="method" value="X-ray"/>
    <property type="resolution" value="1.80 A"/>
    <property type="chains" value="A=1-231"/>
</dbReference>
<dbReference type="PDB" id="6YP2">
    <property type="method" value="X-ray"/>
    <property type="resolution" value="1.80 A"/>
    <property type="chains" value="A=1-231"/>
</dbReference>
<dbReference type="PDB" id="6YP3">
    <property type="method" value="X-ray"/>
    <property type="resolution" value="1.80 A"/>
    <property type="chains" value="A=1-231"/>
</dbReference>
<dbReference type="PDB" id="6YP8">
    <property type="method" value="X-ray"/>
    <property type="resolution" value="1.80 A"/>
    <property type="chains" value="A=1-231"/>
</dbReference>
<dbReference type="PDB" id="6YPL">
    <property type="method" value="X-ray"/>
    <property type="resolution" value="1.80 A"/>
    <property type="chains" value="A=1-231"/>
</dbReference>
<dbReference type="PDB" id="6YPY">
    <property type="method" value="X-ray"/>
    <property type="resolution" value="1.40 A"/>
    <property type="chains" value="A=1-231"/>
</dbReference>
<dbReference type="PDB" id="6YQ2">
    <property type="method" value="X-ray"/>
    <property type="resolution" value="1.40 A"/>
    <property type="chains" value="A=1-231"/>
</dbReference>
<dbReference type="PDB" id="6YR5">
    <property type="method" value="X-ray"/>
    <property type="resolution" value="2.25 A"/>
    <property type="chains" value="A/B/C/D=1-231"/>
</dbReference>
<dbReference type="PDB" id="6YR6">
    <property type="method" value="X-ray"/>
    <property type="resolution" value="1.75 A"/>
    <property type="chains" value="A/C/E/G=1-231"/>
</dbReference>
<dbReference type="PDB" id="6YR7">
    <property type="method" value="X-ray"/>
    <property type="resolution" value="2.10 A"/>
    <property type="chains" value="A/B=1-231"/>
</dbReference>
<dbReference type="PDB" id="6ZCJ">
    <property type="method" value="X-ray"/>
    <property type="resolution" value="1.53 A"/>
    <property type="chains" value="A=1-231"/>
</dbReference>
<dbReference type="PDB" id="6ZVB">
    <property type="method" value="X-ray"/>
    <property type="resolution" value="2.51 A"/>
    <property type="chains" value="A=1-248"/>
</dbReference>
<dbReference type="PDB" id="6ZVC">
    <property type="method" value="X-ray"/>
    <property type="resolution" value="2.51 A"/>
    <property type="chains" value="A=1-248"/>
</dbReference>
<dbReference type="PDB" id="6ZVD">
    <property type="method" value="X-ray"/>
    <property type="resolution" value="2.50 A"/>
    <property type="chains" value="A=1-248"/>
</dbReference>
<dbReference type="PDB" id="6ZVE">
    <property type="method" value="X-ray"/>
    <property type="resolution" value="2.51 A"/>
    <property type="chains" value="A=1-248"/>
</dbReference>
<dbReference type="PDB" id="7AEW">
    <property type="method" value="X-ray"/>
    <property type="resolution" value="1.20 A"/>
    <property type="chains" value="AAA=1-231"/>
</dbReference>
<dbReference type="PDB" id="7AOG">
    <property type="method" value="X-ray"/>
    <property type="resolution" value="1.50 A"/>
    <property type="chains" value="A=1-248"/>
</dbReference>
<dbReference type="PDB" id="7AXN">
    <property type="method" value="X-ray"/>
    <property type="resolution" value="1.40 A"/>
    <property type="chains" value="A=1-248"/>
</dbReference>
<dbReference type="PDB" id="7AYF">
    <property type="method" value="X-ray"/>
    <property type="resolution" value="1.75 A"/>
    <property type="chains" value="A=1-248"/>
</dbReference>
<dbReference type="PDB" id="7AZ1">
    <property type="method" value="X-ray"/>
    <property type="resolution" value="1.15 A"/>
    <property type="chains" value="A=1-248"/>
</dbReference>
<dbReference type="PDB" id="7AZ2">
    <property type="method" value="X-ray"/>
    <property type="resolution" value="1.08 A"/>
    <property type="chains" value="A=1-248"/>
</dbReference>
<dbReference type="PDB" id="7B13">
    <property type="method" value="X-ray"/>
    <property type="resolution" value="1.37 A"/>
    <property type="chains" value="A=1-231"/>
</dbReference>
<dbReference type="PDB" id="7B15">
    <property type="method" value="X-ray"/>
    <property type="resolution" value="1.59 A"/>
    <property type="chains" value="A=1-231"/>
</dbReference>
<dbReference type="PDB" id="7B9M">
    <property type="method" value="X-ray"/>
    <property type="resolution" value="1.70 A"/>
    <property type="chains" value="A=1-231"/>
</dbReference>
<dbReference type="PDB" id="7B9R">
    <property type="method" value="X-ray"/>
    <property type="resolution" value="1.15 A"/>
    <property type="chains" value="A=1-231"/>
</dbReference>
<dbReference type="PDB" id="7B9T">
    <property type="method" value="X-ray"/>
    <property type="resolution" value="1.15 A"/>
    <property type="chains" value="A=1-231"/>
</dbReference>
<dbReference type="PDB" id="7BA3">
    <property type="method" value="X-ray"/>
    <property type="resolution" value="1.40 A"/>
    <property type="chains" value="A=1-231"/>
</dbReference>
<dbReference type="PDB" id="7BA5">
    <property type="method" value="X-ray"/>
    <property type="resolution" value="1.45 A"/>
    <property type="chains" value="A=1-231"/>
</dbReference>
<dbReference type="PDB" id="7BA6">
    <property type="method" value="X-ray"/>
    <property type="resolution" value="1.40 A"/>
    <property type="chains" value="A=1-231"/>
</dbReference>
<dbReference type="PDB" id="7BA7">
    <property type="method" value="X-ray"/>
    <property type="resolution" value="1.45 A"/>
    <property type="chains" value="A=1-231"/>
</dbReference>
<dbReference type="PDB" id="7BA8">
    <property type="method" value="X-ray"/>
    <property type="resolution" value="1.20 A"/>
    <property type="chains" value="A=1-231"/>
</dbReference>
<dbReference type="PDB" id="7BA9">
    <property type="method" value="X-ray"/>
    <property type="resolution" value="1.48 A"/>
    <property type="chains" value="A=1-231"/>
</dbReference>
<dbReference type="PDB" id="7BAA">
    <property type="method" value="X-ray"/>
    <property type="resolution" value="1.10 A"/>
    <property type="chains" value="A=1-231"/>
</dbReference>
<dbReference type="PDB" id="7BAB">
    <property type="method" value="X-ray"/>
    <property type="resolution" value="1.30 A"/>
    <property type="chains" value="A=1-231"/>
</dbReference>
<dbReference type="PDB" id="7BDP">
    <property type="method" value="X-ray"/>
    <property type="resolution" value="1.75 A"/>
    <property type="chains" value="A=1-248"/>
</dbReference>
<dbReference type="PDB" id="7BDT">
    <property type="method" value="X-ray"/>
    <property type="resolution" value="1.75 A"/>
    <property type="chains" value="A=1-248"/>
</dbReference>
<dbReference type="PDB" id="7BDY">
    <property type="method" value="X-ray"/>
    <property type="resolution" value="1.80 A"/>
    <property type="chains" value="A=1-248"/>
</dbReference>
<dbReference type="PDB" id="7BFW">
    <property type="method" value="X-ray"/>
    <property type="resolution" value="1.80 A"/>
    <property type="chains" value="A=1-248"/>
</dbReference>
<dbReference type="PDB" id="7BG3">
    <property type="method" value="X-ray"/>
    <property type="resolution" value="1.40 A"/>
    <property type="chains" value="A=1-248"/>
</dbReference>
<dbReference type="PDB" id="7BGQ">
    <property type="method" value="X-ray"/>
    <property type="resolution" value="1.75 A"/>
    <property type="chains" value="A=1-248"/>
</dbReference>
<dbReference type="PDB" id="7BGR">
    <property type="method" value="X-ray"/>
    <property type="resolution" value="1.80 A"/>
    <property type="chains" value="A=1-248"/>
</dbReference>
<dbReference type="PDB" id="7BGV">
    <property type="method" value="X-ray"/>
    <property type="resolution" value="1.68 A"/>
    <property type="chains" value="A=1-248"/>
</dbReference>
<dbReference type="PDB" id="7BGW">
    <property type="method" value="X-ray"/>
    <property type="resolution" value="1.90 A"/>
    <property type="chains" value="A=1-248"/>
</dbReference>
<dbReference type="PDB" id="7BI3">
    <property type="method" value="X-ray"/>
    <property type="resolution" value="1.20 A"/>
    <property type="chains" value="A=1-248"/>
</dbReference>
<dbReference type="PDB" id="7BIQ">
    <property type="method" value="X-ray"/>
    <property type="resolution" value="1.20 A"/>
    <property type="chains" value="A=1-248"/>
</dbReference>
<dbReference type="PDB" id="7BIW">
    <property type="method" value="X-ray"/>
    <property type="resolution" value="1.20 A"/>
    <property type="chains" value="A=1-248"/>
</dbReference>
<dbReference type="PDB" id="7BIY">
    <property type="method" value="X-ray"/>
    <property type="resolution" value="1.80 A"/>
    <property type="chains" value="A=1-248"/>
</dbReference>
<dbReference type="PDB" id="7BJB">
    <property type="method" value="X-ray"/>
    <property type="resolution" value="1.80 A"/>
    <property type="chains" value="A=1-248"/>
</dbReference>
<dbReference type="PDB" id="7BJF">
    <property type="method" value="X-ray"/>
    <property type="resolution" value="1.40 A"/>
    <property type="chains" value="A=1-248"/>
</dbReference>
<dbReference type="PDB" id="7BJL">
    <property type="method" value="X-ray"/>
    <property type="resolution" value="1.40 A"/>
    <property type="chains" value="A=1-248"/>
</dbReference>
<dbReference type="PDB" id="7BJW">
    <property type="method" value="X-ray"/>
    <property type="resolution" value="1.40 A"/>
    <property type="chains" value="A=1-248"/>
</dbReference>
<dbReference type="PDB" id="7BKH">
    <property type="method" value="X-ray"/>
    <property type="resolution" value="1.40 A"/>
    <property type="chains" value="A=1-248"/>
</dbReference>
<dbReference type="PDB" id="7BM9">
    <property type="method" value="X-ray"/>
    <property type="resolution" value="1.80 A"/>
    <property type="chains" value="A=1-248"/>
</dbReference>
<dbReference type="PDB" id="7BMC">
    <property type="method" value="X-ray"/>
    <property type="resolution" value="2.00 A"/>
    <property type="chains" value="A=1-248"/>
</dbReference>
<dbReference type="PDB" id="7NFW">
    <property type="method" value="X-ray"/>
    <property type="resolution" value="1.19 A"/>
    <property type="chains" value="A=1-248"/>
</dbReference>
<dbReference type="PDB" id="7NIF">
    <property type="method" value="X-ray"/>
    <property type="resolution" value="1.71 A"/>
    <property type="chains" value="A=1-248"/>
</dbReference>
<dbReference type="PDB" id="7NIG">
    <property type="method" value="X-ray"/>
    <property type="resolution" value="1.90 A"/>
    <property type="chains" value="A=1-248"/>
</dbReference>
<dbReference type="PDB" id="7NIX">
    <property type="method" value="X-ray"/>
    <property type="resolution" value="1.90 A"/>
    <property type="chains" value="A=1-248"/>
</dbReference>
<dbReference type="PDB" id="7NIZ">
    <property type="method" value="X-ray"/>
    <property type="resolution" value="1.48 A"/>
    <property type="chains" value="A=1-248"/>
</dbReference>
<dbReference type="PDB" id="7NJ6">
    <property type="method" value="X-ray"/>
    <property type="resolution" value="1.59 A"/>
    <property type="chains" value="A=1-248"/>
</dbReference>
<dbReference type="PDB" id="7NJ8">
    <property type="method" value="X-ray"/>
    <property type="resolution" value="1.80 A"/>
    <property type="chains" value="A=1-248"/>
</dbReference>
<dbReference type="PDB" id="7NJ9">
    <property type="method" value="X-ray"/>
    <property type="resolution" value="1.40 A"/>
    <property type="chains" value="A=1-248"/>
</dbReference>
<dbReference type="PDB" id="7NJA">
    <property type="method" value="X-ray"/>
    <property type="resolution" value="1.75 A"/>
    <property type="chains" value="A=1-248"/>
</dbReference>
<dbReference type="PDB" id="7NJB">
    <property type="method" value="X-ray"/>
    <property type="resolution" value="1.40 A"/>
    <property type="chains" value="A=1-248"/>
</dbReference>
<dbReference type="PDB" id="7NK3">
    <property type="method" value="X-ray"/>
    <property type="resolution" value="1.40 A"/>
    <property type="chains" value="A=1-248"/>
</dbReference>
<dbReference type="PDB" id="7NK5">
    <property type="method" value="X-ray"/>
    <property type="resolution" value="1.40 A"/>
    <property type="chains" value="A=1-248"/>
</dbReference>
<dbReference type="PDB" id="7NLA">
    <property type="method" value="X-ray"/>
    <property type="resolution" value="1.40 A"/>
    <property type="chains" value="A=1-248"/>
</dbReference>
<dbReference type="PDB" id="7NLE">
    <property type="method" value="X-ray"/>
    <property type="resolution" value="1.40 A"/>
    <property type="chains" value="A=1-248"/>
</dbReference>
<dbReference type="PDB" id="7NM1">
    <property type="method" value="X-ray"/>
    <property type="resolution" value="1.40 A"/>
    <property type="chains" value="A=1-248"/>
</dbReference>
<dbReference type="PDB" id="7NM3">
    <property type="method" value="X-ray"/>
    <property type="resolution" value="1.40 A"/>
    <property type="chains" value="A=1-248"/>
</dbReference>
<dbReference type="PDB" id="7NM9">
    <property type="method" value="X-ray"/>
    <property type="resolution" value="1.70 A"/>
    <property type="chains" value="A=1-248"/>
</dbReference>
<dbReference type="PDB" id="7NMA">
    <property type="method" value="X-ray"/>
    <property type="resolution" value="1.75 A"/>
    <property type="chains" value="A=1-248"/>
</dbReference>
<dbReference type="PDB" id="7NMH">
    <property type="method" value="X-ray"/>
    <property type="resolution" value="1.40 A"/>
    <property type="chains" value="A=1-248"/>
</dbReference>
<dbReference type="PDB" id="7NMW">
    <property type="method" value="X-ray"/>
    <property type="resolution" value="1.50 A"/>
    <property type="chains" value="A=1-248"/>
</dbReference>
<dbReference type="PDB" id="7NMX">
    <property type="method" value="X-ray"/>
    <property type="resolution" value="2.30 A"/>
    <property type="chains" value="A=1-248"/>
</dbReference>
<dbReference type="PDB" id="7NN2">
    <property type="method" value="X-ray"/>
    <property type="resolution" value="1.80 A"/>
    <property type="chains" value="A=1-248"/>
</dbReference>
<dbReference type="PDB" id="7NND">
    <property type="method" value="X-ray"/>
    <property type="resolution" value="1.40 A"/>
    <property type="chains" value="A=1-248"/>
</dbReference>
<dbReference type="PDB" id="7NNE">
    <property type="method" value="X-ray"/>
    <property type="resolution" value="1.96 A"/>
    <property type="chains" value="A=1-248"/>
</dbReference>
<dbReference type="PDB" id="7NP2">
    <property type="method" value="X-ray"/>
    <property type="resolution" value="1.27 A"/>
    <property type="chains" value="A=1-248"/>
</dbReference>
<dbReference type="PDB" id="7NPB">
    <property type="method" value="X-ray"/>
    <property type="resolution" value="1.37 A"/>
    <property type="chains" value="A=1-248"/>
</dbReference>
<dbReference type="PDB" id="7NPG">
    <property type="method" value="X-ray"/>
    <property type="resolution" value="1.37 A"/>
    <property type="chains" value="A=1-248"/>
</dbReference>
<dbReference type="PDB" id="7NQP">
    <property type="method" value="X-ray"/>
    <property type="resolution" value="1.24 A"/>
    <property type="chains" value="A=1-248"/>
</dbReference>
<dbReference type="PDB" id="7NR7">
    <property type="method" value="X-ray"/>
    <property type="resolution" value="1.40 A"/>
    <property type="chains" value="A=1-248"/>
</dbReference>
<dbReference type="PDB" id="7NRK">
    <property type="method" value="X-ray"/>
    <property type="resolution" value="1.75 A"/>
    <property type="chains" value="A=1-248"/>
</dbReference>
<dbReference type="PDB" id="7NRL">
    <property type="method" value="X-ray"/>
    <property type="resolution" value="1.80 A"/>
    <property type="chains" value="A=1-248"/>
</dbReference>
<dbReference type="PDB" id="7NSV">
    <property type="method" value="X-ray"/>
    <property type="resolution" value="1.33 A"/>
    <property type="chains" value="A=1-248"/>
</dbReference>
<dbReference type="PDB" id="7NV4">
    <property type="method" value="X-ray"/>
    <property type="resolution" value="1.20 A"/>
    <property type="chains" value="A=1-231"/>
</dbReference>
<dbReference type="PDB" id="7NVI">
    <property type="method" value="X-ray"/>
    <property type="resolution" value="1.20 A"/>
    <property type="chains" value="A=1-231"/>
</dbReference>
<dbReference type="PDB" id="7NWS">
    <property type="method" value="X-ray"/>
    <property type="resolution" value="1.20 A"/>
    <property type="chains" value="A=1-231"/>
</dbReference>
<dbReference type="PDB" id="7NXS">
    <property type="method" value="X-ray"/>
    <property type="resolution" value="1.20 A"/>
    <property type="chains" value="A=1-231"/>
</dbReference>
<dbReference type="PDB" id="7NXT">
    <property type="method" value="X-ray"/>
    <property type="resolution" value="1.20 A"/>
    <property type="chains" value="A=1-231"/>
</dbReference>
<dbReference type="PDB" id="7NXW">
    <property type="method" value="X-ray"/>
    <property type="resolution" value="1.20 A"/>
    <property type="chains" value="A=1-231"/>
</dbReference>
<dbReference type="PDB" id="7NXY">
    <property type="method" value="X-ray"/>
    <property type="resolution" value="1.20 A"/>
    <property type="chains" value="A=1-231"/>
</dbReference>
<dbReference type="PDB" id="7NY4">
    <property type="method" value="X-ray"/>
    <property type="resolution" value="1.40 A"/>
    <property type="chains" value="A=1-231"/>
</dbReference>
<dbReference type="PDB" id="7NYE">
    <property type="method" value="X-ray"/>
    <property type="resolution" value="1.40 A"/>
    <property type="chains" value="A=1-231"/>
</dbReference>
<dbReference type="PDB" id="7NYF">
    <property type="method" value="X-ray"/>
    <property type="resolution" value="1.40 A"/>
    <property type="chains" value="A=1-231"/>
</dbReference>
<dbReference type="PDB" id="7NYG">
    <property type="method" value="X-ray"/>
    <property type="resolution" value="1.40 A"/>
    <property type="chains" value="A=1-231"/>
</dbReference>
<dbReference type="PDB" id="7NZ6">
    <property type="method" value="X-ray"/>
    <property type="resolution" value="1.40 A"/>
    <property type="chains" value="A=1-231"/>
</dbReference>
<dbReference type="PDB" id="7NZG">
    <property type="method" value="X-ray"/>
    <property type="resolution" value="1.40 A"/>
    <property type="chains" value="A=1-231"/>
</dbReference>
<dbReference type="PDB" id="7NZK">
    <property type="method" value="X-ray"/>
    <property type="resolution" value="1.40 A"/>
    <property type="chains" value="A=1-231"/>
</dbReference>
<dbReference type="PDB" id="7NZV">
    <property type="method" value="X-ray"/>
    <property type="resolution" value="1.40 A"/>
    <property type="chains" value="A=1-231"/>
</dbReference>
<dbReference type="PDB" id="7O07">
    <property type="method" value="X-ray"/>
    <property type="resolution" value="1.20 A"/>
    <property type="chains" value="A=1-231"/>
</dbReference>
<dbReference type="PDB" id="7O34">
    <property type="method" value="X-ray"/>
    <property type="resolution" value="1.20 A"/>
    <property type="chains" value="A=1-231"/>
</dbReference>
<dbReference type="PDB" id="7O3A">
    <property type="method" value="X-ray"/>
    <property type="resolution" value="1.20 A"/>
    <property type="chains" value="A=1-231"/>
</dbReference>
<dbReference type="PDB" id="7O3F">
    <property type="method" value="X-ray"/>
    <property type="resolution" value="1.40 A"/>
    <property type="chains" value="A=1-231"/>
</dbReference>
<dbReference type="PDB" id="7O3P">
    <property type="method" value="X-ray"/>
    <property type="resolution" value="1.40 A"/>
    <property type="chains" value="A=1-231"/>
</dbReference>
<dbReference type="PDB" id="7O3Q">
    <property type="method" value="X-ray"/>
    <property type="resolution" value="1.80 A"/>
    <property type="chains" value="A=1-231"/>
</dbReference>
<dbReference type="PDB" id="7O3R">
    <property type="method" value="X-ray"/>
    <property type="resolution" value="1.80 A"/>
    <property type="chains" value="A=1-231"/>
</dbReference>
<dbReference type="PDB" id="7O3S">
    <property type="method" value="X-ray"/>
    <property type="resolution" value="2.00 A"/>
    <property type="chains" value="A=1-231"/>
</dbReference>
<dbReference type="PDB" id="7O57">
    <property type="method" value="X-ray"/>
    <property type="resolution" value="1.40 A"/>
    <property type="chains" value="A=1-231"/>
</dbReference>
<dbReference type="PDB" id="7O59">
    <property type="method" value="X-ray"/>
    <property type="resolution" value="1.20 A"/>
    <property type="chains" value="A=1-231"/>
</dbReference>
<dbReference type="PDB" id="7O5A">
    <property type="method" value="X-ray"/>
    <property type="resolution" value="1.80 A"/>
    <property type="chains" value="A=1-231"/>
</dbReference>
<dbReference type="PDB" id="7O5C">
    <property type="method" value="X-ray"/>
    <property type="resolution" value="1.80 A"/>
    <property type="chains" value="A=1-231"/>
</dbReference>
<dbReference type="PDB" id="7O5D">
    <property type="method" value="X-ray"/>
    <property type="resolution" value="1.80 A"/>
    <property type="chains" value="A=1-231"/>
</dbReference>
<dbReference type="PDB" id="7O5F">
    <property type="method" value="X-ray"/>
    <property type="resolution" value="1.80 A"/>
    <property type="chains" value="A=1-231"/>
</dbReference>
<dbReference type="PDB" id="7O5G">
    <property type="method" value="X-ray"/>
    <property type="resolution" value="1.80 A"/>
    <property type="chains" value="A=1-231"/>
</dbReference>
<dbReference type="PDB" id="7O5O">
    <property type="method" value="X-ray"/>
    <property type="resolution" value="1.80 A"/>
    <property type="chains" value="A=1-231"/>
</dbReference>
<dbReference type="PDB" id="7O5P">
    <property type="method" value="X-ray"/>
    <property type="resolution" value="1.80 A"/>
    <property type="chains" value="A=1-231"/>
</dbReference>
<dbReference type="PDB" id="7O5S">
    <property type="method" value="X-ray"/>
    <property type="resolution" value="1.80 A"/>
    <property type="chains" value="A=1-231"/>
</dbReference>
<dbReference type="PDB" id="7O5U">
    <property type="method" value="X-ray"/>
    <property type="resolution" value="1.80 A"/>
    <property type="chains" value="A=1-231"/>
</dbReference>
<dbReference type="PDB" id="7O5X">
    <property type="method" value="X-ray"/>
    <property type="resolution" value="1.80 A"/>
    <property type="chains" value="A=1-231"/>
</dbReference>
<dbReference type="PDB" id="7O6F">
    <property type="method" value="X-ray"/>
    <property type="resolution" value="2.00 A"/>
    <property type="chains" value="A=1-231"/>
</dbReference>
<dbReference type="PDB" id="7O6G">
    <property type="method" value="X-ray"/>
    <property type="resolution" value="1.80 A"/>
    <property type="chains" value="A=1-231"/>
</dbReference>
<dbReference type="PDB" id="7O6I">
    <property type="method" value="X-ray"/>
    <property type="resolution" value="1.80 A"/>
    <property type="chains" value="A=1-231"/>
</dbReference>
<dbReference type="PDB" id="7O6J">
    <property type="method" value="X-ray"/>
    <property type="resolution" value="1.40 A"/>
    <property type="chains" value="A=1-231"/>
</dbReference>
<dbReference type="PDB" id="7O6K">
    <property type="method" value="X-ray"/>
    <property type="resolution" value="1.40 A"/>
    <property type="chains" value="A=1-231"/>
</dbReference>
<dbReference type="PDB" id="7O6M">
    <property type="method" value="X-ray"/>
    <property type="resolution" value="1.40 A"/>
    <property type="chains" value="A=1-231"/>
</dbReference>
<dbReference type="PDB" id="7O6O">
    <property type="method" value="X-ray"/>
    <property type="resolution" value="1.40 A"/>
    <property type="chains" value="A=1-231"/>
</dbReference>
<dbReference type="PDB" id="7OB5">
    <property type="method" value="X-ray"/>
    <property type="resolution" value="1.80 A"/>
    <property type="chains" value="A=1-248"/>
</dbReference>
<dbReference type="PDB" id="7OB8">
    <property type="method" value="X-ray"/>
    <property type="resolution" value="1.80 A"/>
    <property type="chains" value="A=1-248"/>
</dbReference>
<dbReference type="PDB" id="7OBC">
    <property type="method" value="X-ray"/>
    <property type="resolution" value="1.90 A"/>
    <property type="chains" value="A=1-248"/>
</dbReference>
<dbReference type="PDB" id="7OBD">
    <property type="method" value="X-ray"/>
    <property type="resolution" value="2.00 A"/>
    <property type="chains" value="A=1-248"/>
</dbReference>
<dbReference type="PDB" id="7OBG">
    <property type="method" value="X-ray"/>
    <property type="resolution" value="1.80 A"/>
    <property type="chains" value="A=1-248"/>
</dbReference>
<dbReference type="PDB" id="7OBH">
    <property type="method" value="X-ray"/>
    <property type="resolution" value="2.00 A"/>
    <property type="chains" value="A=1-248"/>
</dbReference>
<dbReference type="PDB" id="7OBK">
    <property type="method" value="X-ray"/>
    <property type="resolution" value="1.80 A"/>
    <property type="chains" value="A=1-248"/>
</dbReference>
<dbReference type="PDB" id="7OBL">
    <property type="method" value="X-ray"/>
    <property type="resolution" value="1.80 A"/>
    <property type="chains" value="A=1-248"/>
</dbReference>
<dbReference type="PDB" id="7OBS">
    <property type="method" value="X-ray"/>
    <property type="resolution" value="1.80 A"/>
    <property type="chains" value="A=1-248"/>
</dbReference>
<dbReference type="PDB" id="7OBT">
    <property type="method" value="X-ray"/>
    <property type="resolution" value="2.30 A"/>
    <property type="chains" value="A=1-248"/>
</dbReference>
<dbReference type="PDB" id="7OBX">
    <property type="method" value="X-ray"/>
    <property type="resolution" value="1.80 A"/>
    <property type="chains" value="A=1-248"/>
</dbReference>
<dbReference type="PDB" id="7OBY">
    <property type="method" value="X-ray"/>
    <property type="resolution" value="2.10 A"/>
    <property type="chains" value="A=1-248"/>
</dbReference>
<dbReference type="PDB" id="7OPW">
    <property type="method" value="X-ray"/>
    <property type="resolution" value="1.81 A"/>
    <property type="chains" value="A=1-248"/>
</dbReference>
<dbReference type="PDB" id="7OQ7">
    <property type="method" value="X-ray"/>
    <property type="resolution" value="1.60 A"/>
    <property type="chains" value="A=1-248"/>
</dbReference>
<dbReference type="PDB" id="7OQ8">
    <property type="method" value="X-ray"/>
    <property type="resolution" value="1.43 A"/>
    <property type="chains" value="A=1-248"/>
</dbReference>
<dbReference type="PDB" id="7OQ9">
    <property type="method" value="X-ray"/>
    <property type="resolution" value="1.80 A"/>
    <property type="chains" value="A=1-248"/>
</dbReference>
<dbReference type="PDB" id="7OQA">
    <property type="method" value="X-ray"/>
    <property type="resolution" value="1.80 A"/>
    <property type="chains" value="A=1-248"/>
</dbReference>
<dbReference type="PDB" id="7OQG">
    <property type="method" value="X-ray"/>
    <property type="resolution" value="1.50 A"/>
    <property type="chains" value="A=1-248"/>
</dbReference>
<dbReference type="PDB" id="7OQJ">
    <property type="method" value="X-ray"/>
    <property type="resolution" value="1.40 A"/>
    <property type="chains" value="A=1-248"/>
</dbReference>
<dbReference type="PDB" id="7OQS">
    <property type="method" value="X-ray"/>
    <property type="resolution" value="1.34 A"/>
    <property type="chains" value="A=1-248"/>
</dbReference>
<dbReference type="PDB" id="7OQU">
    <property type="method" value="X-ray"/>
    <property type="resolution" value="1.40 A"/>
    <property type="chains" value="A=1-248"/>
</dbReference>
<dbReference type="PDB" id="7OQW">
    <property type="method" value="X-ray"/>
    <property type="resolution" value="1.90 A"/>
    <property type="chains" value="A=1-248"/>
</dbReference>
<dbReference type="PDB" id="7OR3">
    <property type="method" value="X-ray"/>
    <property type="resolution" value="1.80 A"/>
    <property type="chains" value="A=1-248"/>
</dbReference>
<dbReference type="PDB" id="7OR5">
    <property type="method" value="X-ray"/>
    <property type="resolution" value="1.80 A"/>
    <property type="chains" value="A=1-248"/>
</dbReference>
<dbReference type="PDB" id="7OR7">
    <property type="method" value="X-ray"/>
    <property type="resolution" value="1.80 A"/>
    <property type="chains" value="A=1-248"/>
</dbReference>
<dbReference type="PDB" id="7OR8">
    <property type="method" value="X-ray"/>
    <property type="resolution" value="1.80 A"/>
    <property type="chains" value="A=1-248"/>
</dbReference>
<dbReference type="PDB" id="7ORG">
    <property type="method" value="X-ray"/>
    <property type="resolution" value="1.80 A"/>
    <property type="chains" value="A=1-248"/>
</dbReference>
<dbReference type="PDB" id="7ORH">
    <property type="method" value="X-ray"/>
    <property type="resolution" value="1.80 A"/>
    <property type="chains" value="A=1-248"/>
</dbReference>
<dbReference type="PDB" id="7ORS">
    <property type="method" value="X-ray"/>
    <property type="resolution" value="1.80 A"/>
    <property type="chains" value="A=1-248"/>
</dbReference>
<dbReference type="PDB" id="7ORT">
    <property type="method" value="X-ray"/>
    <property type="resolution" value="2.33 A"/>
    <property type="chains" value="A=1-248"/>
</dbReference>
<dbReference type="PDB" id="7PWT">
    <property type="method" value="X-ray"/>
    <property type="resolution" value="2.31 A"/>
    <property type="chains" value="A=1-231"/>
</dbReference>
<dbReference type="PDB" id="7PWZ">
    <property type="method" value="X-ray"/>
    <property type="resolution" value="2.50 A"/>
    <property type="chains" value="A=1-231"/>
</dbReference>
<dbReference type="PDB" id="7QIK">
    <property type="method" value="X-ray"/>
    <property type="resolution" value="2.01 A"/>
    <property type="chains" value="A/B=1-231"/>
</dbReference>
<dbReference type="PDB" id="7QIP">
    <property type="method" value="X-ray"/>
    <property type="resolution" value="2.65 A"/>
    <property type="chains" value="A/B=1-231"/>
</dbReference>
<dbReference type="PDB" id="7ZMU">
    <property type="method" value="X-ray"/>
    <property type="resolution" value="1.60 A"/>
    <property type="chains" value="A=1-231"/>
</dbReference>
<dbReference type="PDB" id="7ZMW">
    <property type="method" value="X-ray"/>
    <property type="resolution" value="1.80 A"/>
    <property type="chains" value="A=1-231"/>
</dbReference>
<dbReference type="PDB" id="8A62">
    <property type="method" value="X-ray"/>
    <property type="resolution" value="1.60 A"/>
    <property type="chains" value="A=1-231"/>
</dbReference>
<dbReference type="PDB" id="8A65">
    <property type="method" value="X-ray"/>
    <property type="resolution" value="1.60 A"/>
    <property type="chains" value="A=1-231"/>
</dbReference>
<dbReference type="PDB" id="8A68">
    <property type="method" value="X-ray"/>
    <property type="resolution" value="1.60 A"/>
    <property type="chains" value="A=1-231"/>
</dbReference>
<dbReference type="PDB" id="8A6F">
    <property type="method" value="X-ray"/>
    <property type="resolution" value="1.60 A"/>
    <property type="chains" value="A=1-231"/>
</dbReference>
<dbReference type="PDB" id="8A6H">
    <property type="method" value="X-ray"/>
    <property type="resolution" value="1.60 A"/>
    <property type="chains" value="A=1-231"/>
</dbReference>
<dbReference type="PDB" id="8ADM">
    <property type="method" value="X-ray"/>
    <property type="resolution" value="1.70 A"/>
    <property type="chains" value="A=1-231"/>
</dbReference>
<dbReference type="PDB" id="8AFN">
    <property type="method" value="X-ray"/>
    <property type="resolution" value="1.36 A"/>
    <property type="chains" value="A=1-231"/>
</dbReference>
<dbReference type="PDB" id="8AI0">
    <property type="method" value="X-ray"/>
    <property type="resolution" value="1.60 A"/>
    <property type="chains" value="A=1-231"/>
</dbReference>
<dbReference type="PDB" id="8ALR">
    <property type="method" value="X-ray"/>
    <property type="resolution" value="1.40 A"/>
    <property type="chains" value="A=1-231"/>
</dbReference>
<dbReference type="PDB" id="8ALT">
    <property type="method" value="X-ray"/>
    <property type="resolution" value="1.40 A"/>
    <property type="chains" value="A=1-231"/>
</dbReference>
<dbReference type="PDB" id="8ALV">
    <property type="method" value="X-ray"/>
    <property type="resolution" value="1.60 A"/>
    <property type="chains" value="A=1-231"/>
</dbReference>
<dbReference type="PDB" id="8ALW">
    <property type="method" value="X-ray"/>
    <property type="resolution" value="1.50 A"/>
    <property type="chains" value="A=1-231"/>
</dbReference>
<dbReference type="PDB" id="8AM7">
    <property type="method" value="X-ray"/>
    <property type="resolution" value="1.50 A"/>
    <property type="chains" value="A=1-231"/>
</dbReference>
<dbReference type="PDB" id="8ANB">
    <property type="method" value="X-ray"/>
    <property type="resolution" value="1.64 A"/>
    <property type="chains" value="A=1-231"/>
</dbReference>
<dbReference type="PDB" id="8ANC">
    <property type="method" value="X-ray"/>
    <property type="resolution" value="1.11 A"/>
    <property type="chains" value="A=1-231"/>
</dbReference>
<dbReference type="PDB" id="8ANF">
    <property type="method" value="X-ray"/>
    <property type="resolution" value="1.40 A"/>
    <property type="chains" value="A=1-231"/>
</dbReference>
<dbReference type="PDB" id="8AOY">
    <property type="method" value="X-ray"/>
    <property type="resolution" value="1.40 A"/>
    <property type="chains" value="A=1-231"/>
</dbReference>
<dbReference type="PDB" id="8APS">
    <property type="method" value="X-ray"/>
    <property type="resolution" value="1.20 A"/>
    <property type="chains" value="A=1-231"/>
</dbReference>
<dbReference type="PDB" id="8AQ1">
    <property type="method" value="X-ray"/>
    <property type="resolution" value="1.40 A"/>
    <property type="chains" value="A=1-231"/>
</dbReference>
<dbReference type="PDB" id="8AQC">
    <property type="method" value="X-ray"/>
    <property type="resolution" value="1.50 A"/>
    <property type="chains" value="A=1-231"/>
</dbReference>
<dbReference type="PDB" id="8AQE">
    <property type="method" value="X-ray"/>
    <property type="resolution" value="1.60 A"/>
    <property type="chains" value="A=1-231"/>
</dbReference>
<dbReference type="PDB" id="8AQZ">
    <property type="method" value="X-ray"/>
    <property type="resolution" value="1.40 A"/>
    <property type="chains" value="A=1-231"/>
</dbReference>
<dbReference type="PDB" id="8AR4">
    <property type="method" value="X-ray"/>
    <property type="resolution" value="1.50 A"/>
    <property type="chains" value="A=1-231"/>
</dbReference>
<dbReference type="PDB" id="8AR5">
    <property type="method" value="X-ray"/>
    <property type="resolution" value="1.40 A"/>
    <property type="chains" value="A=1-231"/>
</dbReference>
<dbReference type="PDB" id="8ARG">
    <property type="method" value="X-ray"/>
    <property type="resolution" value="1.50 A"/>
    <property type="chains" value="A=1-231"/>
</dbReference>
<dbReference type="PDB" id="8ARO">
    <property type="method" value="X-ray"/>
    <property type="resolution" value="1.60 A"/>
    <property type="chains" value="A=1-231"/>
</dbReference>
<dbReference type="PDB" id="8ARQ">
    <property type="method" value="X-ray"/>
    <property type="resolution" value="1.40 A"/>
    <property type="chains" value="A=1-231"/>
</dbReference>
<dbReference type="PDB" id="8ARR">
    <property type="method" value="X-ray"/>
    <property type="resolution" value="1.35 A"/>
    <property type="chains" value="A=1-231"/>
</dbReference>
<dbReference type="PDB" id="8ARW">
    <property type="method" value="X-ray"/>
    <property type="resolution" value="1.50 A"/>
    <property type="chains" value="A=1-231"/>
</dbReference>
<dbReference type="PDB" id="8ARX">
    <property type="method" value="X-ray"/>
    <property type="resolution" value="1.40 A"/>
    <property type="chains" value="A=1-231"/>
</dbReference>
<dbReference type="PDB" id="8ARY">
    <property type="method" value="X-ray"/>
    <property type="resolution" value="1.45 A"/>
    <property type="chains" value="A=1-231"/>
</dbReference>
<dbReference type="PDB" id="8ARZ">
    <property type="method" value="X-ray"/>
    <property type="resolution" value="1.50 A"/>
    <property type="chains" value="A=1-231"/>
</dbReference>
<dbReference type="PDB" id="8AS1">
    <property type="method" value="X-ray"/>
    <property type="resolution" value="1.50 A"/>
    <property type="chains" value="A=1-231"/>
</dbReference>
<dbReference type="PDB" id="8AT9">
    <property type="method" value="X-ray"/>
    <property type="resolution" value="1.40 A"/>
    <property type="chains" value="A=1-231"/>
</dbReference>
<dbReference type="PDB" id="8ATP">
    <property type="method" value="X-ray"/>
    <property type="resolution" value="1.40 A"/>
    <property type="chains" value="A=1-231"/>
</dbReference>
<dbReference type="PDB" id="8ATR">
    <property type="method" value="X-ray"/>
    <property type="resolution" value="1.70 A"/>
    <property type="chains" value="A=1-231"/>
</dbReference>
<dbReference type="PDB" id="8ATS">
    <property type="method" value="X-ray"/>
    <property type="resolution" value="1.40 A"/>
    <property type="chains" value="A=1-231"/>
</dbReference>
<dbReference type="PDB" id="8AU2">
    <property type="method" value="X-ray"/>
    <property type="resolution" value="1.60 A"/>
    <property type="chains" value="A=1-231"/>
</dbReference>
<dbReference type="PDB" id="8AUS">
    <property type="method" value="X-ray"/>
    <property type="resolution" value="1.40 A"/>
    <property type="chains" value="A=1-231"/>
</dbReference>
<dbReference type="PDB" id="8AUY">
    <property type="method" value="X-ray"/>
    <property type="resolution" value="1.50 A"/>
    <property type="chains" value="A=1-231"/>
</dbReference>
<dbReference type="PDB" id="8AV0">
    <property type="method" value="X-ray"/>
    <property type="resolution" value="1.50 A"/>
    <property type="chains" value="A=1-231"/>
</dbReference>
<dbReference type="PDB" id="8AV3">
    <property type="method" value="X-ray"/>
    <property type="resolution" value="1.80 A"/>
    <property type="chains" value="A=1-231"/>
</dbReference>
<dbReference type="PDB" id="8AV4">
    <property type="method" value="X-ray"/>
    <property type="resolution" value="1.60 A"/>
    <property type="chains" value="A=1-231"/>
</dbReference>
<dbReference type="PDB" id="8AV7">
    <property type="method" value="X-ray"/>
    <property type="resolution" value="1.40 A"/>
    <property type="chains" value="A=1-232"/>
</dbReference>
<dbReference type="PDB" id="8AV8">
    <property type="method" value="X-ray"/>
    <property type="resolution" value="1.80 A"/>
    <property type="chains" value="A=1-231"/>
</dbReference>
<dbReference type="PDB" id="8AWG">
    <property type="method" value="X-ray"/>
    <property type="resolution" value="1.80 A"/>
    <property type="chains" value="A=1-231"/>
</dbReference>
<dbReference type="PDB" id="8AXE">
    <property type="method" value="X-ray"/>
    <property type="resolution" value="1.80 A"/>
    <property type="chains" value="A=1-231"/>
</dbReference>
<dbReference type="PDB" id="8AXU">
    <property type="method" value="X-ray"/>
    <property type="resolution" value="1.60 A"/>
    <property type="chains" value="A=1-231"/>
</dbReference>
<dbReference type="PDB" id="8AZE">
    <property type="method" value="X-ray"/>
    <property type="resolution" value="1.60 A"/>
    <property type="chains" value="A=1-231"/>
</dbReference>
<dbReference type="PDB" id="8B2I">
    <property type="method" value="X-ray"/>
    <property type="resolution" value="1.40 A"/>
    <property type="chains" value="A=1-231"/>
</dbReference>
<dbReference type="PDB" id="8B2K">
    <property type="method" value="X-ray"/>
    <property type="resolution" value="1.40 A"/>
    <property type="chains" value="A=1-231"/>
</dbReference>
<dbReference type="PDB" id="8B39">
    <property type="method" value="X-ray"/>
    <property type="resolution" value="1.40 A"/>
    <property type="chains" value="A=1-231"/>
</dbReference>
<dbReference type="PDB" id="8B4Q">
    <property type="method" value="X-ray"/>
    <property type="resolution" value="1.40 A"/>
    <property type="chains" value="A=1-231"/>
</dbReference>
<dbReference type="PDB" id="8B5P">
    <property type="method" value="X-ray"/>
    <property type="resolution" value="1.40 A"/>
    <property type="chains" value="A=1-231"/>
</dbReference>
<dbReference type="PDB" id="8BFC">
    <property type="method" value="X-ray"/>
    <property type="resolution" value="1.40 A"/>
    <property type="chains" value="A=1-231"/>
</dbReference>
<dbReference type="PDB" id="8BI7">
    <property type="method" value="X-ray"/>
    <property type="resolution" value="1.40 A"/>
    <property type="chains" value="A=1-231"/>
</dbReference>
<dbReference type="PDB" id="8BJG">
    <property type="method" value="X-ray"/>
    <property type="resolution" value="1.40 A"/>
    <property type="chains" value="A=1-231"/>
</dbReference>
<dbReference type="PDB" id="8BJN">
    <property type="method" value="X-ray"/>
    <property type="resolution" value="1.40 A"/>
    <property type="chains" value="A=1-231"/>
</dbReference>
<dbReference type="PDB" id="8BM5">
    <property type="method" value="X-ray"/>
    <property type="resolution" value="1.40 A"/>
    <property type="chains" value="A=1-231"/>
</dbReference>
<dbReference type="PDB" id="8BTQ">
    <property type="method" value="X-ray"/>
    <property type="resolution" value="1.60 A"/>
    <property type="chains" value="A=1-231"/>
</dbReference>
<dbReference type="PDB" id="8BWE">
    <property type="method" value="X-ray"/>
    <property type="resolution" value="2.00 A"/>
    <property type="chains" value="A=1-231"/>
</dbReference>
<dbReference type="PDB" id="8BWH">
    <property type="method" value="X-ray"/>
    <property type="resolution" value="2.10 A"/>
    <property type="chains" value="A=1-231"/>
</dbReference>
<dbReference type="PDB" id="8BWJ">
    <property type="method" value="X-ray"/>
    <property type="resolution" value="1.60 A"/>
    <property type="chains" value="A=1-231"/>
</dbReference>
<dbReference type="PDB" id="8BWX">
    <property type="method" value="X-ray"/>
    <property type="resolution" value="1.60 A"/>
    <property type="chains" value="A=1-231"/>
</dbReference>
<dbReference type="PDB" id="8BWZ">
    <property type="method" value="X-ray"/>
    <property type="resolution" value="1.60 A"/>
    <property type="chains" value="A=1-231"/>
</dbReference>
<dbReference type="PDB" id="8BX0">
    <property type="method" value="X-ray"/>
    <property type="resolution" value="1.60 A"/>
    <property type="chains" value="A=1-231"/>
</dbReference>
<dbReference type="PDB" id="8BX3">
    <property type="method" value="X-ray"/>
    <property type="resolution" value="1.20 A"/>
    <property type="chains" value="A=1-231"/>
</dbReference>
<dbReference type="PDB" id="8BX4">
    <property type="method" value="X-ray"/>
    <property type="resolution" value="1.60 A"/>
    <property type="chains" value="A=1-231"/>
</dbReference>
<dbReference type="PDB" id="8BXI">
    <property type="method" value="X-ray"/>
    <property type="resolution" value="1.20 A"/>
    <property type="chains" value="A=1-231"/>
</dbReference>
<dbReference type="PDB" id="8BXM">
    <property type="method" value="X-ray"/>
    <property type="resolution" value="1.60 A"/>
    <property type="chains" value="A=1-231"/>
</dbReference>
<dbReference type="PDB" id="8BXN">
    <property type="method" value="X-ray"/>
    <property type="resolution" value="1.60 A"/>
    <property type="chains" value="A=1-231"/>
</dbReference>
<dbReference type="PDB" id="8BXO">
    <property type="method" value="X-ray"/>
    <property type="resolution" value="1.60 A"/>
    <property type="chains" value="A=1-231"/>
</dbReference>
<dbReference type="PDB" id="8BXQ">
    <property type="method" value="X-ray"/>
    <property type="resolution" value="1.60 A"/>
    <property type="chains" value="A=1-231"/>
</dbReference>
<dbReference type="PDB" id="8BXS">
    <property type="method" value="X-ray"/>
    <property type="resolution" value="1.60 A"/>
    <property type="chains" value="A=1-231"/>
</dbReference>
<dbReference type="PDB" id="8BY9">
    <property type="method" value="X-ray"/>
    <property type="resolution" value="1.60 A"/>
    <property type="chains" value="A=1-231"/>
</dbReference>
<dbReference type="PDB" id="8BYB">
    <property type="method" value="X-ray"/>
    <property type="resolution" value="1.60 A"/>
    <property type="chains" value="A=1-231"/>
</dbReference>
<dbReference type="PDB" id="8BYC">
    <property type="method" value="X-ray"/>
    <property type="resolution" value="1.60 A"/>
    <property type="chains" value="A=1-231"/>
</dbReference>
<dbReference type="PDB" id="8BYD">
    <property type="method" value="X-ray"/>
    <property type="resolution" value="1.60 A"/>
    <property type="chains" value="A=1-231"/>
</dbReference>
<dbReference type="PDB" id="8BYE">
    <property type="method" value="X-ray"/>
    <property type="resolution" value="1.60 A"/>
    <property type="chains" value="A=1-231"/>
</dbReference>
<dbReference type="PDB" id="8BYF">
    <property type="method" value="X-ray"/>
    <property type="resolution" value="1.65 A"/>
    <property type="chains" value="A=1-231"/>
</dbReference>
<dbReference type="PDB" id="8BYG">
    <property type="method" value="X-ray"/>
    <property type="resolution" value="1.70 A"/>
    <property type="chains" value="A=1-231"/>
</dbReference>
<dbReference type="PDB" id="8BYO">
    <property type="method" value="X-ray"/>
    <property type="resolution" value="1.20 A"/>
    <property type="chains" value="A=1-231"/>
</dbReference>
<dbReference type="PDB" id="8BYY">
    <property type="method" value="X-ray"/>
    <property type="resolution" value="1.60 A"/>
    <property type="chains" value="A=1-231"/>
</dbReference>
<dbReference type="PDB" id="8BYZ">
    <property type="method" value="X-ray"/>
    <property type="resolution" value="1.40 A"/>
    <property type="chains" value="A=1-231"/>
</dbReference>
<dbReference type="PDB" id="8BZ0">
    <property type="method" value="X-ray"/>
    <property type="resolution" value="1.20 A"/>
    <property type="chains" value="A=1-231"/>
</dbReference>
<dbReference type="PDB" id="8BZ9">
    <property type="method" value="X-ray"/>
    <property type="resolution" value="1.30 A"/>
    <property type="chains" value="A=1-231"/>
</dbReference>
<dbReference type="PDB" id="8BZA">
    <property type="method" value="X-ray"/>
    <property type="resolution" value="1.25 A"/>
    <property type="chains" value="A=1-231"/>
</dbReference>
<dbReference type="PDB" id="8BZB">
    <property type="method" value="X-ray"/>
    <property type="resolution" value="1.70 A"/>
    <property type="chains" value="A=1-231"/>
</dbReference>
<dbReference type="PDB" id="8BZC">
    <property type="method" value="X-ray"/>
    <property type="resolution" value="1.10 A"/>
    <property type="chains" value="A=1-231"/>
</dbReference>
<dbReference type="PDB" id="8BZD">
    <property type="method" value="X-ray"/>
    <property type="resolution" value="1.50 A"/>
    <property type="chains" value="A=1-231"/>
</dbReference>
<dbReference type="PDB" id="8BZE">
    <property type="method" value="X-ray"/>
    <property type="resolution" value="1.43 A"/>
    <property type="chains" value="A=1-231"/>
</dbReference>
<dbReference type="PDB" id="8BZF">
    <property type="method" value="X-ray"/>
    <property type="resolution" value="1.53 A"/>
    <property type="chains" value="A=1-231"/>
</dbReference>
<dbReference type="PDB" id="8BZG">
    <property type="method" value="X-ray"/>
    <property type="resolution" value="1.49 A"/>
    <property type="chains" value="A=1-231"/>
</dbReference>
<dbReference type="PDB" id="8BZH">
    <property type="method" value="X-ray"/>
    <property type="resolution" value="1.46 A"/>
    <property type="chains" value="A=1-231"/>
</dbReference>
<dbReference type="PDB" id="8BZT">
    <property type="method" value="X-ray"/>
    <property type="resolution" value="1.65 A"/>
    <property type="chains" value="A=1-231"/>
</dbReference>
<dbReference type="PDB" id="8BZW">
    <property type="method" value="X-ray"/>
    <property type="resolution" value="1.10 A"/>
    <property type="chains" value="A=1-231"/>
</dbReference>
<dbReference type="PDB" id="8C04">
    <property type="method" value="X-ray"/>
    <property type="resolution" value="1.10 A"/>
    <property type="chains" value="A=1-231"/>
</dbReference>
<dbReference type="PDB" id="8C0K">
    <property type="method" value="X-ray"/>
    <property type="resolution" value="1.40 A"/>
    <property type="chains" value="A=1-231"/>
</dbReference>
<dbReference type="PDB" id="8C0L">
    <property type="method" value="X-ray"/>
    <property type="resolution" value="1.60 A"/>
    <property type="chains" value="A=1-231"/>
</dbReference>
<dbReference type="PDB" id="8C1Y">
    <property type="method" value="X-ray"/>
    <property type="resolution" value="1.80 A"/>
    <property type="chains" value="A=1-231"/>
</dbReference>
<dbReference type="PDB" id="8C28">
    <property type="method" value="X-ray"/>
    <property type="resolution" value="1.60 A"/>
    <property type="chains" value="AAA/BBB=1-231"/>
</dbReference>
<dbReference type="PDB" id="8C2D">
    <property type="method" value="X-ray"/>
    <property type="resolution" value="2.15 A"/>
    <property type="chains" value="AAA=1-231"/>
</dbReference>
<dbReference type="PDB" id="8C2E">
    <property type="method" value="X-ray"/>
    <property type="resolution" value="2.20 A"/>
    <property type="chains" value="A=1-231"/>
</dbReference>
<dbReference type="PDB" id="8C2F">
    <property type="method" value="X-ray"/>
    <property type="resolution" value="2.30 A"/>
    <property type="chains" value="A=1-231"/>
</dbReference>
<dbReference type="PDB" id="8C2G">
    <property type="method" value="X-ray"/>
    <property type="resolution" value="1.60 A"/>
    <property type="chains" value="A=1-231"/>
</dbReference>
<dbReference type="PDB" id="8C2Y">
    <property type="method" value="X-ray"/>
    <property type="resolution" value="1.46 A"/>
    <property type="chains" value="A=1-231"/>
</dbReference>
<dbReference type="PDB" id="8C30">
    <property type="method" value="X-ray"/>
    <property type="resolution" value="1.40 A"/>
    <property type="chains" value="AAA=1-231"/>
</dbReference>
<dbReference type="PDB" id="8C3C">
    <property type="method" value="X-ray"/>
    <property type="resolution" value="1.60 A"/>
    <property type="chains" value="A=1-231"/>
</dbReference>
<dbReference type="PDB" id="8C3Z">
    <property type="method" value="X-ray"/>
    <property type="resolution" value="1.40 A"/>
    <property type="chains" value="A=1-231"/>
</dbReference>
<dbReference type="PDB" id="8C40">
    <property type="method" value="X-ray"/>
    <property type="resolution" value="1.40 A"/>
    <property type="chains" value="A=1-231"/>
</dbReference>
<dbReference type="PDB" id="8C42">
    <property type="method" value="X-ray"/>
    <property type="resolution" value="1.40 A"/>
    <property type="chains" value="A=1-231"/>
</dbReference>
<dbReference type="PDB" id="8C43">
    <property type="method" value="X-ray"/>
    <property type="resolution" value="1.40 A"/>
    <property type="chains" value="A=1-231"/>
</dbReference>
<dbReference type="PDB" id="8C4F">
    <property type="method" value="X-ray"/>
    <property type="resolution" value="1.40 A"/>
    <property type="chains" value="A=1-231"/>
</dbReference>
<dbReference type="PDB" id="8C4G">
    <property type="method" value="X-ray"/>
    <property type="resolution" value="1.46 A"/>
    <property type="chains" value="A=1-231"/>
</dbReference>
<dbReference type="PDB" id="8P0D">
    <property type="method" value="X-ray"/>
    <property type="resolution" value="1.31 A"/>
    <property type="chains" value="A=1-231"/>
</dbReference>
<dbReference type="PDB" id="8Q4L">
    <property type="method" value="EM"/>
    <property type="resolution" value="5.12 A"/>
    <property type="chains" value="B/C=1-231"/>
</dbReference>
<dbReference type="PDB" id="8Q55">
    <property type="method" value="X-ray"/>
    <property type="resolution" value="1.30 A"/>
    <property type="chains" value="A=1-231"/>
</dbReference>
<dbReference type="PDB" id="8Q5C">
    <property type="method" value="X-ray"/>
    <property type="resolution" value="2.00 A"/>
    <property type="chains" value="A=1-231"/>
</dbReference>
<dbReference type="PDB" id="8R0Z">
    <property type="method" value="X-ray"/>
    <property type="resolution" value="1.20 A"/>
    <property type="chains" value="A=1-248"/>
</dbReference>
<dbReference type="PDB" id="8RRK">
    <property type="method" value="X-ray"/>
    <property type="resolution" value="1.93 A"/>
    <property type="chains" value="A/B=1-248"/>
</dbReference>
<dbReference type="PDB" id="8RRL">
    <property type="method" value="X-ray"/>
    <property type="resolution" value="2.15 A"/>
    <property type="chains" value="A/B=1-248"/>
</dbReference>
<dbReference type="PDB" id="8RRM">
    <property type="method" value="X-ray"/>
    <property type="resolution" value="2.00 A"/>
    <property type="chains" value="A/B=1-248"/>
</dbReference>
<dbReference type="PDB" id="8S42">
    <property type="method" value="X-ray"/>
    <property type="resolution" value="1.70 A"/>
    <property type="chains" value="B=1-231"/>
</dbReference>
<dbReference type="PDB" id="9AXA">
    <property type="method" value="EM"/>
    <property type="resolution" value="4.36 A"/>
    <property type="chains" value="E/F=1-248"/>
</dbReference>
<dbReference type="PDB" id="9F35">
    <property type="method" value="X-ray"/>
    <property type="resolution" value="2.30 A"/>
    <property type="chains" value="A=1-231"/>
</dbReference>
<dbReference type="PDBsum" id="1YWT"/>
<dbReference type="PDBsum" id="1YZ5"/>
<dbReference type="PDBsum" id="3IQJ"/>
<dbReference type="PDBsum" id="3IQU"/>
<dbReference type="PDBsum" id="3IQV"/>
<dbReference type="PDBsum" id="3LW1"/>
<dbReference type="PDBsum" id="3MHR"/>
<dbReference type="PDBsum" id="3O8I"/>
<dbReference type="PDBsum" id="3P1N"/>
<dbReference type="PDBsum" id="3P1O"/>
<dbReference type="PDBsum" id="3P1P"/>
<dbReference type="PDBsum" id="3P1Q"/>
<dbReference type="PDBsum" id="3P1R"/>
<dbReference type="PDBsum" id="3P1S"/>
<dbReference type="PDBsum" id="3SMK"/>
<dbReference type="PDBsum" id="3SML"/>
<dbReference type="PDBsum" id="3SMM"/>
<dbReference type="PDBsum" id="3SMN"/>
<dbReference type="PDBsum" id="3SMO"/>
<dbReference type="PDBsum" id="3SP5"/>
<dbReference type="PDBsum" id="3SPR"/>
<dbReference type="PDBsum" id="3T0L"/>
<dbReference type="PDBsum" id="3T0M"/>
<dbReference type="PDBsum" id="3U9X"/>
<dbReference type="PDBsum" id="3UX0"/>
<dbReference type="PDBsum" id="4DAT"/>
<dbReference type="PDBsum" id="4DAU"/>
<dbReference type="PDBsum" id="4DHM"/>
<dbReference type="PDBsum" id="4DHN"/>
<dbReference type="PDBsum" id="4DHO"/>
<dbReference type="PDBsum" id="4DHP"/>
<dbReference type="PDBsum" id="4DHQ"/>
<dbReference type="PDBsum" id="4DHR"/>
<dbReference type="PDBsum" id="4DHS"/>
<dbReference type="PDBsum" id="4DHT"/>
<dbReference type="PDBsum" id="4DHU"/>
<dbReference type="PDBsum" id="4FL5"/>
<dbReference type="PDBsum" id="4FR3"/>
<dbReference type="PDBsum" id="4IEA"/>
<dbReference type="PDBsum" id="4JC3"/>
<dbReference type="PDBsum" id="4JDD"/>
<dbReference type="PDBsum" id="4QLI"/>
<dbReference type="PDBsum" id="4Y32"/>
<dbReference type="PDBsum" id="4Y3B"/>
<dbReference type="PDBsum" id="4Y5I"/>
<dbReference type="PDBsum" id="5BTV"/>
<dbReference type="PDBsum" id="5HF3"/>
<dbReference type="PDBsum" id="5LTW"/>
<dbReference type="PDBsum" id="5LU1"/>
<dbReference type="PDBsum" id="5LU2"/>
<dbReference type="PDBsum" id="5MHC"/>
<dbReference type="PDBsum" id="5MOC"/>
<dbReference type="PDBsum" id="5MXO"/>
<dbReference type="PDBsum" id="5MY9"/>
<dbReference type="PDBsum" id="5MYC"/>
<dbReference type="PDBsum" id="5N5R"/>
<dbReference type="PDBsum" id="5N5T"/>
<dbReference type="PDBsum" id="5N5W"/>
<dbReference type="PDBsum" id="5N75"/>
<dbReference type="PDBsum" id="5OEG"/>
<dbReference type="PDBsum" id="5OEH"/>
<dbReference type="PDBsum" id="5OK9"/>
<dbReference type="PDBsum" id="5OKF"/>
<dbReference type="PDBsum" id="5OM0"/>
<dbReference type="PDBsum" id="5OMA"/>
<dbReference type="PDBsum" id="6FAU"/>
<dbReference type="PDBsum" id="6FAV"/>
<dbReference type="PDBsum" id="6FAW"/>
<dbReference type="PDBsum" id="6FBB"/>
<dbReference type="PDBsum" id="6FBW"/>
<dbReference type="PDBsum" id="6FBY"/>
<dbReference type="PDBsum" id="6FCP"/>
<dbReference type="PDBsum" id="6FI4"/>
<dbReference type="PDBsum" id="6FI5"/>
<dbReference type="PDBsum" id="6G6X"/>
<dbReference type="PDBsum" id="6G8I"/>
<dbReference type="PDBsum" id="6G8J"/>
<dbReference type="PDBsum" id="6G8K"/>
<dbReference type="PDBsum" id="6G8L"/>
<dbReference type="PDBsum" id="6G8P"/>
<dbReference type="PDBsum" id="6G8Q"/>
<dbReference type="PDBsum" id="6GHP"/>
<dbReference type="PDBsum" id="6HHP"/>
<dbReference type="PDBsum" id="6HKB"/>
<dbReference type="PDBsum" id="6HKF"/>
<dbReference type="PDBsum" id="6HMT"/>
<dbReference type="PDBsum" id="6HMU"/>
<dbReference type="PDBsum" id="6HN2"/>
<dbReference type="PDBsum" id="6NV2"/>
<dbReference type="PDBsum" id="6QDR"/>
<dbReference type="PDBsum" id="6QDS"/>
<dbReference type="PDBsum" id="6QDT"/>
<dbReference type="PDBsum" id="6QDU"/>
<dbReference type="PDBsum" id="6QHL"/>
<dbReference type="PDBsum" id="6QHM"/>
<dbReference type="PDBsum" id="6QIU"/>
<dbReference type="PDBsum" id="6QZR"/>
<dbReference type="PDBsum" id="6QZS"/>
<dbReference type="PDBsum" id="6R5L"/>
<dbReference type="PDBsum" id="6RHC"/>
<dbReference type="PDBsum" id="6RJL"/>
<dbReference type="PDBsum" id="6RJQ"/>
<dbReference type="PDBsum" id="6RJZ"/>
<dbReference type="PDBsum" id="6RK8"/>
<dbReference type="PDBsum" id="6RKI"/>
<dbReference type="PDBsum" id="6RKK"/>
<dbReference type="PDBsum" id="6RKM"/>
<dbReference type="PDBsum" id="6RL3"/>
<dbReference type="PDBsum" id="6RL4"/>
<dbReference type="PDBsum" id="6RL6"/>
<dbReference type="PDBsum" id="6RM5"/>
<dbReference type="PDBsum" id="6RM7"/>
<dbReference type="PDBsum" id="6RP6"/>
<dbReference type="PDBsum" id="6RWH"/>
<dbReference type="PDBsum" id="6RWI"/>
<dbReference type="PDBsum" id="6RWS"/>
<dbReference type="PDBsum" id="6RWU"/>
<dbReference type="PDBsum" id="6RX2"/>
<dbReference type="PDBsum" id="6S39"/>
<dbReference type="PDBsum" id="6S3C"/>
<dbReference type="PDBsum" id="6S40"/>
<dbReference type="PDBsum" id="6S9Q"/>
<dbReference type="PDBsum" id="6SIN"/>
<dbReference type="PDBsum" id="6SIO"/>
<dbReference type="PDBsum" id="6SIP"/>
<dbReference type="PDBsum" id="6SIQ"/>
<dbReference type="PDBsum" id="6SLV"/>
<dbReference type="PDBsum" id="6SLW"/>
<dbReference type="PDBsum" id="6SLX"/>
<dbReference type="PDBsum" id="6T5F"/>
<dbReference type="PDBsum" id="6T5H"/>
<dbReference type="PDBsum" id="6T80"/>
<dbReference type="PDBsum" id="6TCH"/>
<dbReference type="PDBsum" id="6TJM"/>
<dbReference type="PDBsum" id="6TL3"/>
<dbReference type="PDBsum" id="6TLF"/>
<dbReference type="PDBsum" id="6TLG"/>
<dbReference type="PDBsum" id="6TM7"/>
<dbReference type="PDBsum" id="6TWZ"/>
<dbReference type="PDBsum" id="6W0L"/>
<dbReference type="PDBsum" id="6XWD"/>
<dbReference type="PDBsum" id="6XXC"/>
<dbReference type="PDBsum" id="6XY5"/>
<dbReference type="PDBsum" id="6Y18"/>
<dbReference type="PDBsum" id="6Y1D"/>
<dbReference type="PDBsum" id="6Y1J"/>
<dbReference type="PDBsum" id="6Y3M"/>
<dbReference type="PDBsum" id="6Y3O"/>
<dbReference type="PDBsum" id="6Y3R"/>
<dbReference type="PDBsum" id="6Y3S"/>
<dbReference type="PDBsum" id="6Y3V"/>
<dbReference type="PDBsum" id="6Y3W"/>
<dbReference type="PDBsum" id="6Y40"/>
<dbReference type="PDBsum" id="6Y44"/>
<dbReference type="PDBsum" id="6Y58"/>
<dbReference type="PDBsum" id="6Y7T"/>
<dbReference type="PDBsum" id="6Y8A"/>
<dbReference type="PDBsum" id="6Y8B"/>
<dbReference type="PDBsum" id="6Y8D"/>
<dbReference type="PDBsum" id="6Y8E"/>
<dbReference type="PDBsum" id="6YE9"/>
<dbReference type="PDBsum" id="6YIA"/>
<dbReference type="PDBsum" id="6YIB"/>
<dbReference type="PDBsum" id="6YIC"/>
<dbReference type="PDBsum" id="6YLU"/>
<dbReference type="PDBsum" id="6YOW"/>
<dbReference type="PDBsum" id="6YOX"/>
<dbReference type="PDBsum" id="6YOY"/>
<dbReference type="PDBsum" id="6YP2"/>
<dbReference type="PDBsum" id="6YP3"/>
<dbReference type="PDBsum" id="6YP8"/>
<dbReference type="PDBsum" id="6YPL"/>
<dbReference type="PDBsum" id="6YPY"/>
<dbReference type="PDBsum" id="6YQ2"/>
<dbReference type="PDBsum" id="6YR5"/>
<dbReference type="PDBsum" id="6YR6"/>
<dbReference type="PDBsum" id="6YR7"/>
<dbReference type="PDBsum" id="6ZCJ"/>
<dbReference type="PDBsum" id="6ZVB"/>
<dbReference type="PDBsum" id="6ZVC"/>
<dbReference type="PDBsum" id="6ZVD"/>
<dbReference type="PDBsum" id="6ZVE"/>
<dbReference type="PDBsum" id="7AEW"/>
<dbReference type="PDBsum" id="7AOG"/>
<dbReference type="PDBsum" id="7AXN"/>
<dbReference type="PDBsum" id="7AYF"/>
<dbReference type="PDBsum" id="7AZ1"/>
<dbReference type="PDBsum" id="7AZ2"/>
<dbReference type="PDBsum" id="7B13"/>
<dbReference type="PDBsum" id="7B15"/>
<dbReference type="PDBsum" id="7B9M"/>
<dbReference type="PDBsum" id="7B9R"/>
<dbReference type="PDBsum" id="7B9T"/>
<dbReference type="PDBsum" id="7BA3"/>
<dbReference type="PDBsum" id="7BA5"/>
<dbReference type="PDBsum" id="7BA6"/>
<dbReference type="PDBsum" id="7BA7"/>
<dbReference type="PDBsum" id="7BA8"/>
<dbReference type="PDBsum" id="7BA9"/>
<dbReference type="PDBsum" id="7BAA"/>
<dbReference type="PDBsum" id="7BAB"/>
<dbReference type="PDBsum" id="7BDP"/>
<dbReference type="PDBsum" id="7BDT"/>
<dbReference type="PDBsum" id="7BDY"/>
<dbReference type="PDBsum" id="7BFW"/>
<dbReference type="PDBsum" id="7BG3"/>
<dbReference type="PDBsum" id="7BGQ"/>
<dbReference type="PDBsum" id="7BGR"/>
<dbReference type="PDBsum" id="7BGV"/>
<dbReference type="PDBsum" id="7BGW"/>
<dbReference type="PDBsum" id="7BI3"/>
<dbReference type="PDBsum" id="7BIQ"/>
<dbReference type="PDBsum" id="7BIW"/>
<dbReference type="PDBsum" id="7BIY"/>
<dbReference type="PDBsum" id="7BJB"/>
<dbReference type="PDBsum" id="7BJF"/>
<dbReference type="PDBsum" id="7BJL"/>
<dbReference type="PDBsum" id="7BJW"/>
<dbReference type="PDBsum" id="7BKH"/>
<dbReference type="PDBsum" id="7BM9"/>
<dbReference type="PDBsum" id="7BMC"/>
<dbReference type="PDBsum" id="7NFW"/>
<dbReference type="PDBsum" id="7NIF"/>
<dbReference type="PDBsum" id="7NIG"/>
<dbReference type="PDBsum" id="7NIX"/>
<dbReference type="PDBsum" id="7NIZ"/>
<dbReference type="PDBsum" id="7NJ6"/>
<dbReference type="PDBsum" id="7NJ8"/>
<dbReference type="PDBsum" id="7NJ9"/>
<dbReference type="PDBsum" id="7NJA"/>
<dbReference type="PDBsum" id="7NJB"/>
<dbReference type="PDBsum" id="7NK3"/>
<dbReference type="PDBsum" id="7NK5"/>
<dbReference type="PDBsum" id="7NLA"/>
<dbReference type="PDBsum" id="7NLE"/>
<dbReference type="PDBsum" id="7NM1"/>
<dbReference type="PDBsum" id="7NM3"/>
<dbReference type="PDBsum" id="7NM9"/>
<dbReference type="PDBsum" id="7NMA"/>
<dbReference type="PDBsum" id="7NMH"/>
<dbReference type="PDBsum" id="7NMW"/>
<dbReference type="PDBsum" id="7NMX"/>
<dbReference type="PDBsum" id="7NN2"/>
<dbReference type="PDBsum" id="7NND"/>
<dbReference type="PDBsum" id="7NNE"/>
<dbReference type="PDBsum" id="7NP2"/>
<dbReference type="PDBsum" id="7NPB"/>
<dbReference type="PDBsum" id="7NPG"/>
<dbReference type="PDBsum" id="7NQP"/>
<dbReference type="PDBsum" id="7NR7"/>
<dbReference type="PDBsum" id="7NRK"/>
<dbReference type="PDBsum" id="7NRL"/>
<dbReference type="PDBsum" id="7NSV"/>
<dbReference type="PDBsum" id="7NV4"/>
<dbReference type="PDBsum" id="7NVI"/>
<dbReference type="PDBsum" id="7NWS"/>
<dbReference type="PDBsum" id="7NXS"/>
<dbReference type="PDBsum" id="7NXT"/>
<dbReference type="PDBsum" id="7NXW"/>
<dbReference type="PDBsum" id="7NXY"/>
<dbReference type="PDBsum" id="7NY4"/>
<dbReference type="PDBsum" id="7NYE"/>
<dbReference type="PDBsum" id="7NYF"/>
<dbReference type="PDBsum" id="7NYG"/>
<dbReference type="PDBsum" id="7NZ6"/>
<dbReference type="PDBsum" id="7NZG"/>
<dbReference type="PDBsum" id="7NZK"/>
<dbReference type="PDBsum" id="7NZV"/>
<dbReference type="PDBsum" id="7O07"/>
<dbReference type="PDBsum" id="7O34"/>
<dbReference type="PDBsum" id="7O3A"/>
<dbReference type="PDBsum" id="7O3F"/>
<dbReference type="PDBsum" id="7O3P"/>
<dbReference type="PDBsum" id="7O3Q"/>
<dbReference type="PDBsum" id="7O3R"/>
<dbReference type="PDBsum" id="7O3S"/>
<dbReference type="PDBsum" id="7O57"/>
<dbReference type="PDBsum" id="7O59"/>
<dbReference type="PDBsum" id="7O5A"/>
<dbReference type="PDBsum" id="7O5C"/>
<dbReference type="PDBsum" id="7O5D"/>
<dbReference type="PDBsum" id="7O5F"/>
<dbReference type="PDBsum" id="7O5G"/>
<dbReference type="PDBsum" id="7O5O"/>
<dbReference type="PDBsum" id="7O5P"/>
<dbReference type="PDBsum" id="7O5S"/>
<dbReference type="PDBsum" id="7O5U"/>
<dbReference type="PDBsum" id="7O5X"/>
<dbReference type="PDBsum" id="7O6F"/>
<dbReference type="PDBsum" id="7O6G"/>
<dbReference type="PDBsum" id="7O6I"/>
<dbReference type="PDBsum" id="7O6J"/>
<dbReference type="PDBsum" id="7O6K"/>
<dbReference type="PDBsum" id="7O6M"/>
<dbReference type="PDBsum" id="7O6O"/>
<dbReference type="PDBsum" id="7OB5"/>
<dbReference type="PDBsum" id="7OB8"/>
<dbReference type="PDBsum" id="7OBC"/>
<dbReference type="PDBsum" id="7OBD"/>
<dbReference type="PDBsum" id="7OBG"/>
<dbReference type="PDBsum" id="7OBH"/>
<dbReference type="PDBsum" id="7OBK"/>
<dbReference type="PDBsum" id="7OBL"/>
<dbReference type="PDBsum" id="7OBS"/>
<dbReference type="PDBsum" id="7OBT"/>
<dbReference type="PDBsum" id="7OBX"/>
<dbReference type="PDBsum" id="7OBY"/>
<dbReference type="PDBsum" id="7OPW"/>
<dbReference type="PDBsum" id="7OQ7"/>
<dbReference type="PDBsum" id="7OQ8"/>
<dbReference type="PDBsum" id="7OQ9"/>
<dbReference type="PDBsum" id="7OQA"/>
<dbReference type="PDBsum" id="7OQG"/>
<dbReference type="PDBsum" id="7OQJ"/>
<dbReference type="PDBsum" id="7OQS"/>
<dbReference type="PDBsum" id="7OQU"/>
<dbReference type="PDBsum" id="7OQW"/>
<dbReference type="PDBsum" id="7OR3"/>
<dbReference type="PDBsum" id="7OR5"/>
<dbReference type="PDBsum" id="7OR7"/>
<dbReference type="PDBsum" id="7OR8"/>
<dbReference type="PDBsum" id="7ORG"/>
<dbReference type="PDBsum" id="7ORH"/>
<dbReference type="PDBsum" id="7ORS"/>
<dbReference type="PDBsum" id="7ORT"/>
<dbReference type="PDBsum" id="7PWT"/>
<dbReference type="PDBsum" id="7PWZ"/>
<dbReference type="PDBsum" id="7QIK"/>
<dbReference type="PDBsum" id="7QIP"/>
<dbReference type="PDBsum" id="7ZMU"/>
<dbReference type="PDBsum" id="7ZMW"/>
<dbReference type="PDBsum" id="8A62"/>
<dbReference type="PDBsum" id="8A65"/>
<dbReference type="PDBsum" id="8A68"/>
<dbReference type="PDBsum" id="8A6F"/>
<dbReference type="PDBsum" id="8A6H"/>
<dbReference type="PDBsum" id="8ADM"/>
<dbReference type="PDBsum" id="8AFN"/>
<dbReference type="PDBsum" id="8AI0"/>
<dbReference type="PDBsum" id="8ALR"/>
<dbReference type="PDBsum" id="8ALT"/>
<dbReference type="PDBsum" id="8ALV"/>
<dbReference type="PDBsum" id="8ALW"/>
<dbReference type="PDBsum" id="8AM7"/>
<dbReference type="PDBsum" id="8ANB"/>
<dbReference type="PDBsum" id="8ANC"/>
<dbReference type="PDBsum" id="8ANF"/>
<dbReference type="PDBsum" id="8AOY"/>
<dbReference type="PDBsum" id="8APS"/>
<dbReference type="PDBsum" id="8AQ1"/>
<dbReference type="PDBsum" id="8AQC"/>
<dbReference type="PDBsum" id="8AQE"/>
<dbReference type="PDBsum" id="8AQZ"/>
<dbReference type="PDBsum" id="8AR4"/>
<dbReference type="PDBsum" id="8AR5"/>
<dbReference type="PDBsum" id="8ARG"/>
<dbReference type="PDBsum" id="8ARO"/>
<dbReference type="PDBsum" id="8ARQ"/>
<dbReference type="PDBsum" id="8ARR"/>
<dbReference type="PDBsum" id="8ARW"/>
<dbReference type="PDBsum" id="8ARX"/>
<dbReference type="PDBsum" id="8ARY"/>
<dbReference type="PDBsum" id="8ARZ"/>
<dbReference type="PDBsum" id="8AS1"/>
<dbReference type="PDBsum" id="8AT9"/>
<dbReference type="PDBsum" id="8ATP"/>
<dbReference type="PDBsum" id="8ATR"/>
<dbReference type="PDBsum" id="8ATS"/>
<dbReference type="PDBsum" id="8AU2"/>
<dbReference type="PDBsum" id="8AUS"/>
<dbReference type="PDBsum" id="8AUY"/>
<dbReference type="PDBsum" id="8AV0"/>
<dbReference type="PDBsum" id="8AV3"/>
<dbReference type="PDBsum" id="8AV4"/>
<dbReference type="PDBsum" id="8AV7"/>
<dbReference type="PDBsum" id="8AV8"/>
<dbReference type="PDBsum" id="8AWG"/>
<dbReference type="PDBsum" id="8AXE"/>
<dbReference type="PDBsum" id="8AXU"/>
<dbReference type="PDBsum" id="8AZE"/>
<dbReference type="PDBsum" id="8B2I"/>
<dbReference type="PDBsum" id="8B2K"/>
<dbReference type="PDBsum" id="8B39"/>
<dbReference type="PDBsum" id="8B4Q"/>
<dbReference type="PDBsum" id="8B5P"/>
<dbReference type="PDBsum" id="8BFC"/>
<dbReference type="PDBsum" id="8BI7"/>
<dbReference type="PDBsum" id="8BJG"/>
<dbReference type="PDBsum" id="8BJN"/>
<dbReference type="PDBsum" id="8BM5"/>
<dbReference type="PDBsum" id="8BTQ"/>
<dbReference type="PDBsum" id="8BWE"/>
<dbReference type="PDBsum" id="8BWH"/>
<dbReference type="PDBsum" id="8BWJ"/>
<dbReference type="PDBsum" id="8BWX"/>
<dbReference type="PDBsum" id="8BWZ"/>
<dbReference type="PDBsum" id="8BX0"/>
<dbReference type="PDBsum" id="8BX3"/>
<dbReference type="PDBsum" id="8BX4"/>
<dbReference type="PDBsum" id="8BXI"/>
<dbReference type="PDBsum" id="8BXM"/>
<dbReference type="PDBsum" id="8BXN"/>
<dbReference type="PDBsum" id="8BXO"/>
<dbReference type="PDBsum" id="8BXQ"/>
<dbReference type="PDBsum" id="8BXS"/>
<dbReference type="PDBsum" id="8BY9"/>
<dbReference type="PDBsum" id="8BYB"/>
<dbReference type="PDBsum" id="8BYC"/>
<dbReference type="PDBsum" id="8BYD"/>
<dbReference type="PDBsum" id="8BYE"/>
<dbReference type="PDBsum" id="8BYF"/>
<dbReference type="PDBsum" id="8BYG"/>
<dbReference type="PDBsum" id="8BYO"/>
<dbReference type="PDBsum" id="8BYY"/>
<dbReference type="PDBsum" id="8BYZ"/>
<dbReference type="PDBsum" id="8BZ0"/>
<dbReference type="PDBsum" id="8BZ9"/>
<dbReference type="PDBsum" id="8BZA"/>
<dbReference type="PDBsum" id="8BZB"/>
<dbReference type="PDBsum" id="8BZC"/>
<dbReference type="PDBsum" id="8BZD"/>
<dbReference type="PDBsum" id="8BZE"/>
<dbReference type="PDBsum" id="8BZF"/>
<dbReference type="PDBsum" id="8BZG"/>
<dbReference type="PDBsum" id="8BZH"/>
<dbReference type="PDBsum" id="8BZT"/>
<dbReference type="PDBsum" id="8BZW"/>
<dbReference type="PDBsum" id="8C04"/>
<dbReference type="PDBsum" id="8C0K"/>
<dbReference type="PDBsum" id="8C0L"/>
<dbReference type="PDBsum" id="8C1Y"/>
<dbReference type="PDBsum" id="8C28"/>
<dbReference type="PDBsum" id="8C2D"/>
<dbReference type="PDBsum" id="8C2E"/>
<dbReference type="PDBsum" id="8C2F"/>
<dbReference type="PDBsum" id="8C2G"/>
<dbReference type="PDBsum" id="8C2Y"/>
<dbReference type="PDBsum" id="8C30"/>
<dbReference type="PDBsum" id="8C3C"/>
<dbReference type="PDBsum" id="8C3Z"/>
<dbReference type="PDBsum" id="8C40"/>
<dbReference type="PDBsum" id="8C42"/>
<dbReference type="PDBsum" id="8C43"/>
<dbReference type="PDBsum" id="8C4F"/>
<dbReference type="PDBsum" id="8C4G"/>
<dbReference type="PDBsum" id="8P0D"/>
<dbReference type="PDBsum" id="8Q4L"/>
<dbReference type="PDBsum" id="8Q55"/>
<dbReference type="PDBsum" id="8Q5C"/>
<dbReference type="PDBsum" id="8R0Z"/>
<dbReference type="PDBsum" id="8RRK"/>
<dbReference type="PDBsum" id="8RRL"/>
<dbReference type="PDBsum" id="8RRM"/>
<dbReference type="PDBsum" id="8S42"/>
<dbReference type="PDBsum" id="9AXA"/>
<dbReference type="PDBsum" id="9F35"/>
<dbReference type="EMDB" id="EMD-18149"/>
<dbReference type="EMDB" id="EMD-43931"/>
<dbReference type="SMR" id="P31947"/>
<dbReference type="BioGRID" id="109072">
    <property type="interactions" value="707"/>
</dbReference>
<dbReference type="DIP" id="DIP-29861N"/>
<dbReference type="ELM" id="P31947"/>
<dbReference type="FunCoup" id="P31947">
    <property type="interactions" value="986"/>
</dbReference>
<dbReference type="IntAct" id="P31947">
    <property type="interactions" value="606"/>
</dbReference>
<dbReference type="MINT" id="P31947"/>
<dbReference type="STRING" id="9606.ENSP00000340989"/>
<dbReference type="BindingDB" id="P31947"/>
<dbReference type="ChEMBL" id="CHEMBL1909482"/>
<dbReference type="GlyGen" id="P31947">
    <property type="glycosylation" value="3 sites, 1 N-linked glycan (1 site), 1 O-linked glycan (2 sites)"/>
</dbReference>
<dbReference type="iPTMnet" id="P31947"/>
<dbReference type="MetOSite" id="P31947"/>
<dbReference type="PhosphoSitePlus" id="P31947"/>
<dbReference type="SwissPalm" id="P31947"/>
<dbReference type="BioMuta" id="SFN"/>
<dbReference type="DMDM" id="398953"/>
<dbReference type="OGP" id="P31947"/>
<dbReference type="jPOST" id="P31947"/>
<dbReference type="MassIVE" id="P31947"/>
<dbReference type="PaxDb" id="9606-ENSP00000340989"/>
<dbReference type="PeptideAtlas" id="P31947"/>
<dbReference type="PRIDE" id="P31947"/>
<dbReference type="ProteomicsDB" id="54818"/>
<dbReference type="ProteomicsDB" id="54819">
    <molecule id="P31947-2"/>
</dbReference>
<dbReference type="Pumba" id="P31947"/>
<dbReference type="TopDownProteomics" id="P31947-1">
    <molecule id="P31947-1"/>
</dbReference>
<dbReference type="TopDownProteomics" id="P31947-2">
    <molecule id="P31947-2"/>
</dbReference>
<dbReference type="Antibodypedia" id="1907">
    <property type="antibodies" value="778 antibodies from 45 providers"/>
</dbReference>
<dbReference type="CPTC" id="P31947">
    <property type="antibodies" value="3 antibodies"/>
</dbReference>
<dbReference type="DNASU" id="2810"/>
<dbReference type="Ensembl" id="ENST00000339276.6">
    <molecule id="P31947-1"/>
    <property type="protein sequence ID" value="ENSP00000340989.4"/>
    <property type="gene ID" value="ENSG00000175793.12"/>
</dbReference>
<dbReference type="GeneID" id="2810"/>
<dbReference type="KEGG" id="hsa:2810"/>
<dbReference type="MANE-Select" id="ENST00000339276.6">
    <property type="protein sequence ID" value="ENSP00000340989.4"/>
    <property type="RefSeq nucleotide sequence ID" value="NM_006142.5"/>
    <property type="RefSeq protein sequence ID" value="NP_006133.1"/>
</dbReference>
<dbReference type="UCSC" id="uc001bnc.2">
    <molecule id="P31947-1"/>
    <property type="organism name" value="human"/>
</dbReference>
<dbReference type="AGR" id="HGNC:10773"/>
<dbReference type="CTD" id="2810"/>
<dbReference type="DisGeNET" id="2810"/>
<dbReference type="GeneCards" id="SFN"/>
<dbReference type="HGNC" id="HGNC:10773">
    <property type="gene designation" value="SFN"/>
</dbReference>
<dbReference type="HPA" id="ENSG00000175793">
    <property type="expression patterns" value="Group enriched (esophagus, skin, vagina)"/>
</dbReference>
<dbReference type="MIM" id="601290">
    <property type="type" value="gene"/>
</dbReference>
<dbReference type="neXtProt" id="NX_P31947"/>
<dbReference type="OpenTargets" id="ENSG00000175793"/>
<dbReference type="PharmGKB" id="PA177"/>
<dbReference type="VEuPathDB" id="HostDB:ENSG00000175793"/>
<dbReference type="eggNOG" id="KOG0841">
    <property type="taxonomic scope" value="Eukaryota"/>
</dbReference>
<dbReference type="GeneTree" id="ENSGT01110000267238"/>
<dbReference type="HOGENOM" id="CLU_058290_1_0_1"/>
<dbReference type="InParanoid" id="P31947"/>
<dbReference type="OMA" id="ECRVFYL"/>
<dbReference type="OrthoDB" id="10260625at2759"/>
<dbReference type="PAN-GO" id="P31947">
    <property type="GO annotations" value="4 GO annotations based on evolutionary models"/>
</dbReference>
<dbReference type="PhylomeDB" id="P31947"/>
<dbReference type="TreeFam" id="TF102003"/>
<dbReference type="PathwayCommons" id="P31947"/>
<dbReference type="Reactome" id="R-HSA-111447">
    <property type="pathway name" value="Activation of BAD and translocation to mitochondria"/>
</dbReference>
<dbReference type="Reactome" id="R-HSA-1445148">
    <property type="pathway name" value="Translocation of SLC2A4 (GLUT4) to the plasma membrane"/>
</dbReference>
<dbReference type="Reactome" id="R-HSA-5625740">
    <property type="pathway name" value="RHO GTPases activate PKNs"/>
</dbReference>
<dbReference type="Reactome" id="R-HSA-5628897">
    <property type="pathway name" value="TP53 Regulates Metabolic Genes"/>
</dbReference>
<dbReference type="Reactome" id="R-HSA-6804114">
    <property type="pathway name" value="TP53 Regulates Transcription of Genes Involved in G2 Cell Cycle Arrest"/>
</dbReference>
<dbReference type="Reactome" id="R-HSA-75035">
    <property type="pathway name" value="Chk1/Chk2(Cds1) mediated inactivation of Cyclin B:Cdk1 complex"/>
</dbReference>
<dbReference type="Reactome" id="R-HSA-9614399">
    <property type="pathway name" value="Regulation of localization of FOXO transcription factors"/>
</dbReference>
<dbReference type="Reactome" id="R-HSA-9735871">
    <property type="pathway name" value="SARS-CoV-1 targets host intracellular signalling and regulatory pathways"/>
</dbReference>
<dbReference type="Reactome" id="R-HSA-9755779">
    <property type="pathway name" value="SARS-CoV-2 targets host intracellular signalling and regulatory pathways"/>
</dbReference>
<dbReference type="SignaLink" id="P31947"/>
<dbReference type="SIGNOR" id="P31947"/>
<dbReference type="BioGRID-ORCS" id="2810">
    <property type="hits" value="18 hits in 1161 CRISPR screens"/>
</dbReference>
<dbReference type="CD-CODE" id="DEE660B4">
    <property type="entry name" value="Stress granule"/>
</dbReference>
<dbReference type="CD-CODE" id="FB4E32DD">
    <property type="entry name" value="Presynaptic clusters and postsynaptic densities"/>
</dbReference>
<dbReference type="ChiTaRS" id="SFN">
    <property type="organism name" value="human"/>
</dbReference>
<dbReference type="EvolutionaryTrace" id="P31947"/>
<dbReference type="GeneWiki" id="Stratifin"/>
<dbReference type="GenomeRNAi" id="2810"/>
<dbReference type="Pharos" id="P31947">
    <property type="development level" value="Tbio"/>
</dbReference>
<dbReference type="PRO" id="PR:P31947"/>
<dbReference type="Proteomes" id="UP000005640">
    <property type="component" value="Chromosome 1"/>
</dbReference>
<dbReference type="RNAct" id="P31947">
    <property type="molecule type" value="protein"/>
</dbReference>
<dbReference type="Bgee" id="ENSG00000175793">
    <property type="expression patterns" value="Expressed in cervix squamous epithelium and 197 other cell types or tissues"/>
</dbReference>
<dbReference type="GO" id="GO:0005737">
    <property type="term" value="C:cytoplasm"/>
    <property type="evidence" value="ECO:0000314"/>
    <property type="project" value="UniProtKB"/>
</dbReference>
<dbReference type="GO" id="GO:0005829">
    <property type="term" value="C:cytosol"/>
    <property type="evidence" value="ECO:0000314"/>
    <property type="project" value="HPA"/>
</dbReference>
<dbReference type="GO" id="GO:0070062">
    <property type="term" value="C:extracellular exosome"/>
    <property type="evidence" value="ECO:0007005"/>
    <property type="project" value="UniProtKB"/>
</dbReference>
<dbReference type="GO" id="GO:0005615">
    <property type="term" value="C:extracellular space"/>
    <property type="evidence" value="ECO:0000304"/>
    <property type="project" value="ProtInc"/>
</dbReference>
<dbReference type="GO" id="GO:0005634">
    <property type="term" value="C:nucleus"/>
    <property type="evidence" value="ECO:0000314"/>
    <property type="project" value="FlyBase"/>
</dbReference>
<dbReference type="GO" id="GO:0045296">
    <property type="term" value="F:cadherin binding"/>
    <property type="evidence" value="ECO:0007005"/>
    <property type="project" value="BHF-UCL"/>
</dbReference>
<dbReference type="GO" id="GO:0042802">
    <property type="term" value="F:identical protein binding"/>
    <property type="evidence" value="ECO:0000353"/>
    <property type="project" value="IntAct"/>
</dbReference>
<dbReference type="GO" id="GO:0050815">
    <property type="term" value="F:phosphoserine residue binding"/>
    <property type="evidence" value="ECO:0000314"/>
    <property type="project" value="UniProtKB"/>
</dbReference>
<dbReference type="GO" id="GO:0019901">
    <property type="term" value="F:protein kinase binding"/>
    <property type="evidence" value="ECO:0000318"/>
    <property type="project" value="GO_Central"/>
</dbReference>
<dbReference type="GO" id="GO:0008426">
    <property type="term" value="F:protein kinase C inhibitor activity"/>
    <property type="evidence" value="ECO:0000304"/>
    <property type="project" value="ProtInc"/>
</dbReference>
<dbReference type="GO" id="GO:0140311">
    <property type="term" value="F:protein sequestering activity"/>
    <property type="evidence" value="ECO:0000314"/>
    <property type="project" value="UniProtKB"/>
</dbReference>
<dbReference type="GO" id="GO:0141156">
    <property type="term" value="P:cAMP/PKA signal transduction"/>
    <property type="evidence" value="ECO:0007669"/>
    <property type="project" value="Ensembl"/>
</dbReference>
<dbReference type="GO" id="GO:0061436">
    <property type="term" value="P:establishment of skin barrier"/>
    <property type="evidence" value="ECO:0000250"/>
    <property type="project" value="UniProtKB"/>
</dbReference>
<dbReference type="GO" id="GO:0008630">
    <property type="term" value="P:intrinsic apoptotic signaling pathway in response to DNA damage"/>
    <property type="evidence" value="ECO:0000314"/>
    <property type="project" value="HGNC-UCL"/>
</dbReference>
<dbReference type="GO" id="GO:0031424">
    <property type="term" value="P:keratinization"/>
    <property type="evidence" value="ECO:0007669"/>
    <property type="project" value="Ensembl"/>
</dbReference>
<dbReference type="GO" id="GO:0003334">
    <property type="term" value="P:keratinocyte development"/>
    <property type="evidence" value="ECO:0007669"/>
    <property type="project" value="Ensembl"/>
</dbReference>
<dbReference type="GO" id="GO:0043616">
    <property type="term" value="P:keratinocyte proliferation"/>
    <property type="evidence" value="ECO:0007669"/>
    <property type="project" value="Ensembl"/>
</dbReference>
<dbReference type="GO" id="GO:0045824">
    <property type="term" value="P:negative regulation of innate immune response"/>
    <property type="evidence" value="ECO:0000314"/>
    <property type="project" value="UniProtKB"/>
</dbReference>
<dbReference type="GO" id="GO:0010839">
    <property type="term" value="P:negative regulation of keratinocyte proliferation"/>
    <property type="evidence" value="ECO:0007669"/>
    <property type="project" value="Ensembl"/>
</dbReference>
<dbReference type="GO" id="GO:0006469">
    <property type="term" value="P:negative regulation of protein kinase activity"/>
    <property type="evidence" value="ECO:0000304"/>
    <property type="project" value="ProtInc"/>
</dbReference>
<dbReference type="GO" id="GO:1903077">
    <property type="term" value="P:negative regulation of protein localization to plasma membrane"/>
    <property type="evidence" value="ECO:0000315"/>
    <property type="project" value="UniProtKB"/>
</dbReference>
<dbReference type="GO" id="GO:2000647">
    <property type="term" value="P:negative regulation of stem cell proliferation"/>
    <property type="evidence" value="ECO:0007669"/>
    <property type="project" value="Ensembl"/>
</dbReference>
<dbReference type="GO" id="GO:0000122">
    <property type="term" value="P:negative regulation of transcription by RNA polymerase II"/>
    <property type="evidence" value="ECO:0007669"/>
    <property type="project" value="Ensembl"/>
</dbReference>
<dbReference type="GO" id="GO:0045785">
    <property type="term" value="P:positive regulation of cell adhesion"/>
    <property type="evidence" value="ECO:0000315"/>
    <property type="project" value="UniProtKB"/>
</dbReference>
<dbReference type="GO" id="GO:0030307">
    <property type="term" value="P:positive regulation of cell growth"/>
    <property type="evidence" value="ECO:0007669"/>
    <property type="project" value="Ensembl"/>
</dbReference>
<dbReference type="GO" id="GO:0045606">
    <property type="term" value="P:positive regulation of epidermal cell differentiation"/>
    <property type="evidence" value="ECO:0000250"/>
    <property type="project" value="UniProtKB"/>
</dbReference>
<dbReference type="GO" id="GO:0046827">
    <property type="term" value="P:positive regulation of protein export from nucleus"/>
    <property type="evidence" value="ECO:0007669"/>
    <property type="project" value="Ensembl"/>
</dbReference>
<dbReference type="GO" id="GO:1903829">
    <property type="term" value="P:positive regulation of protein localization"/>
    <property type="evidence" value="ECO:0000315"/>
    <property type="project" value="UniProtKB"/>
</dbReference>
<dbReference type="GO" id="GO:0006611">
    <property type="term" value="P:protein export from nucleus"/>
    <property type="evidence" value="ECO:0007669"/>
    <property type="project" value="Ensembl"/>
</dbReference>
<dbReference type="GO" id="GO:0008104">
    <property type="term" value="P:protein localization"/>
    <property type="evidence" value="ECO:0000318"/>
    <property type="project" value="GO_Central"/>
</dbReference>
<dbReference type="GO" id="GO:0051726">
    <property type="term" value="P:regulation of cell cycle"/>
    <property type="evidence" value="ECO:0007669"/>
    <property type="project" value="Ensembl"/>
</dbReference>
<dbReference type="GO" id="GO:0022407">
    <property type="term" value="P:regulation of cell-cell adhesion"/>
    <property type="evidence" value="ECO:0000315"/>
    <property type="project" value="UniProtKB"/>
</dbReference>
<dbReference type="GO" id="GO:0010482">
    <property type="term" value="P:regulation of epidermal cell division"/>
    <property type="evidence" value="ECO:0000250"/>
    <property type="project" value="UniProtKB"/>
</dbReference>
<dbReference type="GO" id="GO:0032880">
    <property type="term" value="P:regulation of protein localization"/>
    <property type="evidence" value="ECO:0000315"/>
    <property type="project" value="UniProtKB"/>
</dbReference>
<dbReference type="GO" id="GO:0001836">
    <property type="term" value="P:release of cytochrome c from mitochondria"/>
    <property type="evidence" value="ECO:0000314"/>
    <property type="project" value="HGNC-UCL"/>
</dbReference>
<dbReference type="GO" id="GO:0007165">
    <property type="term" value="P:signal transduction"/>
    <property type="evidence" value="ECO:0000318"/>
    <property type="project" value="GO_Central"/>
</dbReference>
<dbReference type="GO" id="GO:0072089">
    <property type="term" value="P:stem cell proliferation"/>
    <property type="evidence" value="ECO:0007669"/>
    <property type="project" value="Ensembl"/>
</dbReference>
<dbReference type="CDD" id="cd10019">
    <property type="entry name" value="14-3-3_sigma"/>
    <property type="match status" value="1"/>
</dbReference>
<dbReference type="FunFam" id="1.20.190.20:FF:000001">
    <property type="entry name" value="14-3-3 gamma 1"/>
    <property type="match status" value="1"/>
</dbReference>
<dbReference type="Gene3D" id="1.20.190.20">
    <property type="entry name" value="14-3-3 domain"/>
    <property type="match status" value="1"/>
</dbReference>
<dbReference type="IDEAL" id="IID00301"/>
<dbReference type="InterPro" id="IPR000308">
    <property type="entry name" value="14-3-3"/>
</dbReference>
<dbReference type="InterPro" id="IPR023409">
    <property type="entry name" value="14-3-3_CS"/>
</dbReference>
<dbReference type="InterPro" id="IPR036815">
    <property type="entry name" value="14-3-3_dom_sf"/>
</dbReference>
<dbReference type="InterPro" id="IPR023410">
    <property type="entry name" value="14-3-3_domain"/>
</dbReference>
<dbReference type="InterPro" id="IPR037435">
    <property type="entry name" value="14-3-3_sigma"/>
</dbReference>
<dbReference type="PANTHER" id="PTHR18860">
    <property type="entry name" value="14-3-3 PROTEIN"/>
    <property type="match status" value="1"/>
</dbReference>
<dbReference type="Pfam" id="PF00244">
    <property type="entry name" value="14-3-3"/>
    <property type="match status" value="1"/>
</dbReference>
<dbReference type="PIRSF" id="PIRSF000868">
    <property type="entry name" value="14-3-3"/>
    <property type="match status" value="1"/>
</dbReference>
<dbReference type="PRINTS" id="PR00305">
    <property type="entry name" value="1433ZETA"/>
</dbReference>
<dbReference type="SMART" id="SM00101">
    <property type="entry name" value="14_3_3"/>
    <property type="match status" value="1"/>
</dbReference>
<dbReference type="SUPFAM" id="SSF48445">
    <property type="entry name" value="14-3-3 protein"/>
    <property type="match status" value="1"/>
</dbReference>
<dbReference type="PROSITE" id="PS00796">
    <property type="entry name" value="1433_1"/>
    <property type="match status" value="1"/>
</dbReference>
<dbReference type="PROSITE" id="PS00797">
    <property type="entry name" value="1433_2"/>
    <property type="match status" value="1"/>
</dbReference>
<evidence type="ECO:0000250" key="1">
    <source>
        <dbReference type="UniProtKB" id="O70456"/>
    </source>
</evidence>
<evidence type="ECO:0000269" key="2">
    <source>
    </source>
</evidence>
<evidence type="ECO:0000269" key="3">
    <source>
    </source>
</evidence>
<evidence type="ECO:0000269" key="4">
    <source>
    </source>
</evidence>
<evidence type="ECO:0000269" key="5">
    <source>
    </source>
</evidence>
<evidence type="ECO:0000269" key="6">
    <source>
    </source>
</evidence>
<evidence type="ECO:0000269" key="7">
    <source>
    </source>
</evidence>
<evidence type="ECO:0000269" key="8">
    <source>
    </source>
</evidence>
<evidence type="ECO:0000269" key="9">
    <source>
    </source>
</evidence>
<evidence type="ECO:0000269" key="10">
    <source>
    </source>
</evidence>
<evidence type="ECO:0000269" key="11">
    <source>
    </source>
</evidence>
<evidence type="ECO:0000269" key="12">
    <source>
    </source>
</evidence>
<evidence type="ECO:0000269" key="13">
    <source>
    </source>
</evidence>
<evidence type="ECO:0000269" key="14">
    <source>
    </source>
</evidence>
<evidence type="ECO:0000269" key="15">
    <source>
    </source>
</evidence>
<evidence type="ECO:0000269" key="16">
    <source>
    </source>
</evidence>
<evidence type="ECO:0000269" key="17">
    <source>
    </source>
</evidence>
<evidence type="ECO:0000269" key="18">
    <source>
    </source>
</evidence>
<evidence type="ECO:0000303" key="19">
    <source>
    </source>
</evidence>
<evidence type="ECO:0000303" key="20">
    <source>
    </source>
</evidence>
<evidence type="ECO:0000303" key="21">
    <source>
    </source>
</evidence>
<evidence type="ECO:0000303" key="22">
    <source>
    </source>
</evidence>
<evidence type="ECO:0000303" key="23">
    <source>
    </source>
</evidence>
<evidence type="ECO:0000305" key="24"/>
<evidence type="ECO:0000305" key="25">
    <source>
    </source>
</evidence>
<evidence type="ECO:0007744" key="26">
    <source>
        <dbReference type="PDB" id="5MY9"/>
    </source>
</evidence>
<evidence type="ECO:0007744" key="27">
    <source>
        <dbReference type="PDB" id="5MYC"/>
    </source>
</evidence>
<evidence type="ECO:0007744" key="28">
    <source>
        <dbReference type="PDB" id="6ZCJ"/>
    </source>
</evidence>
<evidence type="ECO:0007744" key="29">
    <source>
        <dbReference type="PDB" id="8Q4L"/>
    </source>
</evidence>
<evidence type="ECO:0007744" key="30">
    <source>
    </source>
</evidence>
<evidence type="ECO:0007744" key="31">
    <source>
    </source>
</evidence>
<evidence type="ECO:0007744" key="32">
    <source>
    </source>
</evidence>
<evidence type="ECO:0007744" key="33">
    <source>
    </source>
</evidence>
<evidence type="ECO:0007744" key="34">
    <source>
    </source>
</evidence>
<evidence type="ECO:0007829" key="35">
    <source>
        <dbReference type="PDB" id="3IQU"/>
    </source>
</evidence>
<evidence type="ECO:0007829" key="36">
    <source>
        <dbReference type="PDB" id="6RJL"/>
    </source>
</evidence>
<evidence type="ECO:0007829" key="37">
    <source>
        <dbReference type="PDB" id="8BX3"/>
    </source>
</evidence>